<protein>
    <recommendedName>
        <fullName>CREB-binding protein</fullName>
    </recommendedName>
    <alternativeName>
        <fullName>Histone lysine acetyltransferase CREBBP</fullName>
        <ecNumber evidence="44 48">2.3.1.48</ecNumber>
    </alternativeName>
    <alternativeName>
        <fullName>Protein lactyltransferas CREBBP</fullName>
        <ecNumber evidence="62">2.3.1.-</ecNumber>
    </alternativeName>
    <alternativeName>
        <fullName>Protein-lysine acetyltransferase CREBBP</fullName>
        <ecNumber evidence="14 30 46 49 57 59">2.3.1.-</ecNumber>
    </alternativeName>
</protein>
<gene>
    <name evidence="70" type="primary">CREBBP</name>
    <name type="synonym">CBP</name>
</gene>
<feature type="initiator methionine" description="Removed" evidence="76 80">
    <location>
        <position position="1"/>
    </location>
</feature>
<feature type="chain" id="PRO_0000211190" description="CREB-binding protein">
    <location>
        <begin position="2"/>
        <end position="2442"/>
    </location>
</feature>
<feature type="domain" description="KIX" evidence="6">
    <location>
        <begin position="587"/>
        <end position="666"/>
    </location>
</feature>
<feature type="domain" description="Bromo" evidence="3">
    <location>
        <begin position="1085"/>
        <end position="1192"/>
    </location>
</feature>
<feature type="domain" description="CBP/p300-type HAT" evidence="7">
    <location>
        <begin position="1323"/>
        <end position="1700"/>
    </location>
</feature>
<feature type="zinc finger region" description="TAZ-type 1" evidence="4">
    <location>
        <begin position="347"/>
        <end position="433"/>
    </location>
</feature>
<feature type="zinc finger region" description="ZZ-type" evidence="5">
    <location>
        <begin position="1702"/>
        <end position="1750"/>
    </location>
</feature>
<feature type="zinc finger region" description="TAZ-type 2" evidence="4">
    <location>
        <begin position="1765"/>
        <end position="1846"/>
    </location>
</feature>
<feature type="region of interest" description="Disordered" evidence="8">
    <location>
        <begin position="1"/>
        <end position="41"/>
    </location>
</feature>
<feature type="region of interest" description="Disordered" evidence="8">
    <location>
        <begin position="74"/>
        <end position="179"/>
    </location>
</feature>
<feature type="region of interest" description="Interaction with SRCAP" evidence="10">
    <location>
        <begin position="227"/>
        <end position="410"/>
    </location>
</feature>
<feature type="region of interest" description="Disordered" evidence="8">
    <location>
        <begin position="266"/>
        <end position="290"/>
    </location>
</feature>
<feature type="region of interest" description="Disordered" evidence="8">
    <location>
        <begin position="794"/>
        <end position="1083"/>
    </location>
</feature>
<feature type="region of interest" description="Interaction with histone" evidence="47">
    <location>
        <begin position="1124"/>
        <end position="1170"/>
    </location>
</feature>
<feature type="region of interest" description="Interaction with ASF1A" evidence="48">
    <location>
        <begin position="1162"/>
        <end position="1180"/>
    </location>
</feature>
<feature type="region of interest" description="Interaction with histone" evidence="2">
    <location>
        <begin position="1433"/>
        <end position="1435"/>
    </location>
</feature>
<feature type="region of interest" description="Interaction with TRERF1" evidence="17">
    <location>
        <begin position="1460"/>
        <end position="1891"/>
    </location>
</feature>
<feature type="region of interest" description="Disordered" evidence="8">
    <location>
        <begin position="1556"/>
        <end position="1615"/>
    </location>
</feature>
<feature type="region of interest" description="Disordered" evidence="8">
    <location>
        <begin position="1874"/>
        <end position="1959"/>
    </location>
</feature>
<feature type="region of interest" description="Disordered" evidence="8">
    <location>
        <begin position="1977"/>
        <end position="2028"/>
    </location>
</feature>
<feature type="region of interest" description="Disordered" evidence="8">
    <location>
        <begin position="2112"/>
        <end position="2263"/>
    </location>
</feature>
<feature type="region of interest" description="Disordered" evidence="8">
    <location>
        <begin position="2294"/>
        <end position="2433"/>
    </location>
</feature>
<feature type="compositionally biased region" description="Polar residues" evidence="8">
    <location>
        <begin position="20"/>
        <end position="30"/>
    </location>
</feature>
<feature type="compositionally biased region" description="Low complexity" evidence="8">
    <location>
        <begin position="80"/>
        <end position="90"/>
    </location>
</feature>
<feature type="compositionally biased region" description="Polar residues" evidence="8">
    <location>
        <begin position="122"/>
        <end position="131"/>
    </location>
</feature>
<feature type="compositionally biased region" description="Low complexity" evidence="8">
    <location>
        <begin position="136"/>
        <end position="150"/>
    </location>
</feature>
<feature type="compositionally biased region" description="Polar residues" evidence="8">
    <location>
        <begin position="151"/>
        <end position="172"/>
    </location>
</feature>
<feature type="compositionally biased region" description="Polar residues" evidence="8">
    <location>
        <begin position="270"/>
        <end position="284"/>
    </location>
</feature>
<feature type="compositionally biased region" description="Polar residues" evidence="8">
    <location>
        <begin position="794"/>
        <end position="805"/>
    </location>
</feature>
<feature type="compositionally biased region" description="Polar residues" evidence="8">
    <location>
        <begin position="814"/>
        <end position="823"/>
    </location>
</feature>
<feature type="compositionally biased region" description="Pro residues" evidence="8">
    <location>
        <begin position="844"/>
        <end position="860"/>
    </location>
</feature>
<feature type="compositionally biased region" description="Pro residues" evidence="8">
    <location>
        <begin position="876"/>
        <end position="885"/>
    </location>
</feature>
<feature type="compositionally biased region" description="Low complexity" evidence="8">
    <location>
        <begin position="886"/>
        <end position="929"/>
    </location>
</feature>
<feature type="compositionally biased region" description="Low complexity" evidence="8">
    <location>
        <begin position="937"/>
        <end position="952"/>
    </location>
</feature>
<feature type="compositionally biased region" description="Polar residues" evidence="8">
    <location>
        <begin position="973"/>
        <end position="988"/>
    </location>
</feature>
<feature type="compositionally biased region" description="Basic and acidic residues" evidence="8">
    <location>
        <begin position="1011"/>
        <end position="1021"/>
    </location>
</feature>
<feature type="compositionally biased region" description="Basic and acidic residues" evidence="8">
    <location>
        <begin position="1032"/>
        <end position="1059"/>
    </location>
</feature>
<feature type="compositionally biased region" description="Low complexity" evidence="8">
    <location>
        <begin position="1066"/>
        <end position="1078"/>
    </location>
</feature>
<feature type="compositionally biased region" description="Basic and acidic residues" evidence="8">
    <location>
        <begin position="1556"/>
        <end position="1568"/>
    </location>
</feature>
<feature type="compositionally biased region" description="Basic residues" evidence="8">
    <location>
        <begin position="1585"/>
        <end position="1595"/>
    </location>
</feature>
<feature type="compositionally biased region" description="Pro residues" evidence="8">
    <location>
        <begin position="1900"/>
        <end position="1912"/>
    </location>
</feature>
<feature type="compositionally biased region" description="Polar residues" evidence="8">
    <location>
        <begin position="1925"/>
        <end position="1940"/>
    </location>
</feature>
<feature type="compositionally biased region" description="Pro residues" evidence="8">
    <location>
        <begin position="1943"/>
        <end position="1954"/>
    </location>
</feature>
<feature type="compositionally biased region" description="Low complexity" evidence="8">
    <location>
        <begin position="2018"/>
        <end position="2027"/>
    </location>
</feature>
<feature type="compositionally biased region" description="Low complexity" evidence="8">
    <location>
        <begin position="2112"/>
        <end position="2137"/>
    </location>
</feature>
<feature type="compositionally biased region" description="Low complexity" evidence="8">
    <location>
        <begin position="2146"/>
        <end position="2160"/>
    </location>
</feature>
<feature type="compositionally biased region" description="Low complexity" evidence="8">
    <location>
        <begin position="2196"/>
        <end position="2219"/>
    </location>
</feature>
<feature type="compositionally biased region" description="Low complexity" evidence="8">
    <location>
        <begin position="2228"/>
        <end position="2263"/>
    </location>
</feature>
<feature type="compositionally biased region" description="Low complexity" evidence="8">
    <location>
        <begin position="2294"/>
        <end position="2305"/>
    </location>
</feature>
<feature type="compositionally biased region" description="Polar residues" evidence="8">
    <location>
        <begin position="2315"/>
        <end position="2327"/>
    </location>
</feature>
<feature type="compositionally biased region" description="Polar residues" evidence="8">
    <location>
        <begin position="2334"/>
        <end position="2343"/>
    </location>
</feature>
<feature type="compositionally biased region" description="Pro residues" evidence="8">
    <location>
        <begin position="2349"/>
        <end position="2372"/>
    </location>
</feature>
<feature type="compositionally biased region" description="Polar residues" evidence="8">
    <location>
        <begin position="2411"/>
        <end position="2424"/>
    </location>
</feature>
<feature type="binding site" evidence="1">
    <location>
        <position position="363"/>
    </location>
    <ligand>
        <name>Zn(2+)</name>
        <dbReference type="ChEBI" id="CHEBI:29105"/>
        <label>1</label>
    </ligand>
</feature>
<feature type="binding site" evidence="1">
    <location>
        <position position="367"/>
    </location>
    <ligand>
        <name>Zn(2+)</name>
        <dbReference type="ChEBI" id="CHEBI:29105"/>
        <label>1</label>
    </ligand>
</feature>
<feature type="binding site" evidence="1">
    <location>
        <position position="380"/>
    </location>
    <ligand>
        <name>Zn(2+)</name>
        <dbReference type="ChEBI" id="CHEBI:29105"/>
        <label>1</label>
    </ligand>
</feature>
<feature type="binding site" evidence="1">
    <location>
        <position position="385"/>
    </location>
    <ligand>
        <name>Zn(2+)</name>
        <dbReference type="ChEBI" id="CHEBI:29105"/>
        <label>1</label>
    </ligand>
</feature>
<feature type="binding site" evidence="1">
    <location>
        <position position="394"/>
    </location>
    <ligand>
        <name>Zn(2+)</name>
        <dbReference type="ChEBI" id="CHEBI:29105"/>
        <label>2</label>
    </ligand>
</feature>
<feature type="binding site" evidence="1">
    <location>
        <position position="398"/>
    </location>
    <ligand>
        <name>Zn(2+)</name>
        <dbReference type="ChEBI" id="CHEBI:29105"/>
        <label>2</label>
    </ligand>
</feature>
<feature type="binding site" evidence="1">
    <location>
        <position position="404"/>
    </location>
    <ligand>
        <name>Zn(2+)</name>
        <dbReference type="ChEBI" id="CHEBI:29105"/>
        <label>2</label>
    </ligand>
</feature>
<feature type="binding site" evidence="1">
    <location>
        <position position="409"/>
    </location>
    <ligand>
        <name>Zn(2+)</name>
        <dbReference type="ChEBI" id="CHEBI:29105"/>
        <label>2</label>
    </ligand>
</feature>
<feature type="binding site" evidence="1">
    <location>
        <position position="418"/>
    </location>
    <ligand>
        <name>Zn(2+)</name>
        <dbReference type="ChEBI" id="CHEBI:29105"/>
        <label>3</label>
    </ligand>
</feature>
<feature type="binding site" evidence="1">
    <location>
        <position position="422"/>
    </location>
    <ligand>
        <name>Zn(2+)</name>
        <dbReference type="ChEBI" id="CHEBI:29105"/>
        <label>3</label>
    </ligand>
</feature>
<feature type="binding site" evidence="1">
    <location>
        <position position="427"/>
    </location>
    <ligand>
        <name>Zn(2+)</name>
        <dbReference type="ChEBI" id="CHEBI:29105"/>
        <label>3</label>
    </ligand>
</feature>
<feature type="binding site" evidence="1">
    <location>
        <position position="430"/>
    </location>
    <ligand>
        <name>Zn(2+)</name>
        <dbReference type="ChEBI" id="CHEBI:29105"/>
        <label>3</label>
    </ligand>
</feature>
<feature type="binding site" evidence="2">
    <location>
        <begin position="1434"/>
        <end position="1436"/>
    </location>
    <ligand>
        <name>acetyl-CoA</name>
        <dbReference type="ChEBI" id="CHEBI:57288"/>
    </ligand>
</feature>
<feature type="binding site" evidence="2">
    <location>
        <begin position="1446"/>
        <end position="1447"/>
    </location>
    <ligand>
        <name>acetyl-CoA</name>
        <dbReference type="ChEBI" id="CHEBI:57288"/>
    </ligand>
</feature>
<feature type="binding site" evidence="2">
    <location>
        <position position="1493"/>
    </location>
    <ligand>
        <name>acetyl-CoA</name>
        <dbReference type="ChEBI" id="CHEBI:57288"/>
    </ligand>
</feature>
<feature type="binding site" evidence="2">
    <location>
        <position position="1498"/>
    </location>
    <ligand>
        <name>acetyl-CoA</name>
        <dbReference type="ChEBI" id="CHEBI:57288"/>
    </ligand>
</feature>
<feature type="binding site" evidence="2">
    <location>
        <position position="1502"/>
    </location>
    <ligand>
        <name>acetyl-CoA</name>
        <dbReference type="ChEBI" id="CHEBI:57288"/>
    </ligand>
</feature>
<feature type="binding site" evidence="5">
    <location>
        <position position="1707"/>
    </location>
    <ligand>
        <name>Zn(2+)</name>
        <dbReference type="ChEBI" id="CHEBI:29105"/>
        <label>4</label>
    </ligand>
</feature>
<feature type="binding site" evidence="5">
    <location>
        <position position="1710"/>
    </location>
    <ligand>
        <name>Zn(2+)</name>
        <dbReference type="ChEBI" id="CHEBI:29105"/>
        <label>4</label>
    </ligand>
</feature>
<feature type="binding site" evidence="5">
    <location>
        <position position="1720"/>
    </location>
    <ligand>
        <name>Zn(2+)</name>
        <dbReference type="ChEBI" id="CHEBI:29105"/>
        <label>5</label>
    </ligand>
</feature>
<feature type="binding site" evidence="5">
    <location>
        <position position="1723"/>
    </location>
    <ligand>
        <name>Zn(2+)</name>
        <dbReference type="ChEBI" id="CHEBI:29105"/>
        <label>5</label>
    </ligand>
</feature>
<feature type="binding site" evidence="5">
    <location>
        <position position="1729"/>
    </location>
    <ligand>
        <name>Zn(2+)</name>
        <dbReference type="ChEBI" id="CHEBI:29105"/>
        <label>4</label>
    </ligand>
</feature>
<feature type="binding site" evidence="5">
    <location>
        <position position="1732"/>
    </location>
    <ligand>
        <name>Zn(2+)</name>
        <dbReference type="ChEBI" id="CHEBI:29105"/>
        <label>4</label>
    </ligand>
</feature>
<feature type="binding site" evidence="5">
    <location>
        <position position="1738"/>
    </location>
    <ligand>
        <name>Zn(2+)</name>
        <dbReference type="ChEBI" id="CHEBI:29105"/>
        <label>5</label>
    </ligand>
</feature>
<feature type="binding site" evidence="5">
    <location>
        <position position="1740"/>
    </location>
    <ligand>
        <name>Zn(2+)</name>
        <dbReference type="ChEBI" id="CHEBI:29105"/>
        <label>5</label>
    </ligand>
</feature>
<feature type="site" description="Breakpoint for translocation to form KAT6B-CREBBP">
    <location>
        <begin position="29"/>
        <end position="30"/>
    </location>
</feature>
<feature type="site" description="Breakpoint for translocation to form KAT6A-CREBBP">
    <location>
        <begin position="266"/>
        <end position="267"/>
    </location>
</feature>
<feature type="modified residue" description="N-acetylalanine" evidence="76 80">
    <location>
        <position position="2"/>
    </location>
</feature>
<feature type="modified residue" description="Phosphoserine" evidence="75 79">
    <location>
        <position position="121"/>
    </location>
</feature>
<feature type="modified residue" description="Phosphoserine; by ATM" evidence="62">
    <location>
        <position position="124"/>
    </location>
</feature>
<feature type="modified residue" description="Omega-N-methylarginine" evidence="82">
    <location>
        <position position="220"/>
    </location>
</feature>
<feature type="modified residue" description="Asymmetric dimethylarginine" evidence="1">
    <location>
        <position position="601"/>
    </location>
</feature>
<feature type="modified residue" description="Asymmetric dimethylarginine" evidence="1">
    <location>
        <position position="625"/>
    </location>
</feature>
<feature type="modified residue" description="N6-acetyllysine" evidence="1">
    <location>
        <position position="657"/>
    </location>
</feature>
<feature type="modified residue" description="N6-acetyllysine" evidence="77">
    <location>
        <position position="1014"/>
    </location>
</feature>
<feature type="modified residue" description="Phosphoserine" evidence="74">
    <location>
        <position position="1030"/>
    </location>
</feature>
<feature type="modified residue" description="Phosphoserine" evidence="81">
    <location>
        <position position="1076"/>
    </location>
</feature>
<feature type="modified residue" description="N6-acetyllysine" evidence="77">
    <location>
        <position position="1216"/>
    </location>
</feature>
<feature type="modified residue" description="Phosphoserine; by IKKA" evidence="41">
    <location>
        <position position="1382"/>
    </location>
</feature>
<feature type="modified residue" description="Phosphoserine; by IKKA" evidence="41">
    <location>
        <position position="1386"/>
    </location>
</feature>
<feature type="modified residue" description="N6-acetyllysine" evidence="77">
    <location>
        <position position="1583"/>
    </location>
</feature>
<feature type="modified residue" description="N6-acetyllysine" evidence="77">
    <location>
        <position position="1591"/>
    </location>
</feature>
<feature type="modified residue" description="N6-acetyllysine" evidence="77">
    <location>
        <position position="1592"/>
    </location>
</feature>
<feature type="modified residue" description="N6-acetyllysine" evidence="77">
    <location>
        <position position="1595"/>
    </location>
</feature>
<feature type="modified residue" description="N6-acetyllysine" evidence="77">
    <location>
        <position position="1597"/>
    </location>
</feature>
<feature type="modified residue" description="N6-acetyllysine" evidence="77">
    <location>
        <position position="1741"/>
    </location>
</feature>
<feature type="modified residue" description="N6-acetyllysine" evidence="77">
    <location>
        <position position="1744"/>
    </location>
</feature>
<feature type="modified residue" description="Phosphoserine" evidence="81">
    <location>
        <position position="1763"/>
    </location>
</feature>
<feature type="modified residue" description="Phosphoserine" evidence="75 78 81">
    <location>
        <position position="2063"/>
    </location>
</feature>
<feature type="modified residue" description="Phosphoserine" evidence="75">
    <location>
        <position position="2076"/>
    </location>
</feature>
<feature type="modified residue" description="Phosphoserine" evidence="75">
    <location>
        <position position="2079"/>
    </location>
</feature>
<feature type="modified residue" description="Phosphoserine" evidence="1">
    <location>
        <position position="2351"/>
    </location>
</feature>
<feature type="cross-link" description="Glycyl lysine isopeptide (Lys-Gly) (interchain with G-Cter in SUMO1)" evidence="1">
    <location>
        <position position="998"/>
    </location>
</feature>
<feature type="cross-link" description="Glycyl lysine isopeptide (Lys-Gly) (interchain with G-Cter in SUMO1)" evidence="1">
    <location>
        <position position="1033"/>
    </location>
</feature>
<feature type="cross-link" description="Glycyl lysine isopeptide (Lys-Gly) (interchain with G-Cter in SUMO1)" evidence="1">
    <location>
        <position position="1056"/>
    </location>
</feature>
<feature type="splice variant" id="VSP_045700" description="In isoform 2." evidence="68">
    <original>VAHCASSRQIISHWKNCTRHDCPVCLPLKNASDKRNQQT</original>
    <variation>A</variation>
    <location>
        <begin position="406"/>
        <end position="444"/>
    </location>
</feature>
<feature type="sequence variant" id="VAR_072912" description="In dbSNP:rs748447855." evidence="50">
    <original>Q</original>
    <variation>H</variation>
    <location>
        <position position="503"/>
    </location>
</feature>
<feature type="sequence variant" id="VAR_072913" description="In dbSNP:rs902901184." evidence="50">
    <original>P</original>
    <variation>T</variation>
    <location>
        <position position="532"/>
    </location>
</feature>
<feature type="sequence variant" id="VAR_072914" description="In dbSNP:rs2141247569." evidence="50">
    <original>I</original>
    <variation>N</variation>
    <location>
        <position position="546"/>
    </location>
</feature>
<feature type="sequence variant" id="VAR_072915" description="In RSTS1." evidence="50">
    <original>Y</original>
    <variation>F</variation>
    <location>
        <position position="650"/>
    </location>
</feature>
<feature type="sequence variant" id="VAR_072916" description="In RSTS1; dbSNP:rs746728741." evidence="50">
    <original>A</original>
    <variation>T</variation>
    <location>
        <position position="789"/>
    </location>
</feature>
<feature type="sequence variant" id="VAR_072917" description="In RSTS1; incomplete; dbSNP:rs143247685." evidence="43">
    <original>T</original>
    <variation>A</variation>
    <location>
        <position position="910"/>
    </location>
</feature>
<feature type="sequence variant" id="VAR_037305" description="In RSTS1; mild form; impairs binding to ASF1A and acetylated histone H3; dbSNP:rs28937315." evidence="27 48 50">
    <original>Y</original>
    <variation>C</variation>
    <location>
        <position position="1175"/>
    </location>
</feature>
<feature type="sequence variant" id="VAR_072918" description="In RSTS1; dbSNP:rs2151368021." evidence="50">
    <original>E</original>
    <variation>A</variation>
    <location>
        <position position="1278"/>
    </location>
</feature>
<feature type="sequence variant" id="VAR_035080" description="In RSTS1; abolishes acetyltransferase activity; dbSNP:rs267606752." evidence="28 40">
    <original>E</original>
    <variation>K</variation>
    <location>
        <position position="1278"/>
    </location>
</feature>
<feature type="sequence variant" id="VAR_015578" description="In RSTS1; abolishes acetyltransferase activity and the ability of transactivate CREB; dbSNP:rs121434626." evidence="16 50">
    <original>R</original>
    <variation>P</variation>
    <location>
        <position position="1378"/>
    </location>
</feature>
<feature type="sequence variant" id="VAR_072919" description="In RSTS1; dbSNP:rs2052153254." evidence="50">
    <original>D</original>
    <variation>Y</variation>
    <location>
        <position position="1406"/>
    </location>
</feature>
<feature type="sequence variant" id="VAR_027953" description="In dbSNP:rs130015.">
    <original>V</original>
    <variation>I</variation>
    <location>
        <position position="1414"/>
    </location>
</feature>
<feature type="sequence variant" id="VAR_072920" description="In RSTS1." evidence="50">
    <original>Q</original>
    <variation>P</variation>
    <location>
        <position position="1415"/>
    </location>
</feature>
<feature type="sequence variant" id="VAR_035081" description="In RSTS1; dbSNP:rs2151334254." evidence="40">
    <original>T</original>
    <variation>I</variation>
    <location>
        <position position="1447"/>
    </location>
</feature>
<feature type="sequence variant" id="VAR_035082" description="In RSTS1; dbSNP:rs1555473499." evidence="40">
    <original>Y</original>
    <variation>H</variation>
    <location>
        <position position="1450"/>
    </location>
</feature>
<feature type="sequence variant" id="VAR_035083" description="In RSTS1; dbSNP:rs797044860." evidence="40">
    <original>H</original>
    <variation>R</variation>
    <location>
        <position position="1470"/>
    </location>
</feature>
<feature type="sequence variant" id="VAR_072921" description="In RSTS1." evidence="50">
    <original>P</original>
    <variation>T</variation>
    <location>
        <position position="1475"/>
    </location>
</feature>
<feature type="sequence variant" id="VAR_072922" description="In RSTS1; dbSNP:rs587783497." evidence="50">
    <original>Y</original>
    <variation>F</variation>
    <location>
        <position position="1503"/>
    </location>
</feature>
<feature type="sequence variant" id="VAR_072923" description="In RSTS1; dbSNP:rs1057520191." evidence="50">
    <original>L</original>
    <variation>P</variation>
    <location>
        <position position="1507"/>
    </location>
</feature>
<feature type="sequence variant" id="VAR_072924" description="In RSTS1." evidence="50">
    <original>D</original>
    <variation>N</variation>
    <location>
        <position position="1543"/>
    </location>
</feature>
<feature type="sequence variant" id="VAR_035084" description="In RSTS1; abolishes acetyltransferase activity; dbSNP:rs1596791996." evidence="28 40">
    <original>R</original>
    <variation>H</variation>
    <location>
        <position position="1664"/>
    </location>
</feature>
<feature type="sequence variant" id="VAR_078557" description="In MKHK1; dbSNP:rs1567265203." evidence="55">
    <original>C</original>
    <variation>R</variation>
    <location>
        <position position="1710"/>
    </location>
</feature>
<feature type="sequence variant" id="VAR_081979" description="In MKHK1." evidence="58">
    <original>H</original>
    <variation>D</variation>
    <location>
        <position position="1719"/>
    </location>
</feature>
<feature type="sequence variant" id="VAR_081980" description="In MKHK1; dbSNP:rs1567265131." evidence="60">
    <original>E</original>
    <variation>K</variation>
    <location>
        <position position="1724"/>
    </location>
</feature>
<feature type="sequence variant" id="VAR_078558" description="In MKHK1; dbSNP:rs2151312325." evidence="55">
    <original>L</original>
    <variation>R</variation>
    <location>
        <position position="1747"/>
    </location>
</feature>
<feature type="sequence variant" id="VAR_081981" description="In MKHK1; dbSNP:rs2051858361." evidence="58">
    <original>A</original>
    <variation>V</variation>
    <location>
        <position position="1782"/>
    </location>
</feature>
<feature type="sequence variant" id="VAR_078559" description="In MKHK1; dbSNP:rs988251457." evidence="55">
    <original>R</original>
    <variation>P</variation>
    <location>
        <position position="1786"/>
    </location>
</feature>
<feature type="sequence variant" id="VAR_078560" description="In MKHK1." evidence="55">
    <original>C</original>
    <variation>F</variation>
    <location>
        <position position="1819"/>
    </location>
</feature>
<feature type="sequence variant" id="VAR_078561" description="In MKHK1; dbSNP:rs2151310481." evidence="55">
    <original>C</original>
    <variation>W</variation>
    <location>
        <position position="1826"/>
    </location>
</feature>
<feature type="sequence variant" id="VAR_081982" description="In MKHK1." evidence="58">
    <original>H</original>
    <variation>D</variation>
    <location>
        <position position="1829"/>
    </location>
</feature>
<feature type="sequence variant" id="VAR_078562" description="In MKHK1; dbSNP:rs1596787407." evidence="55">
    <original>C</original>
    <variation>Y</variation>
    <location>
        <position position="1838"/>
    </location>
</feature>
<feature type="sequence variant" id="VAR_081983" description="In MKHK1." evidence="58">
    <original>MR</original>
    <variation>I</variation>
    <location>
        <begin position="1865"/>
        <end position="1866"/>
    </location>
</feature>
<feature type="sequence variant" id="VAR_078563" description="In MKHK1; dbSNP:rs1131691326." evidence="55 58">
    <original>R</original>
    <variation>Q</variation>
    <location>
        <position position="1867"/>
    </location>
</feature>
<feature type="sequence variant" id="VAR_078564" description="In MKHK1; dbSNP:rs398124148." evidence="55">
    <original>R</original>
    <variation>W</variation>
    <location>
        <position position="1867"/>
    </location>
</feature>
<feature type="sequence variant" id="VAR_081984" description="In MKHK1; dbSNP:rs1567263168." evidence="58">
    <original>R</original>
    <variation>Q</variation>
    <location>
        <position position="1868"/>
    </location>
</feature>
<feature type="sequence variant" id="VAR_078565" description="In MKHK1; dbSNP:rs886039491." evidence="55 58">
    <original>R</original>
    <variation>W</variation>
    <location>
        <position position="1868"/>
    </location>
</feature>
<feature type="sequence variant" id="VAR_081985" description="In MKHK1." evidence="58">
    <original>A</original>
    <variation>P</variation>
    <location>
        <position position="1870"/>
    </location>
</feature>
<feature type="sequence variant" id="VAR_078566" description="In MKHK1; dbSNP:rs797045037." evidence="55 58">
    <original>M</original>
    <variation>V</variation>
    <location>
        <position position="1872"/>
    </location>
</feature>
<feature type="mutagenesis site" description="Decreased phosphorylation and lactylation of MRE11." evidence="62">
    <original>S</original>
    <variation>A</variation>
    <location>
        <position position="124"/>
    </location>
</feature>
<feature type="mutagenesis site" description="Impairs binding to acetylated histones." evidence="48">
    <original>D</original>
    <variation>R</variation>
    <location>
        <position position="1116"/>
    </location>
</feature>
<feature type="mutagenesis site" description="Impairs binding to acetylated histones." evidence="48">
    <original>F</original>
    <variation>A</variation>
    <location>
        <position position="1126"/>
    </location>
</feature>
<feature type="mutagenesis site" description="Abolishes interaction with ASF1A." evidence="48">
    <original>N</original>
    <variation>E</variation>
    <variation>R</variation>
    <location>
        <position position="1162"/>
    </location>
</feature>
<feature type="mutagenesis site" description="Abolishes interaction with ASF1A." evidence="48">
    <original>W</original>
    <variation>A</variation>
    <location>
        <position position="1165"/>
    </location>
</feature>
<feature type="mutagenesis site" description="Impairs binding to acetylated histones." evidence="48">
    <original>K</original>
    <variation>E</variation>
    <location>
        <position position="1170"/>
    </location>
</feature>
<feature type="mutagenesis site" description="Impairs interaction with ASF1A." evidence="48">
    <original>S</original>
    <variation>I</variation>
    <location>
        <position position="1179"/>
    </location>
</feature>
<feature type="mutagenesis site" description="Abolishes interaction with ASF1A." evidence="48">
    <original>K</original>
    <variation>E</variation>
    <location>
        <position position="1180"/>
    </location>
</feature>
<feature type="mutagenesis site" description="Abolishes interaction with ASF1A." evidence="48">
    <original>E</original>
    <variation>R</variation>
    <location>
        <position position="1183"/>
    </location>
</feature>
<feature type="sequence conflict" description="In Ref. 2; AAC51340." evidence="69" ref="2">
    <original>FAE</original>
    <variation>NSG</variation>
    <location>
        <begin position="1511"/>
        <end position="1513"/>
    </location>
</feature>
<feature type="sequence conflict" description="In Ref. 2; AAC51340." evidence="69" ref="2">
    <original>ED</original>
    <variation>VV</variation>
    <location>
        <begin position="1724"/>
        <end position="1725"/>
    </location>
</feature>
<feature type="sequence conflict" description="In Ref. 1; AAC51770." evidence="69" ref="1">
    <original>L</original>
    <variation>V</variation>
    <location>
        <position position="1770"/>
    </location>
</feature>
<feature type="sequence conflict" description="In Ref. 2; AAC51340." evidence="69" ref="2">
    <original>N</original>
    <variation>F</variation>
    <location>
        <position position="1789"/>
    </location>
</feature>
<feature type="sequence conflict" description="In Ref. 2; AAC51340." evidence="69" ref="2">
    <original>T</original>
    <variation>P</variation>
    <location>
        <position position="1812"/>
    </location>
</feature>
<feature type="helix" evidence="97">
    <location>
        <begin position="63"/>
        <end position="66"/>
    </location>
</feature>
<feature type="helix" evidence="85">
    <location>
        <begin position="69"/>
        <end position="73"/>
    </location>
</feature>
<feature type="helix" evidence="84">
    <location>
        <begin position="377"/>
        <end position="379"/>
    </location>
</feature>
<feature type="turn" evidence="84">
    <location>
        <begin position="383"/>
        <end position="388"/>
    </location>
</feature>
<feature type="helix" evidence="84">
    <location>
        <begin position="391"/>
        <end position="395"/>
    </location>
</feature>
<feature type="helix" evidence="92">
    <location>
        <begin position="592"/>
        <end position="595"/>
    </location>
</feature>
<feature type="helix" evidence="92">
    <location>
        <begin position="598"/>
        <end position="612"/>
    </location>
</feature>
<feature type="helix" evidence="92">
    <location>
        <begin position="618"/>
        <end position="622"/>
    </location>
</feature>
<feature type="helix" evidence="92">
    <location>
        <begin position="624"/>
        <end position="641"/>
    </location>
</feature>
<feature type="helix" evidence="92">
    <location>
        <begin position="647"/>
        <end position="670"/>
    </location>
</feature>
<feature type="helix" evidence="90">
    <location>
        <begin position="1087"/>
        <end position="1102"/>
    </location>
</feature>
<feature type="turn" evidence="90">
    <location>
        <begin position="1105"/>
        <end position="1108"/>
    </location>
</feature>
<feature type="helix" evidence="90">
    <location>
        <begin position="1109"/>
        <end position="1111"/>
    </location>
</feature>
<feature type="helix" evidence="90">
    <location>
        <begin position="1117"/>
        <end position="1120"/>
    </location>
</feature>
<feature type="helix" evidence="90">
    <location>
        <begin position="1125"/>
        <end position="1128"/>
    </location>
</feature>
<feature type="helix" evidence="90">
    <location>
        <begin position="1135"/>
        <end position="1143"/>
    </location>
</feature>
<feature type="strand" evidence="88">
    <location>
        <begin position="1146"/>
        <end position="1149"/>
    </location>
</feature>
<feature type="helix" evidence="90">
    <location>
        <begin position="1150"/>
        <end position="1167"/>
    </location>
</feature>
<feature type="turn" evidence="83">
    <location>
        <begin position="1169"/>
        <end position="1171"/>
    </location>
</feature>
<feature type="helix" evidence="90">
    <location>
        <begin position="1173"/>
        <end position="1195"/>
    </location>
</feature>
<feature type="strand" evidence="91">
    <location>
        <begin position="1214"/>
        <end position="1218"/>
    </location>
</feature>
<feature type="strand" evidence="91">
    <location>
        <begin position="1226"/>
        <end position="1230"/>
    </location>
</feature>
<feature type="turn" evidence="91">
    <location>
        <begin position="1231"/>
        <end position="1233"/>
    </location>
</feature>
<feature type="strand" evidence="91">
    <location>
        <begin position="1234"/>
        <end position="1237"/>
    </location>
</feature>
<feature type="turn" evidence="91">
    <location>
        <begin position="1238"/>
        <end position="1240"/>
    </location>
</feature>
<feature type="strand" evidence="91">
    <location>
        <begin position="1266"/>
        <end position="1272"/>
    </location>
</feature>
<feature type="strand" evidence="91">
    <location>
        <begin position="1280"/>
        <end position="1282"/>
    </location>
</feature>
<feature type="turn" evidence="91">
    <location>
        <begin position="1284"/>
        <end position="1286"/>
    </location>
</feature>
<feature type="strand" evidence="91">
    <location>
        <begin position="1289"/>
        <end position="1291"/>
    </location>
</feature>
<feature type="helix" evidence="91">
    <location>
        <begin position="1292"/>
        <end position="1295"/>
    </location>
</feature>
<feature type="turn" evidence="91">
    <location>
        <begin position="1309"/>
        <end position="1311"/>
    </location>
</feature>
<feature type="turn" evidence="89">
    <location>
        <begin position="1708"/>
        <end position="1710"/>
    </location>
</feature>
<feature type="strand" evidence="89">
    <location>
        <begin position="1718"/>
        <end position="1721"/>
    </location>
</feature>
<feature type="strand" evidence="89">
    <location>
        <begin position="1725"/>
        <end position="1728"/>
    </location>
</feature>
<feature type="helix" evidence="89">
    <location>
        <begin position="1730"/>
        <end position="1736"/>
    </location>
</feature>
<feature type="strand" evidence="89">
    <location>
        <begin position="1742"/>
        <end position="1744"/>
    </location>
</feature>
<feature type="helix" evidence="87">
    <location>
        <begin position="1765"/>
        <end position="1784"/>
    </location>
</feature>
<feature type="helix" evidence="87">
    <location>
        <begin position="1793"/>
        <end position="1805"/>
    </location>
</feature>
<feature type="turn" evidence="87">
    <location>
        <begin position="1811"/>
        <end position="1815"/>
    </location>
</feature>
<feature type="helix" evidence="87">
    <location>
        <begin position="1817"/>
        <end position="1832"/>
    </location>
</feature>
<feature type="helix" evidence="87">
    <location>
        <begin position="1841"/>
        <end position="1853"/>
    </location>
</feature>
<feature type="helix" evidence="94">
    <location>
        <begin position="1953"/>
        <end position="1967"/>
    </location>
</feature>
<feature type="turn" evidence="93">
    <location>
        <begin position="2063"/>
        <end position="2065"/>
    </location>
</feature>
<feature type="helix" evidence="96">
    <location>
        <begin position="2068"/>
        <end position="2070"/>
    </location>
</feature>
<feature type="helix" evidence="95">
    <location>
        <begin position="2071"/>
        <end position="2073"/>
    </location>
</feature>
<feature type="helix" evidence="95">
    <location>
        <begin position="2080"/>
        <end position="2092"/>
    </location>
</feature>
<feature type="helix" evidence="95">
    <location>
        <begin position="2094"/>
        <end position="2103"/>
    </location>
</feature>
<feature type="turn" evidence="86">
    <location>
        <begin position="2104"/>
        <end position="2106"/>
    </location>
</feature>
<comment type="function">
    <text evidence="11 14 30 31 32 44 46 48 49 51 57 59 61 62 67">Acetylates histones, giving a specific tag for transcriptional activation (PubMed:21131905, PubMed:24616510). Mediates acetylation of histone H3 at 'Lys-18' and 'Lys-27' (H3K18ac and H3K27ac, respectively) (PubMed:21131905). Also acetylates non-histone proteins, like DDX21, FBL, IRF2, MAFG, NCOA3, POLR1E/PAF53 and FOXO1 (PubMed:10490106, PubMed:11154691, PubMed:12738767, PubMed:12929931, PubMed:24207024, PubMed:28790157, PubMed:30540930, PubMed:35675826, PubMed:9707565). Binds specifically to phosphorylated CREB and enhances its transcriptional activity toward cAMP-responsive genes. Acts as a coactivator of ALX1. Acts as a circadian transcriptional coactivator which enhances the activity of the circadian transcriptional activators: NPAS2-BMAL1 and CLOCK-BMAL1 heterodimers (PubMed:14645221). Acetylates PCNA; acetylation promotes removal of chromatin-bound PCNA and its degradation during nucleotide excision repair (NER) (PubMed:24939902). Acetylates POLR1E/PAF53, leading to decreased association of RNA polymerase I with the rDNA promoter region and coding region (PubMed:24207024). Acetylates DDX21, thereby inhibiting DDX21 helicase activity (PubMed:28790157). Acetylates FBL, preventing methylation of 'Gln-105' of histone H2A (H2AQ104me) (PubMed:30540930). In addition to protein acetyltransferase, can use different acyl-CoA substrates, such as lactoyl-CoA, and is able to mediate protein lactylation (PubMed:38128537). Catalyzes lactylation of MRE11 in response to DNA damage, thereby promoting DNA double-strand breaks (DSBs) via homologous recombination (HR) (PubMed:38128537). Functions as a transcriptional coactivator for SMAD4 in the TGF-beta signaling pathway (PubMed:25514493).</text>
</comment>
<comment type="catalytic activity">
    <reaction evidence="44 48">
        <text>L-lysyl-[histone] + acetyl-CoA = N(6)-acetyl-L-lysyl-[histone] + CoA + H(+)</text>
        <dbReference type="Rhea" id="RHEA:21992"/>
        <dbReference type="Rhea" id="RHEA-COMP:9845"/>
        <dbReference type="Rhea" id="RHEA-COMP:11338"/>
        <dbReference type="ChEBI" id="CHEBI:15378"/>
        <dbReference type="ChEBI" id="CHEBI:29969"/>
        <dbReference type="ChEBI" id="CHEBI:57287"/>
        <dbReference type="ChEBI" id="CHEBI:57288"/>
        <dbReference type="ChEBI" id="CHEBI:61930"/>
        <dbReference type="EC" id="2.3.1.48"/>
    </reaction>
    <physiologicalReaction direction="left-to-right" evidence="44 48">
        <dbReference type="Rhea" id="RHEA:21993"/>
    </physiologicalReaction>
</comment>
<comment type="catalytic activity">
    <reaction evidence="14 30 46 49 59 61">
        <text>L-lysyl-[protein] + acetyl-CoA = N(6)-acetyl-L-lysyl-[protein] + CoA + H(+)</text>
        <dbReference type="Rhea" id="RHEA:45948"/>
        <dbReference type="Rhea" id="RHEA-COMP:9752"/>
        <dbReference type="Rhea" id="RHEA-COMP:10731"/>
        <dbReference type="ChEBI" id="CHEBI:15378"/>
        <dbReference type="ChEBI" id="CHEBI:29969"/>
        <dbReference type="ChEBI" id="CHEBI:57287"/>
        <dbReference type="ChEBI" id="CHEBI:57288"/>
        <dbReference type="ChEBI" id="CHEBI:61930"/>
    </reaction>
    <physiologicalReaction direction="left-to-right" evidence="14 30 46 49 57 59 61">
        <dbReference type="Rhea" id="RHEA:45949"/>
    </physiologicalReaction>
</comment>
<comment type="catalytic activity">
    <reaction evidence="62">
        <text>(S)-lactoyl-CoA + L-lysyl-[protein] = N(6)-[(S)-lactoyl]-L-lysyl-[protein] + CoA + H(+)</text>
        <dbReference type="Rhea" id="RHEA:61996"/>
        <dbReference type="Rhea" id="RHEA-COMP:9752"/>
        <dbReference type="Rhea" id="RHEA-COMP:19466"/>
        <dbReference type="ChEBI" id="CHEBI:15378"/>
        <dbReference type="ChEBI" id="CHEBI:29969"/>
        <dbReference type="ChEBI" id="CHEBI:57287"/>
        <dbReference type="ChEBI" id="CHEBI:231527"/>
        <dbReference type="ChEBI" id="CHEBI:231528"/>
    </reaction>
    <physiologicalReaction direction="left-to-right" evidence="62">
        <dbReference type="Rhea" id="RHEA:61997"/>
    </physiologicalReaction>
</comment>
<comment type="subunit">
    <text evidence="1 9 10 12 13 14 17 19 20 22 23 24 25 26 29 30 32 33 36 37 38 42 45 48 49 51 53 54 56 63 64 65 67">Found in a complex containing NCOA2; NCOA3; IKKA; IKKB and IKBKG. Probably part of a complex with HIF1A and EP300. Interacts with GATA1; the interaction results in acetylation and enhancement of transcriptional activity of GATA1. Interacts with MAF and ZCCHC12. Interacts with DAXX; the interaction is dependent on CBP sumoylation and results in suppression of the transcriptional activity via recruitment of HDAC2 to DAXX (By similarity). Interacts with phosphorylated CREB1. Interacts with CITED4 (C-terminal region). Interacts (via the TAZ-type 1 domain) with HIF1A. Interacts with SRCAP, CARM1, ELF3, MLLT7/FOXO4, N4BP2, NCOA1, NCOA3, NCOA6, PCAF, DDX5, DDX17, PELP1, PML, SMAD1, SMAD2, SMAD3, SPIB and TRERF1. Interacts with KLF1; the interaction results in acetylation of KLF1 and enhancement of its transcriptional activity. Interacts with MTDH. Interacts with NFATC4. Interacts with MAFG; the interaction acetylates MAFG in the basic region and stimulates NFE2 transcriptional activity through increasing its DNA-binding activity. Interacts with IRF2; the interaction acetylates IRF2 and regulates its activity on the H4 promoter. Interacts with IRF3 (when phosphorylated); forming the dsRNA-activated factor 1 (DRAF1), a complex which activates the transcription of the type I interferon genes (PubMed:27302953). Interacts (via N-terminus) with SS18L1/CREST (via C-terminus). Interacts with MECOM. Interacts with CITED1 (via C-terminus). Interacts with FOXO1; the interaction acetylates FOXO1 and inhibits its transcriptional activity. Interacts with NPAS2, CLOCK and BMAL1. Interacts with ASF1A and ASF1B; this promotes histone acetylation. Interacts with acetylated TP53/p53 and with the acetylated histones H3 and H4. Interacts (via transactivation domain and C-terminus) with PCNA; the interaction occurs on chromatin in UV-irradiated damaged cells (PubMed:24939902). Interacts with DHX9 (via N-terminus); this interaction mediates association with RNA polymerase II holoenzyme and stimulates CREB-dependent transcriptional activation (PubMed:9323138). Interacts with SMAD4; negatively regulated by ZBTB7A (PubMed:25514493). Interacts with DUX4 (via C-terminus) (PubMed:26951377). Forms a complex with KMT2A and CREB1 (PubMed:23651431). Interacts with DDX3X; this interaction may facilitate HNF4A acetylation (PubMed:28128295). Interacts with MSX1; the interaction may inhibit MSX1 autoinactivation (By similarity). Interacts with ACSS2 (By similarity).</text>
</comment>
<comment type="subunit">
    <text evidence="18 21 66">(Microbial infection) Interacts with HTLV-1 Tax, p30II and HBZ.</text>
</comment>
<comment type="subunit">
    <text evidence="15">(Microbial infection) Interacts with human herpes virus 8/HHV-8 protein vIRF-1; this interaction inhibits CREBBP binding to IRF3.</text>
</comment>
<comment type="subunit">
    <text evidence="34">(Microbial infection) Interacts with HIV-1 Tat.</text>
</comment>
<comment type="interaction">
    <interactant intactId="EBI-81215">
        <id>Q92793</id>
    </interactant>
    <interactant intactId="EBI-296087">
        <id>P31749</id>
        <label>AKT1</label>
    </interactant>
    <organismsDiffer>false</organismsDiffer>
    <experiments>3</experiments>
</comment>
<comment type="interaction">
    <interactant intactId="EBI-81215">
        <id>Q92793</id>
    </interactant>
    <interactant intactId="EBI-608057">
        <id>P10275</id>
        <label>AR</label>
    </interactant>
    <organismsDiffer>false</organismsDiffer>
    <experiments>3</experiments>
</comment>
<comment type="interaction">
    <interactant intactId="EBI-81215">
        <id>Q92793</id>
    </interactant>
    <interactant intactId="EBI-1050386">
        <id>P61201</id>
        <label>COPS2</label>
    </interactant>
    <organismsDiffer>false</organismsDiffer>
    <experiments>3</experiments>
</comment>
<comment type="interaction">
    <interactant intactId="EBI-81215">
        <id>Q92793</id>
    </interactant>
    <interactant intactId="EBI-711855">
        <id>P16220</id>
        <label>CREB1</label>
    </interactant>
    <organismsDiffer>false</organismsDiffer>
    <experiments>2</experiments>
</comment>
<comment type="interaction">
    <interactant intactId="EBI-81215">
        <id>Q92793</id>
    </interactant>
    <interactant intactId="EBI-491549">
        <id>P35222</id>
        <label>CTNNB1</label>
    </interactant>
    <organismsDiffer>false</organismsDiffer>
    <experiments>2</experiments>
</comment>
<comment type="interaction">
    <interactant intactId="EBI-81215">
        <id>Q92793</id>
    </interactant>
    <interactant intactId="EBI-77321">
        <id>Q9UER7</id>
        <label>DAXX</label>
    </interactant>
    <organismsDiffer>false</organismsDiffer>
    <experiments>2</experiments>
</comment>
<comment type="interaction">
    <interactant intactId="EBI-81215">
        <id>Q92793</id>
    </interactant>
    <interactant intactId="EBI-1108782">
        <id>Q12778</id>
        <label>FOXO1</label>
    </interactant>
    <organismsDiffer>false</organismsDiffer>
    <experiments>3</experiments>
</comment>
<comment type="interaction">
    <interactant intactId="EBI-81215">
        <id>Q92793</id>
    </interactant>
    <interactant intactId="EBI-1644164">
        <id>O43524</id>
        <label>FOXO3</label>
    </interactant>
    <organismsDiffer>false</organismsDiffer>
    <experiments>3</experiments>
</comment>
<comment type="interaction">
    <interactant intactId="EBI-81215">
        <id>Q92793</id>
    </interactant>
    <interactant intactId="EBI-2806671">
        <id>P23769</id>
        <label>GATA2</label>
    </interactant>
    <organismsDiffer>false</organismsDiffer>
    <experiments>2</experiments>
</comment>
<comment type="interaction">
    <interactant intactId="EBI-81215">
        <id>Q92793</id>
    </interactant>
    <interactant intactId="EBI-302023">
        <id>P62805</id>
        <label>H4C9</label>
    </interactant>
    <organismsDiffer>false</organismsDiffer>
    <experiments>6</experiments>
</comment>
<comment type="interaction">
    <interactant intactId="EBI-81215">
        <id>Q92793</id>
    </interactant>
    <interactant intactId="EBI-447269">
        <id>Q16665</id>
        <label>HIF1A</label>
    </interactant>
    <organismsDiffer>false</organismsDiffer>
    <experiments>2</experiments>
</comment>
<comment type="interaction">
    <interactant intactId="EBI-81215">
        <id>Q92793</id>
    </interactant>
    <interactant intactId="EBI-466029">
        <id>P42858</id>
        <label>HTT</label>
    </interactant>
    <organismsDiffer>false</organismsDiffer>
    <experiments>2</experiments>
</comment>
<comment type="interaction">
    <interactant intactId="EBI-81215">
        <id>Q92793</id>
    </interactant>
    <interactant intactId="EBI-958408">
        <id>P48551</id>
        <label>IFNAR2</label>
    </interactant>
    <organismsDiffer>false</organismsDiffer>
    <experiments>4</experiments>
</comment>
<comment type="interaction">
    <interactant intactId="EBI-81215">
        <id>Q92793</id>
    </interactant>
    <interactant intactId="EBI-2650369">
        <id>Q14653</id>
        <label>IRF3</label>
    </interactant>
    <organismsDiffer>false</organismsDiffer>
    <experiments>12</experiments>
</comment>
<comment type="interaction">
    <interactant intactId="EBI-81215">
        <id>Q92793</id>
    </interactant>
    <interactant intactId="EBI-3931258">
        <id>Q13568</id>
        <label>IRF5</label>
    </interactant>
    <organismsDiffer>false</organismsDiffer>
    <experiments>3</experiments>
</comment>
<comment type="interaction">
    <interactant intactId="EBI-81215">
        <id>Q92793</id>
    </interactant>
    <interactant intactId="EBI-477430">
        <id>Q92831</id>
        <label>KAT2B</label>
    </interactant>
    <organismsDiffer>false</organismsDiffer>
    <experiments>4</experiments>
</comment>
<comment type="interaction">
    <interactant intactId="EBI-81215">
        <id>Q92793</id>
    </interactant>
    <interactant intactId="EBI-8284732">
        <id>Q13351</id>
        <label>KLF1</label>
    </interactant>
    <organismsDiffer>false</organismsDiffer>
    <experiments>2</experiments>
</comment>
<comment type="interaction">
    <interactant intactId="EBI-81215">
        <id>Q92793</id>
    </interactant>
    <interactant intactId="EBI-396343">
        <id>O00629</id>
        <label>KPNA4</label>
    </interactant>
    <organismsDiffer>false</organismsDiffer>
    <experiments>2</experiments>
</comment>
<comment type="interaction">
    <interactant intactId="EBI-81215">
        <id>Q92793</id>
    </interactant>
    <interactant intactId="EBI-1046588">
        <id>Q86UE4</id>
        <label>MTDH</label>
    </interactant>
    <organismsDiffer>false</organismsDiffer>
    <experiments>2</experiments>
</comment>
<comment type="interaction">
    <interactant intactId="EBI-81215">
        <id>Q92793</id>
    </interactant>
    <interactant intactId="EBI-356392">
        <id>P55209</id>
        <label>NAP1L1</label>
    </interactant>
    <organismsDiffer>false</organismsDiffer>
    <experiments>3</experiments>
</comment>
<comment type="interaction">
    <interactant intactId="EBI-81215">
        <id>Q92793</id>
    </interactant>
    <interactant intactId="EBI-78670">
        <id>Q14686</id>
        <label>NCOA6</label>
    </interactant>
    <organismsDiffer>false</organismsDiffer>
    <experiments>2</experiments>
</comment>
<comment type="interaction">
    <interactant intactId="EBI-81215">
        <id>Q92793</id>
    </interactant>
    <interactant intactId="EBI-73886">
        <id>Q04206</id>
        <label>RELA</label>
    </interactant>
    <organismsDiffer>false</organismsDiffer>
    <experiments>6</experiments>
</comment>
<comment type="interaction">
    <interactant intactId="EBI-81215">
        <id>Q92793</id>
    </interactant>
    <interactant intactId="EBI-948328">
        <id>P36956-1</id>
        <label>SREBF1</label>
    </interactant>
    <organismsDiffer>false</organismsDiffer>
    <experiments>3</experiments>
</comment>
<comment type="interaction">
    <interactant intactId="EBI-81215">
        <id>Q92793</id>
    </interactant>
    <interactant intactId="EBI-948338">
        <id>P36956-3</id>
        <label>SREBF1</label>
    </interactant>
    <organismsDiffer>false</organismsDiffer>
    <experiments>2</experiments>
</comment>
<comment type="interaction">
    <interactant intactId="EBI-81215">
        <id>Q92793</id>
    </interactant>
    <interactant intactId="EBI-465059">
        <id>Q12772</id>
        <label>SREBF2</label>
    </interactant>
    <organismsDiffer>false</organismsDiffer>
    <experiments>2</experiments>
</comment>
<comment type="interaction">
    <interactant intactId="EBI-81215">
        <id>Q92793</id>
    </interactant>
    <interactant intactId="EBI-3922312">
        <id>Q9UL17</id>
        <label>TBX21</label>
    </interactant>
    <organismsDiffer>false</organismsDiffer>
    <experiments>4</experiments>
</comment>
<comment type="interaction">
    <interactant intactId="EBI-81215">
        <id>Q92793</id>
    </interactant>
    <interactant intactId="EBI-366083">
        <id>P04637</id>
        <label>TP53</label>
    </interactant>
    <organismsDiffer>false</organismsDiffer>
    <experiments>17</experiments>
</comment>
<comment type="interaction">
    <interactant intactId="EBI-81215">
        <id>Q92793</id>
    </interactant>
    <interactant intactId="EBI-25475856">
        <id>P0DTC9</id>
        <label>N</label>
    </interactant>
    <organismsDiffer>true</organismsDiffer>
    <experiments>2</experiments>
</comment>
<comment type="interaction">
    <interactant intactId="EBI-81215">
        <id>Q92793</id>
    </interactant>
    <interactant intactId="EBI-6164389">
        <id>P04608</id>
        <label>tat</label>
    </interactant>
    <organismsDiffer>true</organismsDiffer>
    <experiments>2</experiments>
</comment>
<comment type="interaction">
    <interactant intactId="EBI-81215">
        <id>Q92793</id>
    </interactant>
    <interactant intactId="EBI-617698">
        <id>P03070</id>
    </interactant>
    <organismsDiffer>true</organismsDiffer>
    <experiments>3</experiments>
</comment>
<comment type="interaction">
    <interactant intactId="EBI-81215">
        <id>Q92793</id>
    </interactant>
    <interactant intactId="EBI-2603114">
        <id>P03255</id>
    </interactant>
    <organismsDiffer>true</organismsDiffer>
    <experiments>3</experiments>
</comment>
<comment type="interaction">
    <interactant intactId="EBI-81215">
        <id>Q92793</id>
    </interactant>
    <interactant intactId="EBI-6947456">
        <id>P03259</id>
    </interactant>
    <organismsDiffer>true</organismsDiffer>
    <experiments>5</experiments>
</comment>
<comment type="interaction">
    <interactant intactId="EBI-81215">
        <id>Q92793</id>
    </interactant>
    <interactant intactId="EBI-7225021">
        <id>P03259-2</id>
    </interactant>
    <organismsDiffer>true</organismsDiffer>
    <experiments>3</experiments>
</comment>
<comment type="subcellular location">
    <subcellularLocation>
        <location evidence="31 35">Cytoplasm</location>
    </subcellularLocation>
    <subcellularLocation>
        <location evidence="31 35 39 52">Nucleus</location>
    </subcellularLocation>
    <text evidence="31 35 39">Recruited to nuclear bodies by SS18L1/CREST (PubMed:15488321). In the presence of ALX1 relocalizes from the cytoplasm to the nucleus (PubMed:12929931). Relocalizes from the nucleus to the cytoplasm following UV cell damage (PubMed:15023334).</text>
</comment>
<comment type="alternative products">
    <event type="alternative splicing"/>
    <isoform>
        <id>Q92793-1</id>
        <name>1</name>
        <sequence type="displayed"/>
    </isoform>
    <isoform>
        <id>Q92793-2</id>
        <name>2</name>
        <sequence type="described" ref="VSP_045700"/>
    </isoform>
</comment>
<comment type="domain">
    <text>The KIX domain mediates binding to HIV-1 Tat.</text>
</comment>
<comment type="PTM">
    <text evidence="1">Methylation of the KIX domain by CARM1 blocks association with CREB. This results in the blockade of CREB signaling, and in activation of apoptotic response (By similarity).</text>
</comment>
<comment type="PTM">
    <text evidence="41 62">Phosphorylated by CHUK/IKKA at Ser-1382 and Ser-1386; these phosphorylations promote cell growth by switching the binding preference of CREBBP from TP53 to NF-kappa-B (PubMed:17434128). Phosphorylated by _ at Ser-124 in response to DNA damage, promoting interaction with MRE11 and lactylation of MRE11 (PubMed:38128537).</text>
</comment>
<comment type="PTM">
    <text evidence="1">Sumoylation negatively regulates transcriptional activity via the recruitment of DAAX.</text>
</comment>
<comment type="PTM">
    <text evidence="48 61">Autoacetylation is required for binding to protein substrates, such as acetylated histones and acetylated TP53/p53 (PubMed:24616510). Autoacetylation is induced by glucose and fatty acids (PubMed:35675826).</text>
</comment>
<comment type="disease">
    <text>Chromosomal aberrations involving CREBBP may be a cause of acute myeloid leukemias. Translocation t(8;16)(p11;p13) with KAT6A; translocation t(11;16)(q23;p13.3) with KMT2A/MLL1; translocation t(10;16)(q22;p13) with KAT6B. KAT6A-CREBBP may induce leukemia by inhibiting RUNX1-mediated transcription.</text>
</comment>
<comment type="disease" evidence="16 27 28 40 43 48 50">
    <disease id="DI-02730">
        <name>Rubinstein-Taybi syndrome 1</name>
        <acronym>RSTS1</acronym>
        <description>A disorder characterized by craniofacial abnormalities, postnatal growth deficiency, broad thumbs, broad big toes, intellectual disability and a propensity for development of malignancies.</description>
        <dbReference type="MIM" id="180849"/>
    </disease>
    <text>The disease is caused by variants affecting the gene represented in this entry.</text>
</comment>
<comment type="disease" evidence="55 58 60">
    <disease id="DI-05487">
        <name>Menke-Hennekam syndrome 1</name>
        <acronym>MKHK1</acronym>
        <description>A form of Menke-Hennekam syndrome, a congenital autosomal dominant disease characterized by developmental delay, growth retardation, and craniofacial dysmorphism. Patients have intellectual disability of variable severity, speech delay, autistic behavior, short stature and microcephaly. Main facial characteristics include short palpebral fissures, telecanthi, depressed nasal ridge, short nose, anteverted nares, short columella and long philtrum.</description>
        <dbReference type="MIM" id="618332"/>
    </disease>
    <text>The disease is caused by variants affecting the gene represented in this entry.</text>
</comment>
<comment type="sequence caution" evidence="69">
    <conflict type="erroneous initiation">
        <sequence resource="EMBL-CDS" id="BAE06125"/>
    </conflict>
    <text>Extended N-terminus.</text>
</comment>
<comment type="online information" name="Atlas of Genetics and Cytogenetics in Oncology and Haematology">
    <link uri="https://atlasgeneticsoncology.org/gene/42/crebbp"/>
</comment>
<comment type="online information" name="Wikipedia">
    <link uri="https://en.wikipedia.org/wiki/P300/CBP"/>
    <text>P300/CBP entry</text>
</comment>
<organism>
    <name type="scientific">Homo sapiens</name>
    <name type="common">Human</name>
    <dbReference type="NCBI Taxonomy" id="9606"/>
    <lineage>
        <taxon>Eukaryota</taxon>
        <taxon>Metazoa</taxon>
        <taxon>Chordata</taxon>
        <taxon>Craniata</taxon>
        <taxon>Vertebrata</taxon>
        <taxon>Euteleostomi</taxon>
        <taxon>Mammalia</taxon>
        <taxon>Eutheria</taxon>
        <taxon>Euarchontoglires</taxon>
        <taxon>Primates</taxon>
        <taxon>Haplorrhini</taxon>
        <taxon>Catarrhini</taxon>
        <taxon>Hominidae</taxon>
        <taxon>Homo</taxon>
    </lineage>
</organism>
<sequence length="2442" mass="265351">MAENLLDGPPNPKRAKLSSPGFSANDSTDFGSLFDLENDLPDELIPNGGELGLLNSGNLVPDAASKHKQLSELLRGGSGSSINPGIGNVSASSPVQQGLGGQAQGQPNSANMASLSAMGKSPLSQGDSSAPSLPKQAASTSGPTPAASQALNPQAQKQVGLATSSPATSQTGPGICMNANFNQTHPGLLNSNSGHSLINQASQGQAQVMNGSLGAAGRGRGAGMPYPTPAMQGASSSVLAETLTQVSPQMTGHAGLNTAQAGGMAKMGITGNTSPFGQPFSQAGGQPMGATGVNPQLASKQSMVNSLPTFPTDIKNTSVTNVPNMSQMQTSVGIVPTQAIATGPTADPEKRKLIQQQLVLLLHAHKCQRREQANGEVRACSLPHCRTMKNVLNHMTHCQAGKACQVAHCASSRQIISHWKNCTRHDCPVCLPLKNASDKRNQQTILGSPASGIQNTIGSVGTGQQNATSLSNPNPIDPSSMQRAYAALGLPYMNQPQTQLQPQVPGQQPAQPQTHQQMRTLNPLGNNPMNIPAGGITTDQQPPNLISESALPTSLGATNPLMNDGSNSGNIGTLSTIPTAAPPSSTGVRKGWHEHVTQDLRSHLVHKLVQAIFPTPDPAALKDRRMENLVAYAKKVEGDMYESANSRDEYYHLLAEKIYKIQKELEEKRRSRLHKQGILGNQPALPAPGAQPPVIPQAQPVRPPNGPLSLPVNRMQVSQGMNSFNPMSLGNVQLPQAPMGPRAASPMNHSVQMNSMGSVPGMAISPSRMPQPPNMMGAHTNNMMAQAPAQSQFLPQNQFPSSSGAMSVGMGQPPAQTGVSQGQVPGAALPNPLNMLGPQASQLPCPPVTQSPLHPTPPPASTAAGMPSLQHTTPPGMTPPQPAAPTQPSTPVSSSGQTPTPTPGSVPSATQTQSTPTVQAAAQAQVTPQPQTPVQPPSVATPQSSQQQPTPVHAQPPGTPLSQAAASIDNRVPTPSSVASAETNSQQPGPDVPVLEMKTETQAEDTEPDPGESKGEPRSEMMEEDLQGASQVKEETDIAEQKSEPMEVDEKKPEVKVEVKEEEESSSNGTASQSTSPSQPRKKIFKPEELRQALMPTLEALYRQDPESLPFRQPVDPQLLGIPDYFDIVKNPMDLSTIKRKLDTGQYQEPWQYVDDVWLMFNNAWLYNRKTSRVYKFCSKLAEVFEQEIDPVMQSLGYCCGRKYEFSPQTLCCYGKQLCTIPRDAAYYSYQNRYHFCEKCFTEIQGENVTLGDDPSQPQTTISKDQFEKKKNDTLDPEPFVDCKECGRKMHQICVLHYDIIWPSGFVCDNCLKKTGRPRKENKFSAKRLQTTRLGNHLEDRVNKFLRRQNHPEAGEVFVRVVASSDKTVEVKPGMKSRFVDSGEMSESFPYRTKALFAFEEIDGVDVCFFGMHVQEYGSDCPPPNTRRVYISYLDSIHFFRPRCLRTAVYHEILIGYLEYVKKLGYVTGHIWACPPSEGDDYIFHCHPPDQKIPKPKRLQEWYKKMLDKAFAERIIHDYKDIFKQATEDRLTSAKELPYFEGDFWPNVLEESIKELEQEEEERKKEESTAASETTEGSQGDSKNAKKKNNKKTNKNKSSISRANKKKPSMPNVSNDLSQKLYATMEKHKEVFFVIHLHAGPVINTLPPIVDPDPLLSCDLMDGRDAFLTLARDKHWEFSSLRRSKWSTLCMLVELHTQGQDRFVYTCNECKHHVETRWHCTVCEDYDLCINCYNTKSHAHKMVKWGLGLDDEGSSQGEPQSKSPQESRRLSIQRCIQSLVHACQCRNANCSLPSCQKMKRVVQHTKGCKRKTNGGCPVCKQLIALCCYHAKHCQENKCPVPFCLNIKHKLRQQQIQHRLQQAQLMRRRMATMNTRNVPQQSLPSPTSAPPGTPTQQPSTPQTPQPPAQPQPSPVSMSPAGFPSVARTQPPTTVSTGKPTSQVPAPPPPAQPPPAAVEAARQIEREAQQQQHLYRVNINNSMPPGRTGMGTPGSQMAPVSLNVPRPNQVSGPVMPSMPPGQWQQAPLPQQQPMPGLPRPVISMQAQAAVAGPRMPSVQPPRSISPSALQDLLRTLKSPSSPQQQQQVLNILKSNPQLMAAFIKQRTAKYVANQPGMQPQPGLQSQPGMQPQPGMHQQPSLQNLNAMQAGVPRPGVPPQQQAMGGLNPQGQALNIMNPGHNPNMASMNPQYREMLRRQLLQQQQQQQQQQQQQQQQQQGSAGMAGGMAGHGQFQQPQGPGGYPPAMQQQQRMQQHLPLQGSSMGQMAAQMGQLGQMGQPGLGADSTPNIQQALQQRILQQQQMKQQIGSPGQPNPMSPQQHMLSGQPQASHLPGQQIATSLSNQVRSPAPVQSPRPQSQPPHSSPSPRIQPQPSPHHVSPQTGSPHPGLAVTMASSIDQGHLGNPEQSAMLPQLNTPSRSALSSELSLVGDTTGDTLEKFVEGL</sequence>
<keyword id="KW-0002">3D-structure</keyword>
<keyword id="KW-0007">Acetylation</keyword>
<keyword id="KW-0010">Activator</keyword>
<keyword id="KW-0012">Acyltransferase</keyword>
<keyword id="KW-0025">Alternative splicing</keyword>
<keyword id="KW-0090">Biological rhythms</keyword>
<keyword id="KW-0103">Bromodomain</keyword>
<keyword id="KW-0160">Chromosomal rearrangement</keyword>
<keyword id="KW-0963">Cytoplasm</keyword>
<keyword id="KW-0225">Disease variant</keyword>
<keyword id="KW-0945">Host-virus interaction</keyword>
<keyword id="KW-0991">Intellectual disability</keyword>
<keyword id="KW-1017">Isopeptide bond</keyword>
<keyword id="KW-0479">Metal-binding</keyword>
<keyword id="KW-0488">Methylation</keyword>
<keyword id="KW-0539">Nucleus</keyword>
<keyword id="KW-0597">Phosphoprotein</keyword>
<keyword id="KW-1267">Proteomics identification</keyword>
<keyword id="KW-1185">Reference proteome</keyword>
<keyword id="KW-0677">Repeat</keyword>
<keyword id="KW-0804">Transcription</keyword>
<keyword id="KW-0805">Transcription regulation</keyword>
<keyword id="KW-0808">Transferase</keyword>
<keyword id="KW-0832">Ubl conjugation</keyword>
<keyword id="KW-0862">Zinc</keyword>
<keyword id="KW-0863">Zinc-finger</keyword>
<dbReference type="EC" id="2.3.1.48" evidence="44 48"/>
<dbReference type="EC" id="2.3.1.-" evidence="62 14 30 46 49 57 59"/>
<dbReference type="EMBL" id="U85962">
    <property type="protein sequence ID" value="AAC51331.2"/>
    <property type="molecule type" value="mRNA"/>
</dbReference>
<dbReference type="EMBL" id="U89354">
    <property type="protein sequence ID" value="AAC51339.1"/>
    <property type="molecule type" value="mRNA"/>
</dbReference>
<dbReference type="EMBL" id="U89355">
    <property type="protein sequence ID" value="AAC51340.1"/>
    <property type="molecule type" value="mRNA"/>
</dbReference>
<dbReference type="EMBL" id="U47741">
    <property type="protein sequence ID" value="AAC51770.1"/>
    <property type="molecule type" value="mRNA"/>
</dbReference>
<dbReference type="EMBL" id="AB210043">
    <property type="protein sequence ID" value="BAE06125.1"/>
    <property type="status" value="ALT_INIT"/>
    <property type="molecule type" value="mRNA"/>
</dbReference>
<dbReference type="EMBL" id="CH471112">
    <property type="protein sequence ID" value="EAW85335.1"/>
    <property type="molecule type" value="Genomic_DNA"/>
</dbReference>
<dbReference type="EMBL" id="CH471112">
    <property type="protein sequence ID" value="EAW85336.1"/>
    <property type="molecule type" value="Genomic_DNA"/>
</dbReference>
<dbReference type="EMBL" id="CH471112">
    <property type="protein sequence ID" value="EAW85337.1"/>
    <property type="molecule type" value="Genomic_DNA"/>
</dbReference>
<dbReference type="CCDS" id="CCDS10509.1">
    <molecule id="Q92793-1"/>
</dbReference>
<dbReference type="CCDS" id="CCDS45399.1">
    <molecule id="Q92793-2"/>
</dbReference>
<dbReference type="PIR" id="S39162">
    <property type="entry name" value="S39162"/>
</dbReference>
<dbReference type="RefSeq" id="NP_001073315.1">
    <molecule id="Q92793-2"/>
    <property type="nucleotide sequence ID" value="NM_001079846.1"/>
</dbReference>
<dbReference type="RefSeq" id="NP_004371.2">
    <molecule id="Q92793-1"/>
    <property type="nucleotide sequence ID" value="NM_004380.3"/>
</dbReference>
<dbReference type="PDB" id="1JSP">
    <property type="method" value="NMR"/>
    <property type="chains" value="B=1081-1197"/>
</dbReference>
<dbReference type="PDB" id="1LIQ">
    <property type="method" value="NMR"/>
    <property type="chains" value="A=376-402"/>
</dbReference>
<dbReference type="PDB" id="1RDT">
    <property type="method" value="X-ray"/>
    <property type="resolution" value="2.40 A"/>
    <property type="chains" value="E=58-80"/>
</dbReference>
<dbReference type="PDB" id="1WO3">
    <property type="method" value="NMR"/>
    <property type="chains" value="A=387-398"/>
</dbReference>
<dbReference type="PDB" id="1WO4">
    <property type="method" value="NMR"/>
    <property type="chains" value="A=387-398"/>
</dbReference>
<dbReference type="PDB" id="1WO5">
    <property type="method" value="NMR"/>
    <property type="chains" value="A=387-398"/>
</dbReference>
<dbReference type="PDB" id="1WO6">
    <property type="method" value="NMR"/>
    <property type="chains" value="A=376-400"/>
</dbReference>
<dbReference type="PDB" id="1WO7">
    <property type="method" value="NMR"/>
    <property type="chains" value="A=376-400"/>
</dbReference>
<dbReference type="PDB" id="1ZOQ">
    <property type="method" value="X-ray"/>
    <property type="resolution" value="2.37 A"/>
    <property type="chains" value="C/D=2065-2111"/>
</dbReference>
<dbReference type="PDB" id="2D82">
    <property type="method" value="NMR"/>
    <property type="chains" value="A=1081-1197"/>
</dbReference>
<dbReference type="PDB" id="2KJE">
    <property type="method" value="NMR"/>
    <property type="chains" value="A=1763-1854"/>
</dbReference>
<dbReference type="PDB" id="2KWF">
    <property type="method" value="NMR"/>
    <property type="chains" value="A=587-673"/>
</dbReference>
<dbReference type="PDB" id="2L84">
    <property type="method" value="NMR"/>
    <property type="chains" value="A=1081-1197"/>
</dbReference>
<dbReference type="PDB" id="2L85">
    <property type="method" value="NMR"/>
    <property type="chains" value="A=1081-1197"/>
</dbReference>
<dbReference type="PDB" id="2LXS">
    <property type="method" value="NMR"/>
    <property type="chains" value="A=587-673"/>
</dbReference>
<dbReference type="PDB" id="2LXT">
    <property type="method" value="NMR"/>
    <property type="chains" value="A=587-673"/>
</dbReference>
<dbReference type="PDB" id="2N1A">
    <property type="method" value="NMR"/>
    <property type="chains" value="B=1699-1751"/>
</dbReference>
<dbReference type="PDB" id="2RNY">
    <property type="method" value="NMR"/>
    <property type="chains" value="A=1081-1197"/>
</dbReference>
<dbReference type="PDB" id="3DWY">
    <property type="method" value="X-ray"/>
    <property type="resolution" value="1.98 A"/>
    <property type="chains" value="A/B=1081-1197"/>
</dbReference>
<dbReference type="PDB" id="3P1C">
    <property type="method" value="X-ray"/>
    <property type="resolution" value="1.82 A"/>
    <property type="chains" value="A/B=1081-1197"/>
</dbReference>
<dbReference type="PDB" id="3P1D">
    <property type="method" value="X-ray"/>
    <property type="resolution" value="1.86 A"/>
    <property type="chains" value="A/B=1081-1197"/>
</dbReference>
<dbReference type="PDB" id="3P1E">
    <property type="method" value="X-ray"/>
    <property type="resolution" value="1.80 A"/>
    <property type="chains" value="A/B=1081-1197"/>
</dbReference>
<dbReference type="PDB" id="3P1F">
    <property type="method" value="X-ray"/>
    <property type="resolution" value="1.63 A"/>
    <property type="chains" value="A/B=1081-1197"/>
</dbReference>
<dbReference type="PDB" id="3SVH">
    <property type="method" value="X-ray"/>
    <property type="resolution" value="1.80 A"/>
    <property type="chains" value="A/B=1081-1197"/>
</dbReference>
<dbReference type="PDB" id="4A9K">
    <property type="method" value="X-ray"/>
    <property type="resolution" value="1.81 A"/>
    <property type="chains" value="A/B=1081-1197"/>
</dbReference>
<dbReference type="PDB" id="4N3W">
    <property type="method" value="X-ray"/>
    <property type="resolution" value="1.90 A"/>
    <property type="chains" value="A=1080-1316"/>
</dbReference>
<dbReference type="PDB" id="4N4F">
    <property type="method" value="X-ray"/>
    <property type="resolution" value="1.83 A"/>
    <property type="chains" value="A=1080-1316"/>
</dbReference>
<dbReference type="PDB" id="4NR4">
    <property type="method" value="X-ray"/>
    <property type="resolution" value="1.69 A"/>
    <property type="chains" value="A/B=1081-1197"/>
</dbReference>
<dbReference type="PDB" id="4NR5">
    <property type="method" value="X-ray"/>
    <property type="resolution" value="1.66 A"/>
    <property type="chains" value="A=1081-1197"/>
</dbReference>
<dbReference type="PDB" id="4NR6">
    <property type="method" value="X-ray"/>
    <property type="resolution" value="1.66 A"/>
    <property type="chains" value="A=1081-1197"/>
</dbReference>
<dbReference type="PDB" id="4NR7">
    <property type="method" value="X-ray"/>
    <property type="resolution" value="1.20 A"/>
    <property type="chains" value="A=1081-1197"/>
</dbReference>
<dbReference type="PDB" id="4NYV">
    <property type="method" value="X-ray"/>
    <property type="resolution" value="1.83 A"/>
    <property type="chains" value="A/B/C/D=1081-1197"/>
</dbReference>
<dbReference type="PDB" id="4NYW">
    <property type="method" value="X-ray"/>
    <property type="resolution" value="1.43 A"/>
    <property type="chains" value="A=1081-1197"/>
</dbReference>
<dbReference type="PDB" id="4NYX">
    <property type="method" value="X-ray"/>
    <property type="resolution" value="1.10 A"/>
    <property type="chains" value="A=1081-1197"/>
</dbReference>
<dbReference type="PDB" id="4OUF">
    <property type="method" value="X-ray"/>
    <property type="resolution" value="1.40 A"/>
    <property type="chains" value="A/B=1082-1197"/>
</dbReference>
<dbReference type="PDB" id="4TQN">
    <property type="method" value="X-ray"/>
    <property type="resolution" value="1.70 A"/>
    <property type="chains" value="A=1081-1197"/>
</dbReference>
<dbReference type="PDB" id="4TS8">
    <property type="method" value="X-ray"/>
    <property type="resolution" value="2.00 A"/>
    <property type="chains" value="A=1081-1197"/>
</dbReference>
<dbReference type="PDB" id="4WHU">
    <property type="method" value="X-ray"/>
    <property type="resolution" value="2.11 A"/>
    <property type="chains" value="A=1081-1197"/>
</dbReference>
<dbReference type="PDB" id="4YK0">
    <property type="method" value="X-ray"/>
    <property type="resolution" value="1.65 A"/>
    <property type="chains" value="A/B/C/D=1083-1196"/>
</dbReference>
<dbReference type="PDB" id="5CGP">
    <property type="method" value="X-ray"/>
    <property type="resolution" value="1.96 A"/>
    <property type="chains" value="A=1081-1197"/>
</dbReference>
<dbReference type="PDB" id="5DBM">
    <property type="method" value="X-ray"/>
    <property type="resolution" value="1.86 A"/>
    <property type="chains" value="A/B/C=1082-1197"/>
</dbReference>
<dbReference type="PDB" id="5EIC">
    <property type="method" value="X-ray"/>
    <property type="resolution" value="1.50 A"/>
    <property type="chains" value="A/B=1081-1197"/>
</dbReference>
<dbReference type="PDB" id="5ENG">
    <property type="method" value="X-ray"/>
    <property type="resolution" value="1.30 A"/>
    <property type="chains" value="A=1081-1197"/>
</dbReference>
<dbReference type="PDB" id="5EP7">
    <property type="method" value="X-ray"/>
    <property type="resolution" value="1.20 A"/>
    <property type="chains" value="A=1081-1197"/>
</dbReference>
<dbReference type="PDB" id="5GH9">
    <property type="method" value="X-ray"/>
    <property type="resolution" value="1.45 A"/>
    <property type="chains" value="A=1081-1196"/>
</dbReference>
<dbReference type="PDB" id="5H85">
    <property type="method" value="X-ray"/>
    <property type="resolution" value="1.70 A"/>
    <property type="chains" value="A=1081-1197"/>
</dbReference>
<dbReference type="PDB" id="5I83">
    <property type="method" value="X-ray"/>
    <property type="resolution" value="1.35 A"/>
    <property type="chains" value="A=1082-1197"/>
</dbReference>
<dbReference type="PDB" id="5I86">
    <property type="method" value="X-ray"/>
    <property type="resolution" value="1.05 A"/>
    <property type="chains" value="A/B=1082-1197"/>
</dbReference>
<dbReference type="PDB" id="5I89">
    <property type="method" value="X-ray"/>
    <property type="resolution" value="1.07 A"/>
    <property type="chains" value="A=1082-1197"/>
</dbReference>
<dbReference type="PDB" id="5I8B">
    <property type="method" value="X-ray"/>
    <property type="resolution" value="1.52 A"/>
    <property type="chains" value="A=1081-1312"/>
</dbReference>
<dbReference type="PDB" id="5I8G">
    <property type="method" value="X-ray"/>
    <property type="resolution" value="1.41 A"/>
    <property type="chains" value="A=1081-1312"/>
</dbReference>
<dbReference type="PDB" id="5J0D">
    <property type="method" value="X-ray"/>
    <property type="resolution" value="1.05 A"/>
    <property type="chains" value="A=1081-1197"/>
</dbReference>
<dbReference type="PDB" id="5JEM">
    <property type="method" value="X-ray"/>
    <property type="resolution" value="2.50 A"/>
    <property type="chains" value="C/D/F/H=2065-2111"/>
</dbReference>
<dbReference type="PDB" id="5KTU">
    <property type="method" value="X-ray"/>
    <property type="resolution" value="1.38 A"/>
    <property type="chains" value="A/B=1082-1197"/>
</dbReference>
<dbReference type="PDB" id="5KTW">
    <property type="method" value="X-ray"/>
    <property type="resolution" value="1.09 A"/>
    <property type="chains" value="A/B/C=1085-1194"/>
</dbReference>
<dbReference type="PDB" id="5KTX">
    <property type="method" value="X-ray"/>
    <property type="resolution" value="1.27 A"/>
    <property type="chains" value="A=1085-1194"/>
</dbReference>
<dbReference type="PDB" id="5LPJ">
    <property type="method" value="X-ray"/>
    <property type="resolution" value="1.65 A"/>
    <property type="chains" value="A=1081-1197"/>
</dbReference>
<dbReference type="PDB" id="5LPL">
    <property type="method" value="X-ray"/>
    <property type="resolution" value="1.65 A"/>
    <property type="chains" value="A=1081-1197"/>
</dbReference>
<dbReference type="PDB" id="5MME">
    <property type="method" value="X-ray"/>
    <property type="resolution" value="1.35 A"/>
    <property type="chains" value="A/B=1081-1197"/>
</dbReference>
<dbReference type="PDB" id="5MMG">
    <property type="method" value="X-ray"/>
    <property type="resolution" value="1.23 A"/>
    <property type="chains" value="A=1081-1197"/>
</dbReference>
<dbReference type="PDB" id="5MPK">
    <property type="method" value="X-ray"/>
    <property type="resolution" value="1.90 A"/>
    <property type="chains" value="A/B=1081-1197"/>
</dbReference>
<dbReference type="PDB" id="5MPN">
    <property type="method" value="X-ray"/>
    <property type="resolution" value="1.23 A"/>
    <property type="chains" value="A=1081-1197"/>
</dbReference>
<dbReference type="PDB" id="5MPZ">
    <property type="method" value="X-ray"/>
    <property type="resolution" value="1.40 A"/>
    <property type="chains" value="A=1081-1197"/>
</dbReference>
<dbReference type="PDB" id="5MQE">
    <property type="method" value="X-ray"/>
    <property type="resolution" value="1.65 A"/>
    <property type="chains" value="A/B=1081-1197"/>
</dbReference>
<dbReference type="PDB" id="5MQG">
    <property type="method" value="X-ray"/>
    <property type="resolution" value="1.35 A"/>
    <property type="chains" value="A/B=1081-1197"/>
</dbReference>
<dbReference type="PDB" id="5MQK">
    <property type="method" value="X-ray"/>
    <property type="resolution" value="1.53 A"/>
    <property type="chains" value="A/B=1081-1197"/>
</dbReference>
<dbReference type="PDB" id="5NLK">
    <property type="method" value="X-ray"/>
    <property type="resolution" value="1.80 A"/>
    <property type="chains" value="A=1081-1197"/>
</dbReference>
<dbReference type="PDB" id="5NRW">
    <property type="method" value="X-ray"/>
    <property type="resolution" value="1.70 A"/>
    <property type="chains" value="A=1081-1197"/>
</dbReference>
<dbReference type="PDB" id="5NU3">
    <property type="method" value="X-ray"/>
    <property type="resolution" value="1.75 A"/>
    <property type="chains" value="A=1081-1197"/>
</dbReference>
<dbReference type="PDB" id="5OWK">
    <property type="method" value="X-ray"/>
    <property type="resolution" value="1.25 A"/>
    <property type="chains" value="A=1081-1197"/>
</dbReference>
<dbReference type="PDB" id="5SVH">
    <property type="method" value="X-ray"/>
    <property type="resolution" value="2.05 A"/>
    <property type="chains" value="A=587-673"/>
</dbReference>
<dbReference type="PDB" id="5TB6">
    <property type="method" value="X-ray"/>
    <property type="resolution" value="1.79 A"/>
    <property type="chains" value="A=1081-1197"/>
</dbReference>
<dbReference type="PDB" id="5W0E">
    <property type="method" value="X-ray"/>
    <property type="resolution" value="1.41 A"/>
    <property type="chains" value="A=1082-1197"/>
</dbReference>
<dbReference type="PDB" id="5W0F">
    <property type="method" value="X-ray"/>
    <property type="resolution" value="1.60 A"/>
    <property type="chains" value="A=1082-1197"/>
</dbReference>
<dbReference type="PDB" id="5W0L">
    <property type="method" value="X-ray"/>
    <property type="resolution" value="1.55 A"/>
    <property type="chains" value="A/B=1082-1197"/>
</dbReference>
<dbReference type="PDB" id="5W0Q">
    <property type="method" value="X-ray"/>
    <property type="resolution" value="1.70 A"/>
    <property type="chains" value="A=1082-1197"/>
</dbReference>
<dbReference type="PDB" id="5XXH">
    <property type="method" value="X-ray"/>
    <property type="resolution" value="1.62 A"/>
    <property type="chains" value="A=1081-1197"/>
</dbReference>
<dbReference type="PDB" id="6ALB">
    <property type="method" value="X-ray"/>
    <property type="resolution" value="2.05 A"/>
    <property type="chains" value="A=1081-1312"/>
</dbReference>
<dbReference type="PDB" id="6ALC">
    <property type="method" value="X-ray"/>
    <property type="resolution" value="1.39 A"/>
    <property type="chains" value="A/B=1085-1196"/>
</dbReference>
<dbReference type="PDB" id="6AXQ">
    <property type="method" value="X-ray"/>
    <property type="resolution" value="1.30 A"/>
    <property type="chains" value="A/B/C/D=1085-1196"/>
</dbReference>
<dbReference type="PDB" id="6AY3">
    <property type="method" value="X-ray"/>
    <property type="resolution" value="1.39 A"/>
    <property type="chains" value="A/B=1083-1197"/>
</dbReference>
<dbReference type="PDB" id="6AY5">
    <property type="method" value="X-ray"/>
    <property type="resolution" value="1.44 A"/>
    <property type="chains" value="A=1083-1197"/>
</dbReference>
<dbReference type="PDB" id="6DMK">
    <property type="method" value="X-ray"/>
    <property type="resolution" value="1.66 A"/>
    <property type="chains" value="A=1083-1195"/>
</dbReference>
<dbReference type="PDB" id="6ES5">
    <property type="method" value="NMR"/>
    <property type="chains" value="B=2061-2105"/>
</dbReference>
<dbReference type="PDB" id="6ES6">
    <property type="method" value="NMR"/>
    <property type="chains" value="B=2061-2108"/>
</dbReference>
<dbReference type="PDB" id="6ES7">
    <property type="method" value="NMR"/>
    <property type="chains" value="B=2061-2109"/>
</dbReference>
<dbReference type="PDB" id="6FQO">
    <property type="method" value="X-ray"/>
    <property type="resolution" value="1.35 A"/>
    <property type="chains" value="A/B=1081-1197"/>
</dbReference>
<dbReference type="PDB" id="6FQT">
    <property type="method" value="X-ray"/>
    <property type="resolution" value="1.80 A"/>
    <property type="chains" value="A=1081-1197"/>
</dbReference>
<dbReference type="PDB" id="6FQU">
    <property type="method" value="X-ray"/>
    <property type="resolution" value="1.43 A"/>
    <property type="chains" value="A=1081-1197"/>
</dbReference>
<dbReference type="PDB" id="6FR0">
    <property type="method" value="X-ray"/>
    <property type="resolution" value="1.50 A"/>
    <property type="chains" value="A/B=1081-1197"/>
</dbReference>
<dbReference type="PDB" id="6FRF">
    <property type="method" value="X-ray"/>
    <property type="resolution" value="2.10 A"/>
    <property type="chains" value="A/B/C/D=1081-1197"/>
</dbReference>
<dbReference type="PDB" id="6LQX">
    <property type="method" value="X-ray"/>
    <property type="resolution" value="2.46 A"/>
    <property type="chains" value="A/B/C/D=1082-1196"/>
</dbReference>
<dbReference type="PDB" id="6M64">
    <property type="method" value="X-ray"/>
    <property type="resolution" value="1.45 A"/>
    <property type="chains" value="B/D/F=1951-1973"/>
</dbReference>
<dbReference type="PDB" id="6QST">
    <property type="method" value="X-ray"/>
    <property type="resolution" value="2.10 A"/>
    <property type="chains" value="A/B/C/D=1081-1197"/>
</dbReference>
<dbReference type="PDB" id="6SQE">
    <property type="method" value="X-ray"/>
    <property type="resolution" value="1.51 A"/>
    <property type="chains" value="A=1081-1197"/>
</dbReference>
<dbReference type="PDB" id="6SQF">
    <property type="method" value="X-ray"/>
    <property type="resolution" value="2.01 A"/>
    <property type="chains" value="A=1081-1197"/>
</dbReference>
<dbReference type="PDB" id="6SQM">
    <property type="method" value="X-ray"/>
    <property type="resolution" value="1.80 A"/>
    <property type="chains" value="A/B/C=1081-1197"/>
</dbReference>
<dbReference type="PDB" id="6SXX">
    <property type="method" value="X-ray"/>
    <property type="resolution" value="2.01 A"/>
    <property type="chains" value="A/B=1081-1197"/>
</dbReference>
<dbReference type="PDB" id="6YIJ">
    <property type="method" value="X-ray"/>
    <property type="resolution" value="2.20 A"/>
    <property type="chains" value="A/B/C/D/E/F/G=1081-1197"/>
</dbReference>
<dbReference type="PDB" id="6YIK">
    <property type="method" value="X-ray"/>
    <property type="resolution" value="1.70 A"/>
    <property type="chains" value="A/B/C=1081-1197"/>
</dbReference>
<dbReference type="PDB" id="6YIL">
    <property type="method" value="X-ray"/>
    <property type="resolution" value="1.22 A"/>
    <property type="chains" value="A=1081-1197"/>
</dbReference>
<dbReference type="PDB" id="6YIM">
    <property type="method" value="X-ray"/>
    <property type="resolution" value="1.23 A"/>
    <property type="chains" value="A=1081-1197"/>
</dbReference>
<dbReference type="PDB" id="7CO1">
    <property type="method" value="X-ray"/>
    <property type="resolution" value="3.30 A"/>
    <property type="chains" value="B/D/F=1951-1973"/>
</dbReference>
<dbReference type="PDB" id="7EVJ">
    <property type="method" value="X-ray"/>
    <property type="resolution" value="2.57 A"/>
    <property type="chains" value="A=1081-1197"/>
</dbReference>
<dbReference type="PDB" id="7JFL">
    <property type="method" value="X-ray"/>
    <property type="resolution" value="1.68 A"/>
    <property type="chains" value="C/D=2065-2111"/>
</dbReference>
<dbReference type="PDB" id="7JFM">
    <property type="method" value="X-ray"/>
    <property type="resolution" value="2.23 A"/>
    <property type="chains" value="C/D=2065-2111"/>
</dbReference>
<dbReference type="PDB" id="7JUO">
    <property type="method" value="X-ray"/>
    <property type="resolution" value="2.20 A"/>
    <property type="chains" value="A/B/C/D/E/F/G/H=1082-1197"/>
</dbReference>
<dbReference type="PDB" id="7KPY">
    <property type="method" value="X-ray"/>
    <property type="resolution" value="1.70 A"/>
    <property type="chains" value="A/B=1082-1197"/>
</dbReference>
<dbReference type="PDB" id="7RLE">
    <property type="method" value="X-ray"/>
    <property type="resolution" value="2.50 A"/>
    <property type="chains" value="B/D=57-80"/>
</dbReference>
<dbReference type="PDB" id="7TB3">
    <property type="method" value="EM"/>
    <property type="resolution" value="2.57 A"/>
    <property type="chains" value="A/B/C/D/E/F/G/H/I/J/K/L/M/N/O/P/Q/R/S/T/U/V/W/X=587-668"/>
</dbReference>
<dbReference type="PDB" id="7TBH">
    <property type="method" value="EM"/>
    <property type="resolution" value="2.30 A"/>
    <property type="chains" value="A/B/C/D/E/F/G/H/I/J/K/L/M/N/O/P/Q/R/S/T/U/V/W/X=587-668"/>
</dbReference>
<dbReference type="PDB" id="7UGE">
    <property type="method" value="X-ray"/>
    <property type="resolution" value="2.00 A"/>
    <property type="chains" value="A/B=1082-1197"/>
</dbReference>
<dbReference type="PDB" id="7UGL">
    <property type="method" value="X-ray"/>
    <property type="resolution" value="1.50 A"/>
    <property type="chains" value="A/B=1082-1197"/>
</dbReference>
<dbReference type="PDB" id="7WX2">
    <property type="method" value="X-ray"/>
    <property type="resolution" value="1.24 A"/>
    <property type="chains" value="A=1081-1197"/>
</dbReference>
<dbReference type="PDB" id="7XH6">
    <property type="method" value="X-ray"/>
    <property type="resolution" value="1.75 A"/>
    <property type="chains" value="A/B=1081-1197"/>
</dbReference>
<dbReference type="PDB" id="7XHE">
    <property type="method" value="X-ray"/>
    <property type="resolution" value="1.59 A"/>
    <property type="chains" value="A/B=1081-1197"/>
</dbReference>
<dbReference type="PDB" id="7XI0">
    <property type="method" value="X-ray"/>
    <property type="resolution" value="1.62 A"/>
    <property type="chains" value="A/B=1081-1197"/>
</dbReference>
<dbReference type="PDB" id="7XIJ">
    <property type="method" value="X-ray"/>
    <property type="resolution" value="1.82 A"/>
    <property type="chains" value="A=1081-1197"/>
</dbReference>
<dbReference type="PDB" id="7XM7">
    <property type="method" value="X-ray"/>
    <property type="resolution" value="2.36 A"/>
    <property type="chains" value="A/B/C/D=1081-1197"/>
</dbReference>
<dbReference type="PDB" id="7XNE">
    <property type="method" value="X-ray"/>
    <property type="resolution" value="2.17 A"/>
    <property type="chains" value="A/B=1081-1197"/>
</dbReference>
<dbReference type="PDB" id="7XNG">
    <property type="method" value="X-ray"/>
    <property type="resolution" value="2.35 A"/>
    <property type="chains" value="A/B=1081-1197"/>
</dbReference>
<dbReference type="PDB" id="8FUP">
    <property type="method" value="X-ray"/>
    <property type="resolution" value="1.70 A"/>
    <property type="chains" value="A/B=1082-1197"/>
</dbReference>
<dbReference type="PDB" id="8FV2">
    <property type="method" value="X-ray"/>
    <property type="resolution" value="1.87 A"/>
    <property type="chains" value="A/B/C/D=1082-1197"/>
</dbReference>
<dbReference type="PDB" id="8FXA">
    <property type="method" value="X-ray"/>
    <property type="resolution" value="1.65 A"/>
    <property type="chains" value="A/B=1082-1197"/>
</dbReference>
<dbReference type="PDB" id="8FXE">
    <property type="method" value="X-ray"/>
    <property type="resolution" value="1.55 A"/>
    <property type="chains" value="A=1081-1197"/>
</dbReference>
<dbReference type="PDB" id="8FXN">
    <property type="method" value="X-ray"/>
    <property type="resolution" value="2.00 A"/>
    <property type="chains" value="A=1082-1197"/>
</dbReference>
<dbReference type="PDB" id="8FXO">
    <property type="method" value="X-ray"/>
    <property type="resolution" value="1.74 A"/>
    <property type="chains" value="A=1082-1197"/>
</dbReference>
<dbReference type="PDB" id="8G6T">
    <property type="method" value="X-ray"/>
    <property type="resolution" value="1.75 A"/>
    <property type="chains" value="A/B/C/D=1082-1197"/>
</dbReference>
<dbReference type="PDB" id="8GA2">
    <property type="method" value="X-ray"/>
    <property type="resolution" value="1.85 A"/>
    <property type="chains" value="A/B/C/D=1082-1197"/>
</dbReference>
<dbReference type="PDB" id="8HAL">
    <property type="method" value="EM"/>
    <property type="resolution" value="4.40 A"/>
    <property type="chains" value="K=1084-1873"/>
</dbReference>
<dbReference type="PDB" id="8HAM">
    <property type="method" value="EM"/>
    <property type="resolution" value="4.50 A"/>
    <property type="chains" value="K=1084-1873"/>
</dbReference>
<dbReference type="PDB" id="8HAN">
    <property type="method" value="EM"/>
    <property type="resolution" value="4.20 A"/>
    <property type="chains" value="K=1084-1873"/>
</dbReference>
<dbReference type="PDB" id="9J6O">
    <property type="method" value="X-ray"/>
    <property type="resolution" value="2.67 A"/>
    <property type="chains" value="A=1081-1197"/>
</dbReference>
<dbReference type="PDB" id="9JUU">
    <property type="method" value="X-ray"/>
    <property type="resolution" value="1.48 A"/>
    <property type="chains" value="A=1081-1197"/>
</dbReference>
<dbReference type="PDB" id="9JUY">
    <property type="method" value="X-ray"/>
    <property type="resolution" value="1.42 A"/>
    <property type="chains" value="A=1081-1197"/>
</dbReference>
<dbReference type="PDBsum" id="1JSP"/>
<dbReference type="PDBsum" id="1LIQ"/>
<dbReference type="PDBsum" id="1RDT"/>
<dbReference type="PDBsum" id="1WO3"/>
<dbReference type="PDBsum" id="1WO4"/>
<dbReference type="PDBsum" id="1WO5"/>
<dbReference type="PDBsum" id="1WO6"/>
<dbReference type="PDBsum" id="1WO7"/>
<dbReference type="PDBsum" id="1ZOQ"/>
<dbReference type="PDBsum" id="2D82"/>
<dbReference type="PDBsum" id="2KJE"/>
<dbReference type="PDBsum" id="2KWF"/>
<dbReference type="PDBsum" id="2L84"/>
<dbReference type="PDBsum" id="2L85"/>
<dbReference type="PDBsum" id="2LXS"/>
<dbReference type="PDBsum" id="2LXT"/>
<dbReference type="PDBsum" id="2N1A"/>
<dbReference type="PDBsum" id="2RNY"/>
<dbReference type="PDBsum" id="3DWY"/>
<dbReference type="PDBsum" id="3P1C"/>
<dbReference type="PDBsum" id="3P1D"/>
<dbReference type="PDBsum" id="3P1E"/>
<dbReference type="PDBsum" id="3P1F"/>
<dbReference type="PDBsum" id="3SVH"/>
<dbReference type="PDBsum" id="4A9K"/>
<dbReference type="PDBsum" id="4N3W"/>
<dbReference type="PDBsum" id="4N4F"/>
<dbReference type="PDBsum" id="4NR4"/>
<dbReference type="PDBsum" id="4NR5"/>
<dbReference type="PDBsum" id="4NR6"/>
<dbReference type="PDBsum" id="4NR7"/>
<dbReference type="PDBsum" id="4NYV"/>
<dbReference type="PDBsum" id="4NYW"/>
<dbReference type="PDBsum" id="4NYX"/>
<dbReference type="PDBsum" id="4OUF"/>
<dbReference type="PDBsum" id="4TQN"/>
<dbReference type="PDBsum" id="4TS8"/>
<dbReference type="PDBsum" id="4WHU"/>
<dbReference type="PDBsum" id="4YK0"/>
<dbReference type="PDBsum" id="5CGP"/>
<dbReference type="PDBsum" id="5DBM"/>
<dbReference type="PDBsum" id="5EIC"/>
<dbReference type="PDBsum" id="5ENG"/>
<dbReference type="PDBsum" id="5EP7"/>
<dbReference type="PDBsum" id="5GH9"/>
<dbReference type="PDBsum" id="5H85"/>
<dbReference type="PDBsum" id="5I83"/>
<dbReference type="PDBsum" id="5I86"/>
<dbReference type="PDBsum" id="5I89"/>
<dbReference type="PDBsum" id="5I8B"/>
<dbReference type="PDBsum" id="5I8G"/>
<dbReference type="PDBsum" id="5J0D"/>
<dbReference type="PDBsum" id="5JEM"/>
<dbReference type="PDBsum" id="5KTU"/>
<dbReference type="PDBsum" id="5KTW"/>
<dbReference type="PDBsum" id="5KTX"/>
<dbReference type="PDBsum" id="5LPJ"/>
<dbReference type="PDBsum" id="5LPL"/>
<dbReference type="PDBsum" id="5MME"/>
<dbReference type="PDBsum" id="5MMG"/>
<dbReference type="PDBsum" id="5MPK"/>
<dbReference type="PDBsum" id="5MPN"/>
<dbReference type="PDBsum" id="5MPZ"/>
<dbReference type="PDBsum" id="5MQE"/>
<dbReference type="PDBsum" id="5MQG"/>
<dbReference type="PDBsum" id="5MQK"/>
<dbReference type="PDBsum" id="5NLK"/>
<dbReference type="PDBsum" id="5NRW"/>
<dbReference type="PDBsum" id="5NU3"/>
<dbReference type="PDBsum" id="5OWK"/>
<dbReference type="PDBsum" id="5SVH"/>
<dbReference type="PDBsum" id="5TB6"/>
<dbReference type="PDBsum" id="5W0E"/>
<dbReference type="PDBsum" id="5W0F"/>
<dbReference type="PDBsum" id="5W0L"/>
<dbReference type="PDBsum" id="5W0Q"/>
<dbReference type="PDBsum" id="5XXH"/>
<dbReference type="PDBsum" id="6ALB"/>
<dbReference type="PDBsum" id="6ALC"/>
<dbReference type="PDBsum" id="6AXQ"/>
<dbReference type="PDBsum" id="6AY3"/>
<dbReference type="PDBsum" id="6AY5"/>
<dbReference type="PDBsum" id="6DMK"/>
<dbReference type="PDBsum" id="6ES5"/>
<dbReference type="PDBsum" id="6ES6"/>
<dbReference type="PDBsum" id="6ES7"/>
<dbReference type="PDBsum" id="6FQO"/>
<dbReference type="PDBsum" id="6FQT"/>
<dbReference type="PDBsum" id="6FQU"/>
<dbReference type="PDBsum" id="6FR0"/>
<dbReference type="PDBsum" id="6FRF"/>
<dbReference type="PDBsum" id="6LQX"/>
<dbReference type="PDBsum" id="6M64"/>
<dbReference type="PDBsum" id="6QST"/>
<dbReference type="PDBsum" id="6SQE"/>
<dbReference type="PDBsum" id="6SQF"/>
<dbReference type="PDBsum" id="6SQM"/>
<dbReference type="PDBsum" id="6SXX"/>
<dbReference type="PDBsum" id="6YIJ"/>
<dbReference type="PDBsum" id="6YIK"/>
<dbReference type="PDBsum" id="6YIL"/>
<dbReference type="PDBsum" id="6YIM"/>
<dbReference type="PDBsum" id="7CO1"/>
<dbReference type="PDBsum" id="7EVJ"/>
<dbReference type="PDBsum" id="7JFL"/>
<dbReference type="PDBsum" id="7JFM"/>
<dbReference type="PDBsum" id="7JUO"/>
<dbReference type="PDBsum" id="7KPY"/>
<dbReference type="PDBsum" id="7RLE"/>
<dbReference type="PDBsum" id="7TB3"/>
<dbReference type="PDBsum" id="7TBH"/>
<dbReference type="PDBsum" id="7UGE"/>
<dbReference type="PDBsum" id="7UGL"/>
<dbReference type="PDBsum" id="7WX2"/>
<dbReference type="PDBsum" id="7XH6"/>
<dbReference type="PDBsum" id="7XHE"/>
<dbReference type="PDBsum" id="7XI0"/>
<dbReference type="PDBsum" id="7XIJ"/>
<dbReference type="PDBsum" id="7XM7"/>
<dbReference type="PDBsum" id="7XNE"/>
<dbReference type="PDBsum" id="7XNG"/>
<dbReference type="PDBsum" id="8FUP"/>
<dbReference type="PDBsum" id="8FV2"/>
<dbReference type="PDBsum" id="8FXA"/>
<dbReference type="PDBsum" id="8FXE"/>
<dbReference type="PDBsum" id="8FXN"/>
<dbReference type="PDBsum" id="8FXO"/>
<dbReference type="PDBsum" id="8G6T"/>
<dbReference type="PDBsum" id="8GA2"/>
<dbReference type="PDBsum" id="8HAL"/>
<dbReference type="PDBsum" id="8HAM"/>
<dbReference type="PDBsum" id="8HAN"/>
<dbReference type="PDBsum" id="9J6O"/>
<dbReference type="PDBsum" id="9JUU"/>
<dbReference type="PDBsum" id="9JUY"/>
<dbReference type="BMRB" id="Q92793"/>
<dbReference type="EMDB" id="EMD-34595"/>
<dbReference type="EMDB" id="EMD-34596"/>
<dbReference type="EMDB" id="EMD-34597"/>
<dbReference type="SMR" id="Q92793"/>
<dbReference type="BioGRID" id="107777">
    <property type="interactions" value="537"/>
</dbReference>
<dbReference type="CORUM" id="Q92793"/>
<dbReference type="DIP" id="DIP-952N"/>
<dbReference type="ELM" id="Q92793"/>
<dbReference type="FunCoup" id="Q92793">
    <property type="interactions" value="3989"/>
</dbReference>
<dbReference type="IntAct" id="Q92793">
    <property type="interactions" value="136"/>
</dbReference>
<dbReference type="MINT" id="Q92793"/>
<dbReference type="STRING" id="9606.ENSP00000262367"/>
<dbReference type="BindingDB" id="Q92793"/>
<dbReference type="ChEMBL" id="CHEMBL5747"/>
<dbReference type="DrugBank" id="DB08655">
    <property type="generic name" value="9-ACETYL-2,3,4,9-TETRAHYDRO-1H-CARBAZOL-1-ONE"/>
</dbReference>
<dbReference type="DrugBank" id="DB02587">
    <property type="generic name" value="Colforsin"/>
</dbReference>
<dbReference type="DrugBank" id="DB15034">
    <property type="generic name" value="PRI-724"/>
</dbReference>
<dbReference type="GuidetoPHARMACOLOGY" id="2734"/>
<dbReference type="GlyCosmos" id="Q92793">
    <property type="glycosylation" value="12 sites, 1 glycan"/>
</dbReference>
<dbReference type="GlyGen" id="Q92793">
    <property type="glycosylation" value="29 sites, 1 N-linked glycan (1 site), 1 O-linked glycan (24 sites)"/>
</dbReference>
<dbReference type="iPTMnet" id="Q92793"/>
<dbReference type="PhosphoSitePlus" id="Q92793"/>
<dbReference type="BioMuta" id="CREBBP"/>
<dbReference type="DMDM" id="116241283"/>
<dbReference type="jPOST" id="Q92793"/>
<dbReference type="MassIVE" id="Q92793"/>
<dbReference type="PaxDb" id="9606-ENSP00000262367"/>
<dbReference type="PeptideAtlas" id="Q92793"/>
<dbReference type="ProteomicsDB" id="62237"/>
<dbReference type="ProteomicsDB" id="75472">
    <molecule id="Q92793-1"/>
</dbReference>
<dbReference type="Pumba" id="Q92793"/>
<dbReference type="Antibodypedia" id="3781">
    <property type="antibodies" value="730 antibodies from 41 providers"/>
</dbReference>
<dbReference type="DNASU" id="1387"/>
<dbReference type="Ensembl" id="ENST00000262367.10">
    <molecule id="Q92793-1"/>
    <property type="protein sequence ID" value="ENSP00000262367.5"/>
    <property type="gene ID" value="ENSG00000005339.15"/>
</dbReference>
<dbReference type="Ensembl" id="ENST00000382070.7">
    <molecule id="Q92793-2"/>
    <property type="protein sequence ID" value="ENSP00000371502.3"/>
    <property type="gene ID" value="ENSG00000005339.15"/>
</dbReference>
<dbReference type="GeneID" id="1387"/>
<dbReference type="KEGG" id="hsa:1387"/>
<dbReference type="MANE-Select" id="ENST00000262367.10">
    <property type="protein sequence ID" value="ENSP00000262367.5"/>
    <property type="RefSeq nucleotide sequence ID" value="NM_004380.3"/>
    <property type="RefSeq protein sequence ID" value="NP_004371.2"/>
</dbReference>
<dbReference type="UCSC" id="uc002cvv.4">
    <molecule id="Q92793-1"/>
    <property type="organism name" value="human"/>
</dbReference>
<dbReference type="AGR" id="HGNC:2348"/>
<dbReference type="CTD" id="1387"/>
<dbReference type="DisGeNET" id="1387"/>
<dbReference type="GeneCards" id="CREBBP"/>
<dbReference type="GeneReviews" id="CREBBP"/>
<dbReference type="HGNC" id="HGNC:2348">
    <property type="gene designation" value="CREBBP"/>
</dbReference>
<dbReference type="HPA" id="ENSG00000005339">
    <property type="expression patterns" value="Low tissue specificity"/>
</dbReference>
<dbReference type="MalaCards" id="CREBBP"/>
<dbReference type="MIM" id="180849">
    <property type="type" value="phenotype"/>
</dbReference>
<dbReference type="MIM" id="600140">
    <property type="type" value="gene"/>
</dbReference>
<dbReference type="MIM" id="618332">
    <property type="type" value="phenotype"/>
</dbReference>
<dbReference type="neXtProt" id="NX_Q92793"/>
<dbReference type="OpenTargets" id="ENSG00000005339"/>
<dbReference type="Orphanet" id="370026">
    <property type="disease" value="Acute myeloid leukemia with t(8;16)(p11;p13) translocation"/>
</dbReference>
<dbReference type="Orphanet" id="592574">
    <property type="disease" value="Menke-Hennekam syndrome"/>
</dbReference>
<dbReference type="Orphanet" id="353281">
    <property type="disease" value="Rubinstein-Taybi syndrome due to 16p13.3 microdeletion"/>
</dbReference>
<dbReference type="Orphanet" id="353277">
    <property type="disease" value="Rubinstein-Taybi syndrome due to CREBBP mutations"/>
</dbReference>
<dbReference type="PharmGKB" id="PA26866"/>
<dbReference type="VEuPathDB" id="HostDB:ENSG00000005339"/>
<dbReference type="eggNOG" id="KOG1778">
    <property type="taxonomic scope" value="Eukaryota"/>
</dbReference>
<dbReference type="GeneTree" id="ENSGT00940000155364"/>
<dbReference type="HOGENOM" id="CLU_000162_2_0_1"/>
<dbReference type="InParanoid" id="Q92793"/>
<dbReference type="OMA" id="QPPGTPX"/>
<dbReference type="OrthoDB" id="899at2759"/>
<dbReference type="PAN-GO" id="Q92793">
    <property type="GO annotations" value="7 GO annotations based on evolutionary models"/>
</dbReference>
<dbReference type="PhylomeDB" id="Q92793"/>
<dbReference type="TreeFam" id="TF101097"/>
<dbReference type="BRENDA" id="2.3.1.48">
    <property type="organism ID" value="2681"/>
</dbReference>
<dbReference type="PathwayCommons" id="Q92793"/>
<dbReference type="Reactome" id="R-HSA-1234158">
    <property type="pathway name" value="Regulation of gene expression by Hypoxia-inducible Factor"/>
</dbReference>
<dbReference type="Reactome" id="R-HSA-1368082">
    <property type="pathway name" value="RORA activates gene expression"/>
</dbReference>
<dbReference type="Reactome" id="R-HSA-1368108">
    <property type="pathway name" value="BMAL1:CLOCK,NPAS2 activates circadian gene expression"/>
</dbReference>
<dbReference type="Reactome" id="R-HSA-1912408">
    <property type="pathway name" value="Pre-NOTCH Transcription and Translation"/>
</dbReference>
<dbReference type="Reactome" id="R-HSA-1989781">
    <property type="pathway name" value="PPARA activates gene expression"/>
</dbReference>
<dbReference type="Reactome" id="R-HSA-201722">
    <property type="pathway name" value="Formation of the beta-catenin:TCF transactivating complex"/>
</dbReference>
<dbReference type="Reactome" id="R-HSA-210744">
    <property type="pathway name" value="Regulation of gene expression in late stage (branching morphogenesis) pancreatic bud precursor cells"/>
</dbReference>
<dbReference type="Reactome" id="R-HSA-2122947">
    <property type="pathway name" value="NOTCH1 Intracellular Domain Regulates Transcription"/>
</dbReference>
<dbReference type="Reactome" id="R-HSA-2151201">
    <property type="pathway name" value="Transcriptional activation of mitochondrial biogenesis"/>
</dbReference>
<dbReference type="Reactome" id="R-HSA-2426168">
    <property type="pathway name" value="Activation of gene expression by SREBF (SREBP)"/>
</dbReference>
<dbReference type="Reactome" id="R-HSA-2644606">
    <property type="pathway name" value="Constitutive Signaling by NOTCH1 PEST Domain Mutants"/>
</dbReference>
<dbReference type="Reactome" id="R-HSA-2894862">
    <property type="pathway name" value="Constitutive Signaling by NOTCH1 HD+PEST Domain Mutants"/>
</dbReference>
<dbReference type="Reactome" id="R-HSA-3134973">
    <property type="pathway name" value="LRR FLII-interacting protein 1 (LRRFIP1) activates type I IFN production"/>
</dbReference>
<dbReference type="Reactome" id="R-HSA-3214847">
    <property type="pathway name" value="HATs acetylate histones"/>
</dbReference>
<dbReference type="Reactome" id="R-HSA-3371568">
    <property type="pathway name" value="Attenuation phase"/>
</dbReference>
<dbReference type="Reactome" id="R-HSA-350054">
    <property type="pathway name" value="Notch-HLH transcription pathway"/>
</dbReference>
<dbReference type="Reactome" id="R-HSA-381340">
    <property type="pathway name" value="Transcriptional regulation of white adipocyte differentiation"/>
</dbReference>
<dbReference type="Reactome" id="R-HSA-3899300">
    <property type="pathway name" value="SUMOylation of transcription cofactors"/>
</dbReference>
<dbReference type="Reactome" id="R-HSA-400206">
    <property type="pathway name" value="Regulation of lipid metabolism by PPARalpha"/>
</dbReference>
<dbReference type="Reactome" id="R-HSA-400253">
    <property type="pathway name" value="Circadian Clock"/>
</dbReference>
<dbReference type="Reactome" id="R-HSA-5617472">
    <property type="pathway name" value="Activation of anterior HOX genes in hindbrain development during early embryogenesis"/>
</dbReference>
<dbReference type="Reactome" id="R-HSA-5621575">
    <property type="pathway name" value="CD209 (DC-SIGN) signaling"/>
</dbReference>
<dbReference type="Reactome" id="R-HSA-6803204">
    <property type="pathway name" value="TP53 Regulates Transcription of Genes Involved in Cytochrome C Release"/>
</dbReference>
<dbReference type="Reactome" id="R-HSA-8866907">
    <property type="pathway name" value="Activation of the TFAP2 (AP-2) family of transcription factors"/>
</dbReference>
<dbReference type="Reactome" id="R-HSA-8939246">
    <property type="pathway name" value="RUNX1 regulates transcription of genes involved in differentiation of myeloid cells"/>
</dbReference>
<dbReference type="Reactome" id="R-HSA-8941856">
    <property type="pathway name" value="RUNX3 regulates NOTCH signaling"/>
</dbReference>
<dbReference type="Reactome" id="R-HSA-9013508">
    <property type="pathway name" value="NOTCH3 Intracellular Domain Regulates Transcription"/>
</dbReference>
<dbReference type="Reactome" id="R-HSA-9013695">
    <property type="pathway name" value="NOTCH4 Intracellular Domain Regulates Transcription"/>
</dbReference>
<dbReference type="Reactome" id="R-HSA-9018519">
    <property type="pathway name" value="Estrogen-dependent gene expression"/>
</dbReference>
<dbReference type="Reactome" id="R-HSA-918233">
    <property type="pathway name" value="TRAF3-dependent IRF activation pathway"/>
</dbReference>
<dbReference type="Reactome" id="R-HSA-933541">
    <property type="pathway name" value="TRAF6 mediated IRF7 activation"/>
</dbReference>
<dbReference type="Reactome" id="R-HSA-9614657">
    <property type="pathway name" value="FOXO-mediated transcription of cell death genes"/>
</dbReference>
<dbReference type="Reactome" id="R-HSA-9617629">
    <property type="pathway name" value="Regulation of FOXO transcriptional activity by acetylation"/>
</dbReference>
<dbReference type="Reactome" id="R-HSA-9705671">
    <property type="pathway name" value="SARS-CoV-2 activates/modulates innate and adaptive immune responses"/>
</dbReference>
<dbReference type="Reactome" id="R-HSA-9707564">
    <property type="pathway name" value="Cytoprotection by HMOX1"/>
</dbReference>
<dbReference type="Reactome" id="R-HSA-9707616">
    <property type="pathway name" value="Heme signaling"/>
</dbReference>
<dbReference type="Reactome" id="R-HSA-9759194">
    <property type="pathway name" value="Nuclear events mediated by NFE2L2"/>
</dbReference>
<dbReference type="Reactome" id="R-HSA-9768919">
    <property type="pathway name" value="NPAS4 regulates expression of target genes"/>
</dbReference>
<dbReference type="Reactome" id="R-HSA-9793380">
    <property type="pathway name" value="Formation of paraxial mesoderm"/>
</dbReference>
<dbReference type="Reactome" id="R-HSA-9818026">
    <property type="pathway name" value="NFE2L2 regulating inflammation associated genes"/>
</dbReference>
<dbReference type="Reactome" id="R-HSA-9818027">
    <property type="pathway name" value="NFE2L2 regulating anti-oxidant/detoxification enzymes"/>
</dbReference>
<dbReference type="Reactome" id="R-HSA-9818028">
    <property type="pathway name" value="NFE2L2 regulates pentose phosphate pathway genes"/>
</dbReference>
<dbReference type="Reactome" id="R-HSA-9818030">
    <property type="pathway name" value="NFE2L2 regulating tumorigenic genes"/>
</dbReference>
<dbReference type="Reactome" id="R-HSA-9818032">
    <property type="pathway name" value="NFE2L2 regulating MDR associated enzymes"/>
</dbReference>
<dbReference type="Reactome" id="R-HSA-9818035">
    <property type="pathway name" value="NFE2L2 regulating ER-stress associated genes"/>
</dbReference>
<dbReference type="Reactome" id="R-HSA-9818749">
    <property type="pathway name" value="Regulation of NFE2L2 gene expression"/>
</dbReference>
<dbReference type="Reactome" id="R-HSA-9819196">
    <property type="pathway name" value="Zygotic genome activation (ZGA)"/>
</dbReference>
<dbReference type="Reactome" id="R-HSA-9833109">
    <property type="pathway name" value="Evasion by RSV of host interferon responses"/>
</dbReference>
<dbReference type="Reactome" id="R-HSA-9841922">
    <property type="pathway name" value="MLL4 and MLL3 complexes regulate expression of PPARG target genes in adipogenesis and hepatic steatosis"/>
</dbReference>
<dbReference type="Reactome" id="R-HSA-9856649">
    <property type="pathway name" value="Transcriptional and post-translational regulation of MITF-M expression and activity"/>
</dbReference>
<dbReference type="SignaLink" id="Q92793"/>
<dbReference type="SIGNOR" id="Q92793"/>
<dbReference type="BioGRID-ORCS" id="1387">
    <property type="hits" value="137 hits in 1212 CRISPR screens"/>
</dbReference>
<dbReference type="CD-CODE" id="6F24707C">
    <property type="entry name" value="Cajal body"/>
</dbReference>
<dbReference type="CD-CODE" id="9E21F925">
    <property type="entry name" value="Synthetic Condensate 000351"/>
</dbReference>
<dbReference type="CD-CODE" id="B5B9A610">
    <property type="entry name" value="PML body"/>
</dbReference>
<dbReference type="ChiTaRS" id="CREBBP">
    <property type="organism name" value="human"/>
</dbReference>
<dbReference type="EvolutionaryTrace" id="Q92793"/>
<dbReference type="GeneWiki" id="CREB-binding_protein"/>
<dbReference type="GenomeRNAi" id="1387"/>
<dbReference type="Pharos" id="Q92793">
    <property type="development level" value="Tchem"/>
</dbReference>
<dbReference type="PRO" id="PR:Q92793"/>
<dbReference type="Proteomes" id="UP000005640">
    <property type="component" value="Chromosome 16"/>
</dbReference>
<dbReference type="RNAct" id="Q92793">
    <property type="molecule type" value="protein"/>
</dbReference>
<dbReference type="Bgee" id="ENSG00000005339">
    <property type="expression patterns" value="Expressed in sural nerve and 207 other cell types or tissues"/>
</dbReference>
<dbReference type="ExpressionAtlas" id="Q92793">
    <property type="expression patterns" value="baseline and differential"/>
</dbReference>
<dbReference type="GO" id="GO:0000785">
    <property type="term" value="C:chromatin"/>
    <property type="evidence" value="ECO:0000314"/>
    <property type="project" value="BHF-UCL"/>
</dbReference>
<dbReference type="GO" id="GO:0005737">
    <property type="term" value="C:cytoplasm"/>
    <property type="evidence" value="ECO:0000314"/>
    <property type="project" value="UniProtKB"/>
</dbReference>
<dbReference type="GO" id="GO:0005829">
    <property type="term" value="C:cytosol"/>
    <property type="evidence" value="ECO:0000304"/>
    <property type="project" value="Reactome"/>
</dbReference>
<dbReference type="GO" id="GO:0000123">
    <property type="term" value="C:histone acetyltransferase complex"/>
    <property type="evidence" value="ECO:0000318"/>
    <property type="project" value="GO_Central"/>
</dbReference>
<dbReference type="GO" id="GO:0016604">
    <property type="term" value="C:nuclear body"/>
    <property type="evidence" value="ECO:0000314"/>
    <property type="project" value="HPA"/>
</dbReference>
<dbReference type="GO" id="GO:0005654">
    <property type="term" value="C:nucleoplasm"/>
    <property type="evidence" value="ECO:0000314"/>
    <property type="project" value="HPA"/>
</dbReference>
<dbReference type="GO" id="GO:0005634">
    <property type="term" value="C:nucleus"/>
    <property type="evidence" value="ECO:0000314"/>
    <property type="project" value="UniProtKB"/>
</dbReference>
<dbReference type="GO" id="GO:0005667">
    <property type="term" value="C:transcription regulator complex"/>
    <property type="evidence" value="ECO:0000318"/>
    <property type="project" value="GO_Central"/>
</dbReference>
<dbReference type="GO" id="GO:0016407">
    <property type="term" value="F:acetyltransferase activity"/>
    <property type="evidence" value="ECO:0000314"/>
    <property type="project" value="UniProtKB"/>
</dbReference>
<dbReference type="GO" id="GO:0003682">
    <property type="term" value="F:chromatin binding"/>
    <property type="evidence" value="ECO:0000314"/>
    <property type="project" value="UniProtKB"/>
</dbReference>
<dbReference type="GO" id="GO:0031490">
    <property type="term" value="F:chromatin DNA binding"/>
    <property type="evidence" value="ECO:0000318"/>
    <property type="project" value="GO_Central"/>
</dbReference>
<dbReference type="GO" id="GO:0003684">
    <property type="term" value="F:damaged DNA binding"/>
    <property type="evidence" value="ECO:0000314"/>
    <property type="project" value="UniProtKB"/>
</dbReference>
<dbReference type="GO" id="GO:0140297">
    <property type="term" value="F:DNA-binding transcription factor binding"/>
    <property type="evidence" value="ECO:0000353"/>
    <property type="project" value="UniProtKB"/>
</dbReference>
<dbReference type="GO" id="GO:0004402">
    <property type="term" value="F:histone acetyltransferase activity"/>
    <property type="evidence" value="ECO:0000314"/>
    <property type="project" value="UniProtKB"/>
</dbReference>
<dbReference type="GO" id="GO:0043993">
    <property type="term" value="F:histone H3K18 acetyltransferase activity"/>
    <property type="evidence" value="ECO:0000314"/>
    <property type="project" value="UniProtKB"/>
</dbReference>
<dbReference type="GO" id="GO:0044017">
    <property type="term" value="F:histone H3K27 acetyltransferase activity"/>
    <property type="evidence" value="ECO:0000314"/>
    <property type="project" value="UniProtKB"/>
</dbReference>
<dbReference type="GO" id="GO:0043426">
    <property type="term" value="F:MRF binding"/>
    <property type="evidence" value="ECO:0000314"/>
    <property type="project" value="UniProtKB"/>
</dbReference>
<dbReference type="GO" id="GO:0002039">
    <property type="term" value="F:p53 binding"/>
    <property type="evidence" value="ECO:0000353"/>
    <property type="project" value="UniProtKB"/>
</dbReference>
<dbReference type="GO" id="GO:0120300">
    <property type="term" value="F:peptide lactyltransferase (CoA-dependent) activity"/>
    <property type="evidence" value="ECO:0000314"/>
    <property type="project" value="UniProtKB"/>
</dbReference>
<dbReference type="GO" id="GO:0061733">
    <property type="term" value="F:protein-lysine-acetyltransferase activity"/>
    <property type="evidence" value="ECO:0000314"/>
    <property type="project" value="UniProtKB"/>
</dbReference>
<dbReference type="GO" id="GO:0061629">
    <property type="term" value="F:RNA polymerase II-specific DNA-binding transcription factor binding"/>
    <property type="evidence" value="ECO:0000353"/>
    <property type="project" value="BHF-UCL"/>
</dbReference>
<dbReference type="GO" id="GO:0048156">
    <property type="term" value="F:tau protein binding"/>
    <property type="evidence" value="ECO:0000304"/>
    <property type="project" value="ARUK-UCL"/>
</dbReference>
<dbReference type="GO" id="GO:0003713">
    <property type="term" value="F:transcription coactivator activity"/>
    <property type="evidence" value="ECO:0000314"/>
    <property type="project" value="UniProtKB"/>
</dbReference>
<dbReference type="GO" id="GO:0001223">
    <property type="term" value="F:transcription coactivator binding"/>
    <property type="evidence" value="ECO:0000353"/>
    <property type="project" value="UniProtKB"/>
</dbReference>
<dbReference type="GO" id="GO:0003714">
    <property type="term" value="F:transcription corepressor activity"/>
    <property type="evidence" value="ECO:0000314"/>
    <property type="project" value="BHF-UCL"/>
</dbReference>
<dbReference type="GO" id="GO:0008270">
    <property type="term" value="F:zinc ion binding"/>
    <property type="evidence" value="ECO:0007669"/>
    <property type="project" value="UniProtKB-KW"/>
</dbReference>
<dbReference type="GO" id="GO:0007249">
    <property type="term" value="P:canonical NF-kappaB signal transduction"/>
    <property type="evidence" value="ECO:0000314"/>
    <property type="project" value="UniProt"/>
</dbReference>
<dbReference type="GO" id="GO:0031669">
    <property type="term" value="P:cellular response to nutrient levels"/>
    <property type="evidence" value="ECO:0000314"/>
    <property type="project" value="UniProt"/>
</dbReference>
<dbReference type="GO" id="GO:0034644">
    <property type="term" value="P:cellular response to UV"/>
    <property type="evidence" value="ECO:0000314"/>
    <property type="project" value="UniProtKB"/>
</dbReference>
<dbReference type="GO" id="GO:0042733">
    <property type="term" value="P:embryonic digit morphogenesis"/>
    <property type="evidence" value="ECO:0000304"/>
    <property type="project" value="BHF-UCL"/>
</dbReference>
<dbReference type="GO" id="GO:0042592">
    <property type="term" value="P:homeostatic process"/>
    <property type="evidence" value="ECO:0000303"/>
    <property type="project" value="UniProtKB"/>
</dbReference>
<dbReference type="GO" id="GO:0018076">
    <property type="term" value="P:N-terminal peptidyl-lysine acetylation"/>
    <property type="evidence" value="ECO:0000314"/>
    <property type="project" value="UniProtKB"/>
</dbReference>
<dbReference type="GO" id="GO:0016479">
    <property type="term" value="P:negative regulation of transcription by RNA polymerase I"/>
    <property type="evidence" value="ECO:0000314"/>
    <property type="project" value="UniProtKB"/>
</dbReference>
<dbReference type="GO" id="GO:0000122">
    <property type="term" value="P:negative regulation of transcription by RNA polymerase II"/>
    <property type="evidence" value="ECO:0000314"/>
    <property type="project" value="BHF-UCL"/>
</dbReference>
<dbReference type="GO" id="GO:0045893">
    <property type="term" value="P:positive regulation of DNA-templated transcription"/>
    <property type="evidence" value="ECO:0000314"/>
    <property type="project" value="UniProtKB"/>
</dbReference>
<dbReference type="GO" id="GO:1905168">
    <property type="term" value="P:positive regulation of double-strand break repair via homologous recombination"/>
    <property type="evidence" value="ECO:0000314"/>
    <property type="project" value="UniProtKB"/>
</dbReference>
<dbReference type="GO" id="GO:1900182">
    <property type="term" value="P:positive regulation of protein localization to nucleus"/>
    <property type="evidence" value="ECO:0000314"/>
    <property type="project" value="UniProt"/>
</dbReference>
<dbReference type="GO" id="GO:0045944">
    <property type="term" value="P:positive regulation of transcription by RNA polymerase II"/>
    <property type="evidence" value="ECO:0000314"/>
    <property type="project" value="HGNC-UCL"/>
</dbReference>
<dbReference type="GO" id="GO:0030511">
    <property type="term" value="P:positive regulation of transforming growth factor beta receptor signaling pathway"/>
    <property type="evidence" value="ECO:0000315"/>
    <property type="project" value="UniProtKB"/>
</dbReference>
<dbReference type="GO" id="GO:0006473">
    <property type="term" value="P:protein acetylation"/>
    <property type="evidence" value="ECO:0000314"/>
    <property type="project" value="UniProtKB"/>
</dbReference>
<dbReference type="GO" id="GO:0031648">
    <property type="term" value="P:protein destabilization"/>
    <property type="evidence" value="ECO:0000315"/>
    <property type="project" value="UniProtKB"/>
</dbReference>
<dbReference type="GO" id="GO:0065003">
    <property type="term" value="P:protein-containing complex assembly"/>
    <property type="evidence" value="ECO:0000304"/>
    <property type="project" value="ProtInc"/>
</dbReference>
<dbReference type="GO" id="GO:1900034">
    <property type="term" value="P:regulation of cellular response to heat"/>
    <property type="evidence" value="ECO:0000304"/>
    <property type="project" value="Reactome"/>
</dbReference>
<dbReference type="GO" id="GO:0006355">
    <property type="term" value="P:regulation of DNA-templated transcription"/>
    <property type="evidence" value="ECO:0000304"/>
    <property type="project" value="UniProtKB"/>
</dbReference>
<dbReference type="GO" id="GO:0008589">
    <property type="term" value="P:regulation of smoothened signaling pathway"/>
    <property type="evidence" value="ECO:0000304"/>
    <property type="project" value="BHF-UCL"/>
</dbReference>
<dbReference type="GO" id="GO:0001666">
    <property type="term" value="P:response to hypoxia"/>
    <property type="evidence" value="ECO:0000304"/>
    <property type="project" value="UniProtKB"/>
</dbReference>
<dbReference type="GO" id="GO:0048511">
    <property type="term" value="P:rhythmic process"/>
    <property type="evidence" value="ECO:0007669"/>
    <property type="project" value="UniProtKB-KW"/>
</dbReference>
<dbReference type="GO" id="GO:0007165">
    <property type="term" value="P:signal transduction"/>
    <property type="evidence" value="ECO:0000304"/>
    <property type="project" value="ProtInc"/>
</dbReference>
<dbReference type="GO" id="GO:0002223">
    <property type="term" value="P:stimulatory C-type lectin receptor signaling pathway"/>
    <property type="evidence" value="ECO:0000304"/>
    <property type="project" value="Reactome"/>
</dbReference>
<dbReference type="CDD" id="cd05495">
    <property type="entry name" value="Bromo_cbp_like"/>
    <property type="match status" value="1"/>
</dbReference>
<dbReference type="CDD" id="cd20910">
    <property type="entry name" value="NCBD_CREBBP-p300_like"/>
    <property type="match status" value="1"/>
</dbReference>
<dbReference type="CDD" id="cd15557">
    <property type="entry name" value="PHD_CBP_p300"/>
    <property type="match status" value="1"/>
</dbReference>
<dbReference type="CDD" id="cd15802">
    <property type="entry name" value="RING_CBP-p300"/>
    <property type="match status" value="1"/>
</dbReference>
<dbReference type="CDD" id="cd02337">
    <property type="entry name" value="ZZ_CBP"/>
    <property type="match status" value="1"/>
</dbReference>
<dbReference type="DisProt" id="DP02004"/>
<dbReference type="FunFam" id="1.10.246.20:FF:000001">
    <property type="entry name" value="E1A binding protein p300"/>
    <property type="match status" value="1"/>
</dbReference>
<dbReference type="FunFam" id="1.20.1020.10:FF:000001">
    <property type="entry name" value="E1A binding protein p300"/>
    <property type="match status" value="1"/>
</dbReference>
<dbReference type="FunFam" id="1.20.1020.10:FF:000002">
    <property type="entry name" value="E1A binding protein p300"/>
    <property type="match status" value="1"/>
</dbReference>
<dbReference type="FunFam" id="2.10.110.40:FF:000001">
    <property type="entry name" value="E1A binding protein p300"/>
    <property type="match status" value="1"/>
</dbReference>
<dbReference type="FunFam" id="3.30.60.90:FF:000003">
    <property type="entry name" value="E1A binding protein p300"/>
    <property type="match status" value="1"/>
</dbReference>
<dbReference type="FunFam" id="1.20.920.10:FF:000001">
    <property type="entry name" value="Histone acetyltransferase p300"/>
    <property type="match status" value="1"/>
</dbReference>
<dbReference type="FunFam" id="3.30.40.10:FF:000034">
    <property type="entry name" value="Histone acetyltransferase p300"/>
    <property type="match status" value="1"/>
</dbReference>
<dbReference type="Gene3D" id="2.10.110.40">
    <property type="match status" value="1"/>
</dbReference>
<dbReference type="Gene3D" id="3.30.60.90">
    <property type="match status" value="1"/>
</dbReference>
<dbReference type="Gene3D" id="1.20.920.10">
    <property type="entry name" value="Bromodomain-like"/>
    <property type="match status" value="1"/>
</dbReference>
<dbReference type="Gene3D" id="1.10.246.20">
    <property type="entry name" value="Coactivator CBP, KIX domain"/>
    <property type="match status" value="1"/>
</dbReference>
<dbReference type="Gene3D" id="1.10.1630.10">
    <property type="entry name" value="Nuclear receptor coactivator, CREB-bp-like, interlocking domain"/>
    <property type="match status" value="1"/>
</dbReference>
<dbReference type="Gene3D" id="1.20.1020.10">
    <property type="entry name" value="TAZ domain"/>
    <property type="match status" value="2"/>
</dbReference>
<dbReference type="Gene3D" id="3.30.40.10">
    <property type="entry name" value="Zinc/RING finger domain, C3HC4 (zinc finger)"/>
    <property type="match status" value="1"/>
</dbReference>
<dbReference type="IDEAL" id="IID00092"/>
<dbReference type="InterPro" id="IPR001487">
    <property type="entry name" value="Bromodomain"/>
</dbReference>
<dbReference type="InterPro" id="IPR036427">
    <property type="entry name" value="Bromodomain-like_sf"/>
</dbReference>
<dbReference type="InterPro" id="IPR018359">
    <property type="entry name" value="Bromodomain_CS"/>
</dbReference>
<dbReference type="InterPro" id="IPR031162">
    <property type="entry name" value="CBP_P300_HAT"/>
</dbReference>
<dbReference type="InterPro" id="IPR013178">
    <property type="entry name" value="Histone_AcTrfase_Rtt109/CBP"/>
</dbReference>
<dbReference type="InterPro" id="IPR003101">
    <property type="entry name" value="KIX_dom"/>
</dbReference>
<dbReference type="InterPro" id="IPR036529">
    <property type="entry name" value="KIX_dom_sf"/>
</dbReference>
<dbReference type="InterPro" id="IPR009110">
    <property type="entry name" value="Nuc_rcpt_coact"/>
</dbReference>
<dbReference type="InterPro" id="IPR014744">
    <property type="entry name" value="Nuc_rcpt_coact_CREBbp"/>
</dbReference>
<dbReference type="InterPro" id="IPR037073">
    <property type="entry name" value="Nuc_rcpt_coact_CREBbp_sf"/>
</dbReference>
<dbReference type="InterPro" id="IPR056484">
    <property type="entry name" value="PHD_P300"/>
</dbReference>
<dbReference type="InterPro" id="IPR010303">
    <property type="entry name" value="RING_CBP-p300"/>
</dbReference>
<dbReference type="InterPro" id="IPR038547">
    <property type="entry name" value="RING_CBP-p300_sf"/>
</dbReference>
<dbReference type="InterPro" id="IPR035898">
    <property type="entry name" value="TAZ_dom_sf"/>
</dbReference>
<dbReference type="InterPro" id="IPR013083">
    <property type="entry name" value="Znf_RING/FYVE/PHD"/>
</dbReference>
<dbReference type="InterPro" id="IPR000197">
    <property type="entry name" value="Znf_TAZ"/>
</dbReference>
<dbReference type="InterPro" id="IPR000433">
    <property type="entry name" value="Znf_ZZ"/>
</dbReference>
<dbReference type="InterPro" id="IPR043145">
    <property type="entry name" value="Znf_ZZ_sf"/>
</dbReference>
<dbReference type="PANTHER" id="PTHR13808">
    <property type="entry name" value="CBP/P300-RELATED"/>
    <property type="match status" value="1"/>
</dbReference>
<dbReference type="PANTHER" id="PTHR13808:SF34">
    <property type="entry name" value="CREB-BINDING PROTEIN"/>
    <property type="match status" value="1"/>
</dbReference>
<dbReference type="Pfam" id="PF00439">
    <property type="entry name" value="Bromodomain"/>
    <property type="match status" value="1"/>
</dbReference>
<dbReference type="Pfam" id="PF09030">
    <property type="entry name" value="Creb_binding"/>
    <property type="match status" value="1"/>
</dbReference>
<dbReference type="Pfam" id="PF08214">
    <property type="entry name" value="HAT_KAT11"/>
    <property type="match status" value="1"/>
</dbReference>
<dbReference type="Pfam" id="PF02172">
    <property type="entry name" value="KIX"/>
    <property type="match status" value="1"/>
</dbReference>
<dbReference type="Pfam" id="PF23570">
    <property type="entry name" value="PHD_P300"/>
    <property type="match status" value="1"/>
</dbReference>
<dbReference type="Pfam" id="PF06001">
    <property type="entry name" value="RING_CBP-p300"/>
    <property type="match status" value="1"/>
</dbReference>
<dbReference type="Pfam" id="PF02135">
    <property type="entry name" value="zf-TAZ"/>
    <property type="match status" value="2"/>
</dbReference>
<dbReference type="Pfam" id="PF00569">
    <property type="entry name" value="ZZ"/>
    <property type="match status" value="1"/>
</dbReference>
<dbReference type="PRINTS" id="PR00503">
    <property type="entry name" value="BROMODOMAIN"/>
</dbReference>
<dbReference type="SMART" id="SM00297">
    <property type="entry name" value="BROMO"/>
    <property type="match status" value="1"/>
</dbReference>
<dbReference type="SMART" id="SM01250">
    <property type="entry name" value="KAT11"/>
    <property type="match status" value="1"/>
</dbReference>
<dbReference type="SMART" id="SM00551">
    <property type="entry name" value="ZnF_TAZ"/>
    <property type="match status" value="2"/>
</dbReference>
<dbReference type="SMART" id="SM00291">
    <property type="entry name" value="ZnF_ZZ"/>
    <property type="match status" value="1"/>
</dbReference>
<dbReference type="SUPFAM" id="SSF47370">
    <property type="entry name" value="Bromodomain"/>
    <property type="match status" value="1"/>
</dbReference>
<dbReference type="SUPFAM" id="SSF47040">
    <property type="entry name" value="Kix domain of CBP (creb binding protein)"/>
    <property type="match status" value="1"/>
</dbReference>
<dbReference type="SUPFAM" id="SSF69125">
    <property type="entry name" value="Nuclear receptor coactivator interlocking domain"/>
    <property type="match status" value="1"/>
</dbReference>
<dbReference type="SUPFAM" id="SSF57850">
    <property type="entry name" value="RING/U-box"/>
    <property type="match status" value="1"/>
</dbReference>
<dbReference type="SUPFAM" id="SSF57933">
    <property type="entry name" value="TAZ domain"/>
    <property type="match status" value="2"/>
</dbReference>
<dbReference type="PROSITE" id="PS00633">
    <property type="entry name" value="BROMODOMAIN_1"/>
    <property type="match status" value="1"/>
</dbReference>
<dbReference type="PROSITE" id="PS50014">
    <property type="entry name" value="BROMODOMAIN_2"/>
    <property type="match status" value="1"/>
</dbReference>
<dbReference type="PROSITE" id="PS51727">
    <property type="entry name" value="CBP_P300_HAT"/>
    <property type="match status" value="1"/>
</dbReference>
<dbReference type="PROSITE" id="PS50952">
    <property type="entry name" value="KIX"/>
    <property type="match status" value="1"/>
</dbReference>
<dbReference type="PROSITE" id="PS50134">
    <property type="entry name" value="ZF_TAZ"/>
    <property type="match status" value="2"/>
</dbReference>
<dbReference type="PROSITE" id="PS01357">
    <property type="entry name" value="ZF_ZZ_1"/>
    <property type="match status" value="1"/>
</dbReference>
<dbReference type="PROSITE" id="PS50135">
    <property type="entry name" value="ZF_ZZ_2"/>
    <property type="match status" value="1"/>
</dbReference>
<evidence type="ECO:0000250" key="1">
    <source>
        <dbReference type="UniProtKB" id="P45481"/>
    </source>
</evidence>
<evidence type="ECO:0000250" key="2">
    <source>
        <dbReference type="UniProtKB" id="Q09472"/>
    </source>
</evidence>
<evidence type="ECO:0000255" key="3">
    <source>
        <dbReference type="PROSITE-ProRule" id="PRU00035"/>
    </source>
</evidence>
<evidence type="ECO:0000255" key="4">
    <source>
        <dbReference type="PROSITE-ProRule" id="PRU00203"/>
    </source>
</evidence>
<evidence type="ECO:0000255" key="5">
    <source>
        <dbReference type="PROSITE-ProRule" id="PRU00228"/>
    </source>
</evidence>
<evidence type="ECO:0000255" key="6">
    <source>
        <dbReference type="PROSITE-ProRule" id="PRU00311"/>
    </source>
</evidence>
<evidence type="ECO:0000255" key="7">
    <source>
        <dbReference type="PROSITE-ProRule" id="PRU01065"/>
    </source>
</evidence>
<evidence type="ECO:0000256" key="8">
    <source>
        <dbReference type="SAM" id="MobiDB-lite"/>
    </source>
</evidence>
<evidence type="ECO:0000269" key="9">
    <source>
    </source>
</evidence>
<evidence type="ECO:0000269" key="10">
    <source>
    </source>
</evidence>
<evidence type="ECO:0000269" key="11">
    <source>
    </source>
</evidence>
<evidence type="ECO:0000269" key="12">
    <source>
    </source>
</evidence>
<evidence type="ECO:0000269" key="13">
    <source>
    </source>
</evidence>
<evidence type="ECO:0000269" key="14">
    <source>
    </source>
</evidence>
<evidence type="ECO:0000269" key="15">
    <source>
    </source>
</evidence>
<evidence type="ECO:0000269" key="16">
    <source>
    </source>
</evidence>
<evidence type="ECO:0000269" key="17">
    <source>
    </source>
</evidence>
<evidence type="ECO:0000269" key="18">
    <source>
    </source>
</evidence>
<evidence type="ECO:0000269" key="19">
    <source>
    </source>
</evidence>
<evidence type="ECO:0000269" key="20">
    <source>
    </source>
</evidence>
<evidence type="ECO:0000269" key="21">
    <source>
    </source>
</evidence>
<evidence type="ECO:0000269" key="22">
    <source>
    </source>
</evidence>
<evidence type="ECO:0000269" key="23">
    <source>
    </source>
</evidence>
<evidence type="ECO:0000269" key="24">
    <source>
    </source>
</evidence>
<evidence type="ECO:0000269" key="25">
    <source>
    </source>
</evidence>
<evidence type="ECO:0000269" key="26">
    <source>
    </source>
</evidence>
<evidence type="ECO:0000269" key="27">
    <source>
    </source>
</evidence>
<evidence type="ECO:0000269" key="28">
    <source>
    </source>
</evidence>
<evidence type="ECO:0000269" key="29">
    <source>
    </source>
</evidence>
<evidence type="ECO:0000269" key="30">
    <source>
    </source>
</evidence>
<evidence type="ECO:0000269" key="31">
    <source>
    </source>
</evidence>
<evidence type="ECO:0000269" key="32">
    <source>
    </source>
</evidence>
<evidence type="ECO:0000269" key="33">
    <source>
    </source>
</evidence>
<evidence type="ECO:0000269" key="34">
    <source>
    </source>
</evidence>
<evidence type="ECO:0000269" key="35">
    <source>
    </source>
</evidence>
<evidence type="ECO:0000269" key="36">
    <source>
    </source>
</evidence>
<evidence type="ECO:0000269" key="37">
    <source>
    </source>
</evidence>
<evidence type="ECO:0000269" key="38">
    <source>
    </source>
</evidence>
<evidence type="ECO:0000269" key="39">
    <source>
    </source>
</evidence>
<evidence type="ECO:0000269" key="40">
    <source>
    </source>
</evidence>
<evidence type="ECO:0000269" key="41">
    <source>
    </source>
</evidence>
<evidence type="ECO:0000269" key="42">
    <source>
    </source>
</evidence>
<evidence type="ECO:0000269" key="43">
    <source>
    </source>
</evidence>
<evidence type="ECO:0000269" key="44">
    <source>
    </source>
</evidence>
<evidence type="ECO:0000269" key="45">
    <source>
    </source>
</evidence>
<evidence type="ECO:0000269" key="46">
    <source>
    </source>
</evidence>
<evidence type="ECO:0000269" key="47">
    <source>
    </source>
</evidence>
<evidence type="ECO:0000269" key="48">
    <source>
    </source>
</evidence>
<evidence type="ECO:0000269" key="49">
    <source>
    </source>
</evidence>
<evidence type="ECO:0000269" key="50">
    <source>
    </source>
</evidence>
<evidence type="ECO:0000269" key="51">
    <source>
    </source>
</evidence>
<evidence type="ECO:0000269" key="52">
    <source>
    </source>
</evidence>
<evidence type="ECO:0000269" key="53">
    <source>
    </source>
</evidence>
<evidence type="ECO:0000269" key="54">
    <source>
    </source>
</evidence>
<evidence type="ECO:0000269" key="55">
    <source>
    </source>
</evidence>
<evidence type="ECO:0000269" key="56">
    <source>
    </source>
</evidence>
<evidence type="ECO:0000269" key="57">
    <source>
    </source>
</evidence>
<evidence type="ECO:0000269" key="58">
    <source>
    </source>
</evidence>
<evidence type="ECO:0000269" key="59">
    <source>
    </source>
</evidence>
<evidence type="ECO:0000269" key="60">
    <source>
    </source>
</evidence>
<evidence type="ECO:0000269" key="61">
    <source>
    </source>
</evidence>
<evidence type="ECO:0000269" key="62">
    <source>
    </source>
</evidence>
<evidence type="ECO:0000269" key="63">
    <source>
    </source>
</evidence>
<evidence type="ECO:0000269" key="64">
    <source>
    </source>
</evidence>
<evidence type="ECO:0000269" key="65">
    <source>
    </source>
</evidence>
<evidence type="ECO:0000269" key="66">
    <source>
    </source>
</evidence>
<evidence type="ECO:0000269" key="67">
    <source>
    </source>
</evidence>
<evidence type="ECO:0000303" key="68">
    <source ref="4"/>
</evidence>
<evidence type="ECO:0000305" key="69"/>
<evidence type="ECO:0000312" key="70">
    <source>
        <dbReference type="HGNC" id="HGNC:2348"/>
    </source>
</evidence>
<evidence type="ECO:0007744" key="71">
    <source>
        <dbReference type="PDB" id="2LXS"/>
    </source>
</evidence>
<evidence type="ECO:0007744" key="72">
    <source>
        <dbReference type="PDB" id="2LXT"/>
    </source>
</evidence>
<evidence type="ECO:0007744" key="73">
    <source>
        <dbReference type="PDB" id="5JEM"/>
    </source>
</evidence>
<evidence type="ECO:0007744" key="74">
    <source>
    </source>
</evidence>
<evidence type="ECO:0007744" key="75">
    <source>
    </source>
</evidence>
<evidence type="ECO:0007744" key="76">
    <source>
    </source>
</evidence>
<evidence type="ECO:0007744" key="77">
    <source>
    </source>
</evidence>
<evidence type="ECO:0007744" key="78">
    <source>
    </source>
</evidence>
<evidence type="ECO:0007744" key="79">
    <source>
    </source>
</evidence>
<evidence type="ECO:0007744" key="80">
    <source>
    </source>
</evidence>
<evidence type="ECO:0007744" key="81">
    <source>
    </source>
</evidence>
<evidence type="ECO:0007744" key="82">
    <source>
    </source>
</evidence>
<evidence type="ECO:0007829" key="83">
    <source>
        <dbReference type="PDB" id="1JSP"/>
    </source>
</evidence>
<evidence type="ECO:0007829" key="84">
    <source>
        <dbReference type="PDB" id="1LIQ"/>
    </source>
</evidence>
<evidence type="ECO:0007829" key="85">
    <source>
        <dbReference type="PDB" id="1RDT"/>
    </source>
</evidence>
<evidence type="ECO:0007829" key="86">
    <source>
        <dbReference type="PDB" id="1ZOQ"/>
    </source>
</evidence>
<evidence type="ECO:0007829" key="87">
    <source>
        <dbReference type="PDB" id="2KJE"/>
    </source>
</evidence>
<evidence type="ECO:0007829" key="88">
    <source>
        <dbReference type="PDB" id="2L85"/>
    </source>
</evidence>
<evidence type="ECO:0007829" key="89">
    <source>
        <dbReference type="PDB" id="2N1A"/>
    </source>
</evidence>
<evidence type="ECO:0007829" key="90">
    <source>
        <dbReference type="PDB" id="5I86"/>
    </source>
</evidence>
<evidence type="ECO:0007829" key="91">
    <source>
        <dbReference type="PDB" id="5I8G"/>
    </source>
</evidence>
<evidence type="ECO:0007829" key="92">
    <source>
        <dbReference type="PDB" id="5SVH"/>
    </source>
</evidence>
<evidence type="ECO:0007829" key="93">
    <source>
        <dbReference type="PDB" id="6ES5"/>
    </source>
</evidence>
<evidence type="ECO:0007829" key="94">
    <source>
        <dbReference type="PDB" id="6M64"/>
    </source>
</evidence>
<evidence type="ECO:0007829" key="95">
    <source>
        <dbReference type="PDB" id="7JFL"/>
    </source>
</evidence>
<evidence type="ECO:0007829" key="96">
    <source>
        <dbReference type="PDB" id="7JFM"/>
    </source>
</evidence>
<evidence type="ECO:0007829" key="97">
    <source>
        <dbReference type="PDB" id="7RLE"/>
    </source>
</evidence>
<name>CBP_HUMAN</name>
<accession>Q92793</accession>
<accession>D3DUC9</accession>
<accession>O00147</accession>
<accession>Q16376</accession>
<accession>Q4LE28</accession>
<reference key="1">
    <citation type="journal article" date="1997" name="Proc. Natl. Acad. Sci. U.S.A.">
        <title>MLL is fused to CBP, a histone acetyltransferase, in therapy-related acute myeloid leukemia with a t(11;16)(q23;p13.3).</title>
        <authorList>
            <person name="Sobulo O.M."/>
            <person name="Borrow J."/>
            <person name="Tomek R."/>
            <person name="Reshimi S."/>
            <person name="Harden A."/>
            <person name="Schlegelberger B."/>
            <person name="Housman D."/>
            <person name="Doggett N.A."/>
            <person name="Rowley J.D."/>
            <person name="Zeleznik-Le N.J."/>
        </authorList>
    </citation>
    <scope>NUCLEOTIDE SEQUENCE [MRNA]</scope>
</reference>
<reference key="2">
    <citation type="journal article" date="1997" name="Genomics">
        <title>Construction of a 1.2-Mb contig surrounding, and molecular analysis of, the human CREB-binding protein (CBP/CREBBP) gene on chromosome 16p13.3.</title>
        <authorList>
            <person name="Giles R.H."/>
            <person name="Petrij F."/>
            <person name="Dauwerse H.G."/>
            <person name="den Hollander A.I."/>
            <person name="Lushnikova T."/>
            <person name="van Ommen G.J.B."/>
            <person name="Goodman R.H."/>
            <person name="Deaven L.L."/>
            <person name="Doggett N.A."/>
            <person name="Peters D.J.M."/>
            <person name="Breuning M.H."/>
        </authorList>
    </citation>
    <scope>NUCLEOTIDE SEQUENCE [MRNA]</scope>
</reference>
<reference key="3">
    <citation type="submission" date="1999-03" db="EMBL/GenBank/DDBJ databases">
        <authorList>
            <person name="Petrij F."/>
            <person name="den Hollander A.I."/>
            <person name="Chrivia J.C."/>
        </authorList>
    </citation>
    <scope>SEQUENCE REVISION TO 1724-1725; 1789 AND 1812</scope>
</reference>
<reference key="4">
    <citation type="submission" date="2005-03" db="EMBL/GenBank/DDBJ databases">
        <title>Preparation of a set of expression-ready clones of mammalian long cDNAs encoding large proteins by the ORF trap cloning method.</title>
        <authorList>
            <person name="Nakajima D."/>
            <person name="Saito K."/>
            <person name="Yamakawa H."/>
            <person name="Kikuno R.F."/>
            <person name="Nakayama M."/>
            <person name="Ohara R."/>
            <person name="Okazaki N."/>
            <person name="Koga H."/>
            <person name="Nagase T."/>
            <person name="Ohara O."/>
        </authorList>
    </citation>
    <scope>NUCLEOTIDE SEQUENCE [LARGE SCALE MRNA] (ISOFORM 2)</scope>
    <source>
        <tissue>Brain</tissue>
    </source>
</reference>
<reference key="5">
    <citation type="submission" date="2005-09" db="EMBL/GenBank/DDBJ databases">
        <authorList>
            <person name="Mural R.J."/>
            <person name="Istrail S."/>
            <person name="Sutton G.G."/>
            <person name="Florea L."/>
            <person name="Halpern A.L."/>
            <person name="Mobarry C.M."/>
            <person name="Lippert R."/>
            <person name="Walenz B."/>
            <person name="Shatkay H."/>
            <person name="Dew I."/>
            <person name="Miller J.R."/>
            <person name="Flanigan M.J."/>
            <person name="Edwards N.J."/>
            <person name="Bolanos R."/>
            <person name="Fasulo D."/>
            <person name="Halldorsson B.V."/>
            <person name="Hannenhalli S."/>
            <person name="Turner R."/>
            <person name="Yooseph S."/>
            <person name="Lu F."/>
            <person name="Nusskern D.R."/>
            <person name="Shue B.C."/>
            <person name="Zheng X.H."/>
            <person name="Zhong F."/>
            <person name="Delcher A.L."/>
            <person name="Huson D.H."/>
            <person name="Kravitz S.A."/>
            <person name="Mouchard L."/>
            <person name="Reinert K."/>
            <person name="Remington K.A."/>
            <person name="Clark A.G."/>
            <person name="Waterman M.S."/>
            <person name="Eichler E.E."/>
            <person name="Adams M.D."/>
            <person name="Hunkapiller M.W."/>
            <person name="Myers E.W."/>
            <person name="Venter J.C."/>
        </authorList>
    </citation>
    <scope>NUCLEOTIDE SEQUENCE [LARGE SCALE GENOMIC DNA]</scope>
</reference>
<reference key="6">
    <citation type="journal article" date="1996" name="Nat. Genet.">
        <title>The translocation t(8;16)(p11;p13) of acute myeloid leukaemia fuses a putative acetyltransferase to the CREB-binding protein.</title>
        <authorList>
            <person name="Borrow J."/>
            <person name="Stanton V.P. Jr."/>
            <person name="Andresen J.M."/>
            <person name="Becher R."/>
            <person name="Behm F.G."/>
            <person name="Chaganti R.S.K."/>
            <person name="Civin C.I."/>
            <person name="Disteche C."/>
            <person name="Dube I."/>
            <person name="Frischauf A.M."/>
            <person name="Horsman D."/>
            <person name="Mitelman F."/>
            <person name="Volinia S."/>
            <person name="Watmore A.E."/>
            <person name="Housman D.E."/>
        </authorList>
    </citation>
    <scope>NUCLEOTIDE SEQUENCE [MRNA] OF 1-405</scope>
    <scope>CHROMOSOMAL TRANSLOCATION WITH KAT6A</scope>
</reference>
<reference key="7">
    <citation type="journal article" date="2001" name="Hum. Mol. Genet.">
        <title>Fusion of the MORF and CBP genes in acute myeloid leukemia with the t(10;16)(q22;p13).</title>
        <authorList>
            <person name="Panagopoulos I."/>
            <person name="Fioretos T."/>
            <person name="Isaksson M."/>
            <person name="Samuelsson U."/>
            <person name="Billstroem R."/>
            <person name="Stroembeck B."/>
            <person name="Mitelman F."/>
            <person name="Johansson B."/>
        </authorList>
    </citation>
    <scope>NUCLEOTIDE SEQUENCE [MRNA] OF 1-83</scope>
    <scope>CHROMOSOMAL TRANSLOCATION WITH KAT6B</scope>
</reference>
<reference key="8">
    <citation type="journal article" date="1996" name="Nature">
        <title>A p300/CBP-associated factor that competes with the adenoviral oncoprotein E1A.</title>
        <authorList>
            <person name="Yang X.-J."/>
            <person name="Ogryzko V.V."/>
            <person name="Nishikawa J."/>
            <person name="Howard B.H."/>
            <person name="Nakatani Y."/>
        </authorList>
    </citation>
    <scope>INTERACTION WITH PCAF</scope>
</reference>
<reference key="9">
    <citation type="journal article" date="1996" name="Proc. Natl. Acad. Sci. U.S.A.">
        <title>An essential role for p300/CBP in the cellular response to hypoxia.</title>
        <authorList>
            <person name="Arany Z."/>
            <person name="Huang L.E."/>
            <person name="Eckner R."/>
            <person name="Bhattacharya S."/>
            <person name="Jiang C."/>
            <person name="Goldberg M.A."/>
            <person name="Bunn H.F."/>
            <person name="Livingston D.M."/>
        </authorList>
    </citation>
    <scope>INTERACTION WITH HIF1A AND EP300</scope>
</reference>
<reference key="10">
    <citation type="journal article" date="1997" name="Cell">
        <title>RNA helicase A mediates association of CBP with RNA polymerase II.</title>
        <authorList>
            <person name="Nakajima T."/>
            <person name="Uchida C."/>
            <person name="Anderson S.F."/>
            <person name="Lee C.-G."/>
            <person name="Hurwitz J."/>
            <person name="Parvin J.D."/>
            <person name="Montminy M."/>
        </authorList>
    </citation>
    <scope>INTERACTION WITH DHX9</scope>
</reference>
<reference key="11">
    <citation type="journal article" date="1998" name="Mol. Cell. Biol.">
        <title>Differential transcriptional activation by human T-cell leukemia virus type 1 Tax mutants is mediated by distinct interactions with CREB binding protein and p300.</title>
        <authorList>
            <person name="Bex F."/>
            <person name="Yin M.-J."/>
            <person name="Burny A."/>
            <person name="Gaynor R.B."/>
        </authorList>
    </citation>
    <scope>INTERACTION WITH HTLV-1 TAX (MICROBIAL INFECTION)</scope>
</reference>
<reference key="12">
    <citation type="journal article" date="1998" name="Proc. Natl. Acad. Sci. U.S.A.">
        <title>Acetylation and modulation of erythroid Krueppel-like factor (EKLF) activity by interaction with histone acetyltransferases.</title>
        <authorList>
            <person name="Zhang W."/>
            <person name="Bieker J.J."/>
        </authorList>
    </citation>
    <scope>INTERACTION WITH KLF1</scope>
    <scope>FUNCTION</scope>
</reference>
<reference key="13">
    <citation type="journal article" date="1999" name="J. Biol. Chem.">
        <title>Identification of a novel SNF2/SWI2 protein family member, SRCAP, which interacts with CREB-binding protein.</title>
        <authorList>
            <person name="Johnston H."/>
            <person name="Kneer J."/>
            <person name="Chackalaparampil I."/>
            <person name="Yaciuk P."/>
            <person name="Chrivia J."/>
        </authorList>
    </citation>
    <scope>INTERACTION WITH SRCAP</scope>
</reference>
<reference key="14">
    <citation type="journal article" date="1999" name="Proc. Natl. Acad. Sci. U.S.A.">
        <title>Modulation of CREB binding protein function by the promyelocytic (PML) oncoprotein suggests a role for nuclear bodies in hormone signaling.</title>
        <authorList>
            <person name="Doucas V."/>
            <person name="Tini M."/>
            <person name="Egan D.A."/>
            <person name="Evans R.M."/>
        </authorList>
    </citation>
    <scope>INTERACTION WITH PML</scope>
</reference>
<reference key="15">
    <citation type="journal article" date="1999" name="Cell">
        <title>Regulation of hormone-induced histone hyperacetylation and gene activation via acetylation of an acetylase.</title>
        <authorList>
            <person name="Chen H."/>
            <person name="Lin R.J."/>
            <person name="Xie W."/>
            <person name="Wilpitz D."/>
            <person name="Evans R.M."/>
        </authorList>
    </citation>
    <scope>ACETYLATION OF NCOA3</scope>
</reference>
<reference key="16">
    <citation type="journal article" date="2000" name="J. Biol. Chem.">
        <title>The MSG1 non-DNA-binding transactivator binds to the p300/CBP coactivators, enhancing their functional link to the Smad transcription factors.</title>
        <authorList>
            <person name="Yahata T."/>
            <person name="de Caestecker M.P."/>
            <person name="Lechleider R.J."/>
            <person name="Andriole S."/>
            <person name="Roberts A.B."/>
            <person name="Isselbacher K.J."/>
            <person name="Shioda T."/>
        </authorList>
    </citation>
    <scope>INTERACTION WITH CITED1</scope>
</reference>
<reference key="17">
    <citation type="journal article" date="2000" name="Mol. Cell. Biol.">
        <title>A new family of nuclear receptor coregulators that integrates nuclear receptor signaling through CBP.</title>
        <authorList>
            <person name="Mahajan M.A."/>
            <person name="Samuels H.H."/>
        </authorList>
    </citation>
    <scope>INTERACTION WITH NCOA6</scope>
</reference>
<reference key="18">
    <citation type="journal article" date="2001" name="J. Biol. Chem.">
        <title>Stimulation of NF-E2 DNA binding by CREB-binding protein (CBP)-mediated acetylation.</title>
        <authorList>
            <person name="Hung H.-L."/>
            <person name="Kim A.Y."/>
            <person name="Hong W."/>
            <person name="Rakowski C."/>
            <person name="Blobel G.A."/>
        </authorList>
    </citation>
    <scope>INTERACTION WITH MAFG</scope>
    <scope>FUNCTION IN ACETYLATION OF MAFG</scope>
</reference>
<reference key="19">
    <citation type="journal article" date="2001" name="J. Biol. Chem.">
        <title>Requirement of two NFATc4 transactivation domains for CBP potentiation.</title>
        <authorList>
            <person name="Yang T.T.C."/>
            <person name="Davis R.J."/>
            <person name="Chow C.-W."/>
        </authorList>
    </citation>
    <scope>INTERACTION WITH NFATC4</scope>
</reference>
<reference key="20">
    <citation type="journal article" date="2001" name="J. Biol. Chem.">
        <title>Interaction of EVI1 with cAMP-responsive element-binding protein-binding protein (CBP) and p300/CBP-associated factor (P/CAF) results in reversible acetylation of EVI1 and in co-localization in nuclear speckles.</title>
        <authorList>
            <person name="Chakraborty S."/>
            <person name="Senyuk V."/>
            <person name="Sitailo S."/>
            <person name="Chi Y."/>
            <person name="Nucifora G."/>
        </authorList>
    </citation>
    <scope>INTERACTION WITH MECOM</scope>
</reference>
<reference key="21">
    <citation type="journal article" date="2001" name="Mol. Cell. Biol.">
        <title>The oncoprotein Tax binds the SRC-1-interacting domain of CBP/p300 to mediate transcriptional activation.</title>
        <authorList>
            <person name="Scoggin K.E.S."/>
            <person name="Ulloa A."/>
            <person name="Nyborg J.K."/>
        </authorList>
    </citation>
    <scope>INTERACTION WITH HTLV-1 TAX (MICROBIAL INFECTION)</scope>
</reference>
<reference key="22">
    <citation type="journal article" date="2001" name="J. Virol.">
        <title>Human T-lymphotropic virus type 1 p30(II) regulates gene transcription by binding CREB binding protein/p300.</title>
        <authorList>
            <person name="Zhang W."/>
            <person name="Nisbet J.W."/>
            <person name="Albrecht B."/>
            <person name="Ding W."/>
            <person name="Kashanchi F."/>
            <person name="Bartoe J.T."/>
            <person name="Lairmore M.D."/>
        </authorList>
    </citation>
    <scope>INTERACTION WITH HTLV-1 ACCESSORY PROTEIN P30II (MICROBIAL INFECTION)</scope>
</reference>
<reference key="23">
    <citation type="journal article" date="2001" name="J. Biol. Chem.">
        <title>A novel zinc finger protein TReP-132 interacts with CBP/p300 to regulate human CYP11A1 gene expression.</title>
        <authorList>
            <person name="Gizard F."/>
            <person name="Lavallee B."/>
            <person name="DeWitte F."/>
            <person name="Hum D.W."/>
        </authorList>
    </citation>
    <scope>INTERACTION WITH TRERF1</scope>
</reference>
<reference key="24">
    <citation type="journal article" date="2001" name="J. Biol. Chem.">
        <title>Molecular cloning and characterization of PELP1, a novel human coregulator of estrogen receptor alpha.</title>
        <authorList>
            <person name="Vadlamudi R.K."/>
            <person name="Wang R.-A."/>
            <person name="Mazumdar A."/>
            <person name="Kim Y.-S."/>
            <person name="Shin J."/>
            <person name="Sahin A."/>
            <person name="Kumar R."/>
        </authorList>
    </citation>
    <scope>INTERACTION WITH PELP1</scope>
</reference>
<reference key="25">
    <citation type="journal article" date="2001" name="Oncogene">
        <title>HHV-8 encoded vIRF-1 represses the interferon antiviral response by blocking IRF-3 recruitment of the CBP/p300 coactivators.</title>
        <authorList>
            <person name="Lin R."/>
            <person name="Genin P."/>
            <person name="Mamane Y."/>
            <person name="Sgarbanti M."/>
            <person name="Battistini A."/>
            <person name="Harrington W.J. Jr."/>
            <person name="Barber G.N."/>
            <person name="Hiscott J."/>
        </authorList>
    </citation>
    <scope>INTERACTION WITH HHV-8 PROTEIN VIRF1 (MICROBIAL INFECTION)</scope>
</reference>
<reference key="26">
    <citation type="journal article" date="2002" name="Cell Growth Differ.">
        <title>Interaction between the hematopoietic Ets transcription factor Spi-B and the coactivator CREB-binding protein associated with negative cross-talk with c-Myb.</title>
        <authorList>
            <person name="Yamamoto H."/>
            <person name="Kihara-Negishi F."/>
            <person name="Yamada T."/>
            <person name="Suzuki M."/>
            <person name="Nakano T."/>
            <person name="Oikawa T."/>
        </authorList>
    </citation>
    <scope>INTERACTION WITH SPIB</scope>
</reference>
<reference key="27">
    <citation type="journal article" date="2002" name="J. Biol. Chem.">
        <title>Human CREB-binding protein/p300-interacting transactivator with ED-rich tail (CITED) 4, a new member of the CITED family, functions as a co-activator for transcription factor AP-2.</title>
        <authorList>
            <person name="Braganca J."/>
            <person name="Swingler T."/>
            <person name="Marques F.I.R."/>
            <person name="Jones T."/>
            <person name="Eloranta J.J."/>
            <person name="Hurst H.C."/>
            <person name="Shioda T."/>
            <person name="Bhattacharya S."/>
        </authorList>
    </citation>
    <scope>INTERACTION WITH CITED4</scope>
</reference>
<reference key="28">
    <citation type="journal article" date="2002" name="Mol. Cell. Biol.">
        <title>Regulation of SRC-3 (pCIP/ACTR/AIB-1/RAC-3/TRAM-1) coactivator activity by I kappa B kinase.</title>
        <authorList>
            <person name="Wu R.-C."/>
            <person name="Qin J."/>
            <person name="Hashimoto Y."/>
            <person name="Wong J."/>
            <person name="Xu J."/>
            <person name="Tsai S.Y."/>
            <person name="Tsai M.-J."/>
            <person name="O'Malley B.W."/>
        </authorList>
    </citation>
    <scope>IDENTIFICATION IN A COMPLEX WITH NCOA2; NCOA3; IKKA; IKKB AND IKBKG</scope>
</reference>
<reference key="29">
    <citation type="journal article" date="2003" name="J. Biol. Chem.">
        <title>Interferon regulatory factor-2 regulates cell growth through its acetylation.</title>
        <authorList>
            <person name="Masumi A."/>
            <person name="Yamakawa Y."/>
            <person name="Fukazawa H."/>
            <person name="Ozato K."/>
            <person name="Komuro K."/>
        </authorList>
    </citation>
    <scope>INTERACTION WITH IRF2</scope>
    <scope>FUNCTION IN ACETYLATION OF IRF2</scope>
</reference>
<reference key="30">
    <citation type="journal article" date="2003" name="J. Biol. Chem.">
        <title>Identification and characterization of BCL-3-binding protein: implications for transcription and DNA repair or recombination.</title>
        <authorList>
            <person name="Watanabe N."/>
            <person name="Wachi S."/>
            <person name="Fujita T."/>
        </authorList>
    </citation>
    <scope>INTERACTION WITH N4BP2</scope>
</reference>
<reference key="31">
    <citation type="journal article" date="2003" name="J. Bone Miner. Res.">
        <title>P300/CBP acts as a coactivator to cartilage homeoprotein-1 (Cart1), paired-like homeoprotein, through acetylation of the conserved lysine residue adjacent to the homeodomain.</title>
        <authorList>
            <person name="Iioka T."/>
            <person name="Furukawa K."/>
            <person name="Yamaguchi A."/>
            <person name="Shindo H."/>
            <person name="Yamashita S."/>
            <person name="Tsukazaki T."/>
        </authorList>
    </citation>
    <scope>FUNCTION</scope>
    <scope>SUBCELLULAR LOCATION</scope>
</reference>
<reference key="32">
    <citation type="journal article" date="2004" name="J. Biol. Chem.">
        <title>Histone acetyltransferase-dependent chromatin remodeling and the vascular clock.</title>
        <authorList>
            <person name="Curtis A.M."/>
            <person name="Seo S.B."/>
            <person name="Westgate E.J."/>
            <person name="Rudic R.D."/>
            <person name="Smyth E.M."/>
            <person name="Chakravarti D."/>
            <person name="FitzGerald G.A."/>
            <person name="McNamara P."/>
        </authorList>
    </citation>
    <scope>FUNCTION</scope>
    <scope>INTERACTION WITH NPAS2 AND CLOCK</scope>
</reference>
<reference key="33">
    <citation type="journal article" date="2004" name="J. Biol. Chem.">
        <title>Positive and negative modulation of the transcriptional activity of the ETS factor ESE-1 through interaction with p300, CREB-binding protein, and Ku 70/86.</title>
        <authorList>
            <person name="Wang H."/>
            <person name="Fang R."/>
            <person name="Cho J.-Y."/>
            <person name="Libermann T.A."/>
            <person name="Oettgen P."/>
        </authorList>
    </citation>
    <scope>INTERACTION WITH ELF3</scope>
</reference>
<reference key="34">
    <citation type="journal article" date="2004" name="J. Biol. Chem.">
        <title>FOXO4 is acetylated upon peroxide stress and deacetylated by the longevity protein hSir2(SIRT1).</title>
        <authorList>
            <person name="van der Horst A."/>
            <person name="Tertoolen L.G.J."/>
            <person name="de Vries-Smits L.M.M."/>
            <person name="Frye R.A."/>
            <person name="Medema R.H."/>
            <person name="Burgering B.M.T."/>
        </authorList>
    </citation>
    <scope>INTERACTION WITH MLLT7</scope>
</reference>
<reference key="35">
    <citation type="journal article" date="2004" name="Neurosci. Lett.">
        <title>The calcium-responsive transactivator recruits CREB binding protein to nuclear bodies.</title>
        <authorList>
            <person name="Pradhan A."/>
            <person name="Liu Y."/>
        </authorList>
    </citation>
    <scope>SUBCELLULAR LOCATION</scope>
</reference>
<reference key="36">
    <citation type="journal article" date="2004" name="Proc. Natl. Acad. Sci. U.S.A.">
        <title>Silent information regulator 2 potentiates Foxo1-mediated transcription through its deacetylase activity.</title>
        <authorList>
            <person name="Daitoku H."/>
            <person name="Hatta M."/>
            <person name="Matsuzaki H."/>
            <person name="Aratani S."/>
            <person name="Ohshima T."/>
            <person name="Miyagishi M."/>
            <person name="Nakajima T."/>
            <person name="Fukamizu A."/>
        </authorList>
    </citation>
    <scope>INTERACTION WITH FOXO1</scope>
</reference>
<reference key="37">
    <citation type="journal article" date="2004" name="Science">
        <title>Dendrite development regulated by CREST, a calcium-regulated transcriptional activator.</title>
        <authorList>
            <person name="Aizawa H."/>
            <person name="Hu S.-C."/>
            <person name="Bobb K."/>
            <person name="Balakrishnan K."/>
            <person name="Ince G."/>
            <person name="Gurevich I."/>
            <person name="Cowan M."/>
            <person name="Ghosh A."/>
        </authorList>
    </citation>
    <scope>INTERACTION WITH SS18L1/CREST</scope>
</reference>
<reference key="38">
    <citation type="journal article" date="2007" name="Mol. Cell">
        <title>Phosphorylation of CBP by IKKalpha promotes cell growth by switching the binding preference of CBP from p53 to NF-kappaB.</title>
        <authorList>
            <person name="Huang W.C."/>
            <person name="Ju T.K."/>
            <person name="Hung M.C."/>
            <person name="Chen C.C."/>
        </authorList>
    </citation>
    <scope>PHOSPHORYLATION AT SER-1382 AND SER-1386 BY CHUK/IKKA</scope>
</reference>
<reference key="39">
    <citation type="journal article" date="2007" name="Science">
        <title>ATM and ATR substrate analysis reveals extensive protein networks responsive to DNA damage.</title>
        <authorList>
            <person name="Matsuoka S."/>
            <person name="Ballif B.A."/>
            <person name="Smogorzewska A."/>
            <person name="McDonald E.R. III"/>
            <person name="Hurov K.E."/>
            <person name="Luo J."/>
            <person name="Bakalarski C.E."/>
            <person name="Zhao Z."/>
            <person name="Solimini N."/>
            <person name="Lerenthal Y."/>
            <person name="Shiloh Y."/>
            <person name="Gygi S.P."/>
            <person name="Elledge S.J."/>
        </authorList>
    </citation>
    <scope>PHOSPHORYLATION [LARGE SCALE ANALYSIS] AT SER-1030</scope>
    <scope>IDENTIFICATION BY MASS SPECTROMETRY [LARGE SCALE ANALYSIS]</scope>
    <source>
        <tissue>Embryonic kidney</tissue>
    </source>
</reference>
<reference key="40">
    <citation type="journal article" date="2008" name="Cancer Res.">
        <title>Molecular basis of nuclear factor-kappaB activation by astrocyte elevated gene-1.</title>
        <authorList>
            <person name="Sarkar D."/>
            <person name="Park E.S."/>
            <person name="Emdad L."/>
            <person name="Lee S.-G."/>
            <person name="Su Z.-Z."/>
            <person name="Fisher P.B."/>
        </authorList>
    </citation>
    <scope>INTERACTION WITH MTDH</scope>
</reference>
<reference key="41">
    <citation type="journal article" date="2008" name="J. Biol. Chem.">
        <title>An interaction between the human T cell leukemia virus type 1 basic leucine zipper factor (HBZ) and the KIX domain of p300/CBP contributes to the down-regulation of tax-dependent viral transcription by HBZ.</title>
        <authorList>
            <person name="Clerc I."/>
            <person name="Polakowski N."/>
            <person name="Andre-Arpin C."/>
            <person name="Cook P."/>
            <person name="Barbeau B."/>
            <person name="Mesnard J.M."/>
            <person name="Lemasson I."/>
        </authorList>
    </citation>
    <scope>INTERACTION WITH HUMAN T-CELL LEUKEMIA VIRUS 1/HTLV-1 PROTEIN HBZ</scope>
</reference>
<reference key="42">
    <citation type="journal article" date="2008" name="Proc. Natl. Acad. Sci. U.S.A.">
        <title>A quantitative atlas of mitotic phosphorylation.</title>
        <authorList>
            <person name="Dephoure N."/>
            <person name="Zhou C."/>
            <person name="Villen J."/>
            <person name="Beausoleil S.A."/>
            <person name="Bakalarski C.E."/>
            <person name="Elledge S.J."/>
            <person name="Gygi S.P."/>
        </authorList>
    </citation>
    <scope>PHOSPHORYLATION [LARGE SCALE ANALYSIS] AT SER-121; SER-2063; SER-2076 AND SER-2079</scope>
    <scope>IDENTIFICATION BY MASS SPECTROMETRY [LARGE SCALE ANALYSIS]</scope>
    <source>
        <tissue>Cervix carcinoma</tissue>
    </source>
</reference>
<reference key="43">
    <citation type="journal article" date="2009" name="Anal. Chem.">
        <title>Lys-N and trypsin cover complementary parts of the phosphoproteome in a refined SCX-based approach.</title>
        <authorList>
            <person name="Gauci S."/>
            <person name="Helbig A.O."/>
            <person name="Slijper M."/>
            <person name="Krijgsveld J."/>
            <person name="Heck A.J."/>
            <person name="Mohammed S."/>
        </authorList>
    </citation>
    <scope>ACETYLATION [LARGE SCALE ANALYSIS] AT ALA-2</scope>
    <scope>CLEAVAGE OF INITIATOR METHIONINE [LARGE SCALE ANALYSIS]</scope>
    <scope>IDENTIFICATION BY MASS SPECTROMETRY [LARGE SCALE ANALYSIS]</scope>
</reference>
<reference key="44">
    <citation type="journal article" date="2009" name="Sci. Signal.">
        <title>Quantitative phosphoproteomic analysis of T cell receptor signaling reveals system-wide modulation of protein-protein interactions.</title>
        <authorList>
            <person name="Mayya V."/>
            <person name="Lundgren D.H."/>
            <person name="Hwang S.-I."/>
            <person name="Rezaul K."/>
            <person name="Wu L."/>
            <person name="Eng J.K."/>
            <person name="Rodionov V."/>
            <person name="Han D.K."/>
        </authorList>
    </citation>
    <scope>PHOSPHORYLATION [LARGE SCALE ANALYSIS] AT SER-2063</scope>
    <scope>IDENTIFICATION BY MASS SPECTROMETRY [LARGE SCALE ANALYSIS]</scope>
    <source>
        <tissue>Leukemic T-cell</tissue>
    </source>
</reference>
<reference key="45">
    <citation type="journal article" date="2009" name="Science">
        <title>Lysine acetylation targets protein complexes and co-regulates major cellular functions.</title>
        <authorList>
            <person name="Choudhary C."/>
            <person name="Kumar C."/>
            <person name="Gnad F."/>
            <person name="Nielsen M.L."/>
            <person name="Rehman M."/>
            <person name="Walther T.C."/>
            <person name="Olsen J.V."/>
            <person name="Mann M."/>
        </authorList>
    </citation>
    <scope>ACETYLATION [LARGE SCALE ANALYSIS] AT LYS-1014; LYS-1216; LYS-1583; LYS-1591; LYS-1592; LYS-1595; LYS-1597; LYS-1741 AND LYS-1744</scope>
    <scope>IDENTIFICATION BY MASS SPECTROMETRY [LARGE SCALE ANALYSIS]</scope>
</reference>
<reference key="46">
    <citation type="journal article" date="2010" name="Sci. Signal.">
        <title>Quantitative phosphoproteomics reveals widespread full phosphorylation site occupancy during mitosis.</title>
        <authorList>
            <person name="Olsen J.V."/>
            <person name="Vermeulen M."/>
            <person name="Santamaria A."/>
            <person name="Kumar C."/>
            <person name="Miller M.L."/>
            <person name="Jensen L.J."/>
            <person name="Gnad F."/>
            <person name="Cox J."/>
            <person name="Jensen T.S."/>
            <person name="Nigg E.A."/>
            <person name="Brunak S."/>
            <person name="Mann M."/>
        </authorList>
    </citation>
    <scope>PHOSPHORYLATION [LARGE SCALE ANALYSIS] AT SER-121</scope>
    <scope>IDENTIFICATION BY MASS SPECTROMETRY [LARGE SCALE ANALYSIS]</scope>
    <source>
        <tissue>Cervix carcinoma</tissue>
    </source>
</reference>
<reference key="47">
    <citation type="journal article" date="2011" name="BMC Syst. Biol.">
        <title>Initial characterization of the human central proteome.</title>
        <authorList>
            <person name="Burkard T.R."/>
            <person name="Planyavsky M."/>
            <person name="Kaupe I."/>
            <person name="Breitwieser F.P."/>
            <person name="Buerckstuemmer T."/>
            <person name="Bennett K.L."/>
            <person name="Superti-Furga G."/>
            <person name="Colinge J."/>
        </authorList>
    </citation>
    <scope>IDENTIFICATION BY MASS SPECTROMETRY [LARGE SCALE ANALYSIS]</scope>
</reference>
<reference key="48">
    <citation type="journal article" date="2011" name="EMBO J.">
        <title>Distinct roles of GCN5/PCAF-mediated H3K9ac and CBP/p300-mediated H3K18/27ac in nuclear receptor transactivation.</title>
        <authorList>
            <person name="Jin Q."/>
            <person name="Yu L.R."/>
            <person name="Wang L."/>
            <person name="Zhang Z."/>
            <person name="Kasper L.H."/>
            <person name="Lee J.E."/>
            <person name="Wang C."/>
            <person name="Brindle P.K."/>
            <person name="Dent S.Y."/>
            <person name="Ge K."/>
        </authorList>
    </citation>
    <scope>FUNCTION</scope>
    <scope>CATALYTIC ACTIVITY</scope>
</reference>
<reference key="49">
    <citation type="journal article" date="2012" name="Proc. Natl. Acad. Sci. U.S.A.">
        <title>N-terminal acetylome analyses and functional insights of the N-terminal acetyltransferase NatB.</title>
        <authorList>
            <person name="Van Damme P."/>
            <person name="Lasa M."/>
            <person name="Polevoda B."/>
            <person name="Gazquez C."/>
            <person name="Elosegui-Artola A."/>
            <person name="Kim D.S."/>
            <person name="De Juan-Pardo E."/>
            <person name="Demeyer K."/>
            <person name="Hole K."/>
            <person name="Larrea E."/>
            <person name="Timmerman E."/>
            <person name="Prieto J."/>
            <person name="Arnesen T."/>
            <person name="Sherman F."/>
            <person name="Gevaert K."/>
            <person name="Aldabe R."/>
        </authorList>
    </citation>
    <scope>ACETYLATION [LARGE SCALE ANALYSIS] AT ALA-2</scope>
    <scope>CLEAVAGE OF INITIATOR METHIONINE [LARGE SCALE ANALYSIS]</scope>
    <scope>IDENTIFICATION BY MASS SPECTROMETRY [LARGE SCALE ANALYSIS]</scope>
</reference>
<reference key="50">
    <citation type="journal article" date="2013" name="J. Proteome Res.">
        <title>Toward a comprehensive characterization of a human cancer cell phosphoproteome.</title>
        <authorList>
            <person name="Zhou H."/>
            <person name="Di Palma S."/>
            <person name="Preisinger C."/>
            <person name="Peng M."/>
            <person name="Polat A.N."/>
            <person name="Heck A.J."/>
            <person name="Mohammed S."/>
        </authorList>
    </citation>
    <scope>PHOSPHORYLATION [LARGE SCALE ANALYSIS] AT SER-1076; SER-1763 AND SER-2063</scope>
    <scope>IDENTIFICATION BY MASS SPECTROMETRY [LARGE SCALE ANALYSIS]</scope>
    <source>
        <tissue>Cervix carcinoma</tissue>
        <tissue>Erythroleukemia</tissue>
    </source>
</reference>
<reference key="51">
    <citation type="journal article" date="2013" name="Mol. Cell">
        <title>Repression of RNA polymerase I upon stress is caused by inhibition of RNA-dependent deacetylation of PAF53 by SIRT7.</title>
        <authorList>
            <person name="Chen S."/>
            <person name="Seiler J."/>
            <person name="Santiago-Reichelt M."/>
            <person name="Felbel K."/>
            <person name="Grummt I."/>
            <person name="Voit R."/>
        </authorList>
    </citation>
    <scope>FUNCTION</scope>
    <scope>CATALYTIC ACTIVITY</scope>
</reference>
<reference key="52">
    <citation type="journal article" date="2014" name="J. Proteomics">
        <title>An enzyme assisted RP-RPLC approach for in-depth analysis of human liver phosphoproteome.</title>
        <authorList>
            <person name="Bian Y."/>
            <person name="Song C."/>
            <person name="Cheng K."/>
            <person name="Dong M."/>
            <person name="Wang F."/>
            <person name="Huang J."/>
            <person name="Sun D."/>
            <person name="Wang L."/>
            <person name="Ye M."/>
            <person name="Zou H."/>
        </authorList>
    </citation>
    <scope>IDENTIFICATION BY MASS SPECTROMETRY [LARGE SCALE ANALYSIS]</scope>
    <source>
        <tissue>Liver</tissue>
    </source>
</reference>
<reference key="53">
    <citation type="journal article" date="2014" name="Mol. Cell. Proteomics">
        <title>Immunoaffinity enrichment and mass spectrometry analysis of protein methylation.</title>
        <authorList>
            <person name="Guo A."/>
            <person name="Gu H."/>
            <person name="Zhou J."/>
            <person name="Mulhern D."/>
            <person name="Wang Y."/>
            <person name="Lee K.A."/>
            <person name="Yang V."/>
            <person name="Aguiar M."/>
            <person name="Kornhauser J."/>
            <person name="Jia X."/>
            <person name="Ren J."/>
            <person name="Beausoleil S.A."/>
            <person name="Silva J.C."/>
            <person name="Vemulapalli V."/>
            <person name="Bedford M.T."/>
            <person name="Comb M.J."/>
        </authorList>
    </citation>
    <scope>METHYLATION [LARGE SCALE ANALYSIS] AT ARG-220</scope>
    <scope>IDENTIFICATION BY MASS SPECTROMETRY [LARGE SCALE ANALYSIS]</scope>
    <source>
        <tissue>Colon carcinoma</tissue>
    </source>
</reference>
<reference key="54">
    <citation type="journal article" date="2014" name="Nucleic Acids Res.">
        <title>CBP and p300 acetylate PCNA to link its degradation with nucleotide excision repair synthesis.</title>
        <authorList>
            <person name="Cazzalini O."/>
            <person name="Sommatis S."/>
            <person name="Tillhon M."/>
            <person name="Dutto I."/>
            <person name="Bachi A."/>
            <person name="Rapp A."/>
            <person name="Nardo T."/>
            <person name="Scovassi A.I."/>
            <person name="Necchi D."/>
            <person name="Cardoso M.C."/>
            <person name="Stivala L.A."/>
            <person name="Prosperi E."/>
        </authorList>
    </citation>
    <scope>FUNCTION AS ACETYLTRANSFERASE OF PCNA</scope>
    <scope>INTERACTION WITH PCNA</scope>
</reference>
<reference key="55">
    <citation type="journal article" date="2015" name="Biochim. Biophys. Acta">
        <title>Pokemon (FBI-1) interacts with Smad4 to repress TGF-beta-induced transcriptional responses.</title>
        <authorList>
            <person name="Yang Y."/>
            <person name="Cui J."/>
            <person name="Xue F."/>
            <person name="Zhang C."/>
            <person name="Mei Z."/>
            <person name="Wang Y."/>
            <person name="Bi M."/>
            <person name="Shan D."/>
            <person name="Meredith A."/>
            <person name="Li H."/>
            <person name="Xu Z.Q."/>
        </authorList>
    </citation>
    <scope>FUNCTION</scope>
    <scope>INTERACTION WITH SMAD4</scope>
</reference>
<reference key="56">
    <citation type="journal article" date="2015" name="Genes Dev.">
        <title>Screen identifies bromodomain protein ZMYND8 in chromatin recognition of transcription-associated DNA damage that promotes homologous recombination.</title>
        <authorList>
            <person name="Gong F."/>
            <person name="Chiu L.Y."/>
            <person name="Cox B."/>
            <person name="Aymard F."/>
            <person name="Clouaire T."/>
            <person name="Leung J.W."/>
            <person name="Cammarata M."/>
            <person name="Perez M."/>
            <person name="Agarwal P."/>
            <person name="Brodbelt J.S."/>
            <person name="Legube G."/>
            <person name="Miller K.M."/>
        </authorList>
    </citation>
    <scope>SUBCELLULAR LOCATION</scope>
</reference>
<reference key="57">
    <citation type="journal article" date="2016" name="Nucleic Acids Res.">
        <title>DUX4 recruits p300/CBP through its C-terminus and induces global H3K27 acetylation changes.</title>
        <authorList>
            <person name="Choi S.H."/>
            <person name="Gearhart M.D."/>
            <person name="Cui Z."/>
            <person name="Bosnakovski D."/>
            <person name="Kim M."/>
            <person name="Schennum N."/>
            <person name="Kyba M."/>
        </authorList>
    </citation>
    <scope>INTERACTION WITH DUX4</scope>
</reference>
<reference key="58">
    <citation type="journal article" date="2017" name="Genes Dev.">
        <title>SIRT7 and the DEAD-box helicase DDX21 cooperate to resolve genomic R loops and safeguard genome stability.</title>
        <authorList>
            <person name="Song C."/>
            <person name="Hotz-Wagenblatt A."/>
            <person name="Voit R."/>
            <person name="Grummt I."/>
        </authorList>
    </citation>
    <scope>FUNCTION</scope>
    <scope>CATALYTIC ACTIVITY</scope>
</reference>
<reference key="59">
    <citation type="journal article" date="2017" name="Sci. Rep.">
        <title>RNA helicase DDX3 maintains lipid homeostasis through upregulation of the microsomal triglyceride transfer protein by interacting with HNF4 and SHP.</title>
        <authorList>
            <person name="Tsai T.Y."/>
            <person name="Wang W.T."/>
            <person name="Li H.K."/>
            <person name="Chen W.J."/>
            <person name="Tsai Y.H."/>
            <person name="Chao C.H."/>
            <person name="Wu Lee Y.H."/>
        </authorList>
    </citation>
    <scope>INTERACTION WITH DDX3X</scope>
</reference>
<reference key="60">
    <citation type="journal article" date="2018" name="Cell Rep.">
        <title>SIRT7-dependent deacetylation of fibrillarin controls histone H2A methylation and rRNA synthesis during the cell cycle.</title>
        <authorList>
            <person name="Iyer-Bierhoff A."/>
            <person name="Krogh N."/>
            <person name="Tessarz P."/>
            <person name="Ruppert T."/>
            <person name="Nielsen H."/>
            <person name="Grummt I."/>
        </authorList>
    </citation>
    <scope>FUNCTION</scope>
    <scope>CATALYTIC ACTIVITY</scope>
</reference>
<reference key="61">
    <citation type="journal article" date="2022" name="Cell Metab.">
        <title>Deubiquitinase OTUD3 regulates metabolism homeostasis in response to nutritional stresses.</title>
        <authorList>
            <person name="Zhou N."/>
            <person name="Qi H."/>
            <person name="Liu J."/>
            <person name="Zhang G."/>
            <person name="Liu J."/>
            <person name="Liu N."/>
            <person name="Zhu M."/>
            <person name="Zhao X."/>
            <person name="Song C."/>
            <person name="Zhou Z."/>
            <person name="Gong J."/>
            <person name="Li R."/>
            <person name="Bai X."/>
            <person name="Jin Y."/>
            <person name="Song Y."/>
            <person name="Yin Y."/>
        </authorList>
    </citation>
    <scope>FUNCTION</scope>
    <scope>CATALYTIC ACTIVITY</scope>
    <scope>ACETYLATION</scope>
</reference>
<reference key="62">
    <citation type="journal article" date="2024" name="Cell">
        <title>Metabolic regulation of homologous recombination repair by MRE11 lactylation.</title>
        <authorList>
            <person name="Chen Y."/>
            <person name="Wu J."/>
            <person name="Zhai L."/>
            <person name="Zhang T."/>
            <person name="Yin H."/>
            <person name="Gao H."/>
            <person name="Zhao F."/>
            <person name="Wang Z."/>
            <person name="Yang X."/>
            <person name="Jin M."/>
            <person name="Huang B."/>
            <person name="Ding X."/>
            <person name="Li R."/>
            <person name="Yang J."/>
            <person name="He Y."/>
            <person name="Wang Q."/>
            <person name="Wang W."/>
            <person name="Kloeber J.A."/>
            <person name="Li Y."/>
            <person name="Hao B."/>
            <person name="Zhang Y."/>
            <person name="Wang J."/>
            <person name="Tan M."/>
            <person name="Li K."/>
            <person name="Wang P."/>
            <person name="Lou Z."/>
            <person name="Yuan J."/>
        </authorList>
    </citation>
    <scope>FUNCTION</scope>
    <scope>CATALYTIC ACTIVITY</scope>
    <scope>PHOSPHORYLATION AT SER-124</scope>
    <scope>MUTAGENESIS OF SER-124</scope>
</reference>
<reference key="63">
    <citation type="journal article" date="2002" name="Proc. Natl. Acad. Sci. U.S.A.">
        <title>Structural basis for Hif-1 alpha /CBP recognition in the cellular hypoxic response.</title>
        <authorList>
            <person name="Dames S.A."/>
            <person name="Martinez-Yamout M."/>
            <person name="De Guzman R.N."/>
            <person name="Dyson H.J."/>
            <person name="Wright P.E."/>
        </authorList>
    </citation>
    <scope>STRUCTURE BY NMR OF 345-439 IN COMPLEX WITH 776-826 OF HIF1A</scope>
</reference>
<reference key="64">
    <citation type="journal article" date="2001" name="EMBO J.">
        <title>Activation of AML1-mediated transcription by MOZ and inhibition by the MOZ-CBP fusion protein.</title>
        <authorList>
            <person name="Kitabayashi I."/>
            <person name="Aikawa Y."/>
            <person name="Nguyen L.A."/>
            <person name="Yokoyama A."/>
            <person name="Ohki M."/>
        </authorList>
    </citation>
    <scope>CHROMOSOMAL TRANSLOCATION WITH KAT6A</scope>
</reference>
<reference key="65">
    <citation type="journal article" date="2004" name="Biochemistry">
        <title>NMR mapping of the HIV-1 Tat interaction surface of the KIX domain of the human coactivator CBP.</title>
        <authorList>
            <person name="Vendel A.C."/>
            <person name="Lumb K.J."/>
        </authorList>
    </citation>
    <scope>STRUCTURE BY NMR OF 589-679 IN COMPLEX WITH HIV-1 TAT (MICROBIAL INFECTION)</scope>
</reference>
<reference key="66">
    <citation type="journal article" date="2012" name="Cell">
        <title>Histone recognition and large-scale structural analysis of the human bromodomain family.</title>
        <authorList>
            <person name="Filippakopoulos P."/>
            <person name="Picaud S."/>
            <person name="Mangos M."/>
            <person name="Keates T."/>
            <person name="Lambert J.P."/>
            <person name="Barsyte-Lovejoy D."/>
            <person name="Felletar I."/>
            <person name="Volkmer R."/>
            <person name="Muller S."/>
            <person name="Pawson T."/>
            <person name="Gingras A.C."/>
            <person name="Arrowsmith C.H."/>
            <person name="Knapp S."/>
        </authorList>
    </citation>
    <scope>X-RAY CRYSTALLOGRAPHY (1.8 ANGSTROMS) OF 1081-1197</scope>
</reference>
<reference evidence="71 72" key="67">
    <citation type="journal article" date="2013" name="ACS Chem. Biol.">
        <title>Allosteric communication in the KIX domain proceeds through dynamic repacking of the hydrophobic core.</title>
        <authorList>
            <person name="Bruschweiler S."/>
            <person name="Konrat R."/>
            <person name="Tollinger M."/>
        </authorList>
    </citation>
    <scope>STRUCTURE BY NMR OF 587-673 IN COMPLEX WITH KMT2A AND CREB1</scope>
</reference>
<reference key="68">
    <citation type="journal article" date="2014" name="Proc. Natl. Acad. Sci. U.S.A.">
        <title>Binding of the histone chaperone ASF1 to the CBP bromodomain promotes histone acetylation.</title>
        <authorList>
            <person name="Das C."/>
            <person name="Roy S."/>
            <person name="Namjoshi S."/>
            <person name="Malarkey C.S."/>
            <person name="Jones D.N."/>
            <person name="Kutateladze T.G."/>
            <person name="Churchill M.E."/>
            <person name="Tyler J.K."/>
        </authorList>
    </citation>
    <scope>X-RAY CRYSTALLOGRAPHY (1.40 ANGSTROMS) OF 1082-1197</scope>
    <scope>FUNCTION</scope>
    <scope>INTERACTION WITH ASF1A; ASF1B; ACETYLATED HISTONES AND TP53</scope>
    <scope>MUTAGENESIS OF ASP-1116; PHE-1126; ASN-1162; TRP-1165; LYS-1170; SER-1179; LYS-1180 AND GLU-1183</scope>
    <scope>CHARACTERIZATION OF VARIANT RSTS1 CYS-1175</scope>
    <scope>CATALYTIC ACTIVITY</scope>
    <scope>AUTOACETYLATION</scope>
</reference>
<reference key="69">
    <citation type="journal article" date="2014" name="Structure">
        <title>Structural insights into acetylated-histone H4 recognition by the bromodomain-PHD finger module of human transcriptional coactivator CBP.</title>
        <authorList>
            <person name="Plotnikov A.N."/>
            <person name="Yang S."/>
            <person name="Zhou T.J."/>
            <person name="Rusinova E."/>
            <person name="Frasca A."/>
            <person name="Zhou M.M."/>
        </authorList>
    </citation>
    <scope>X-RAY CRYSTALLOGRAPHY (1.83 ANGSTROMS) OF 1080-1316 IN COMPLEX WITH ZINC</scope>
</reference>
<reference evidence="73" key="70">
    <citation type="journal article" date="2016" name="Proc. Natl. Acad. Sci. U.S.A.">
        <title>Structural basis for concerted recruitment and activation of IRF-3 by innate immune adaptor proteins.</title>
        <authorList>
            <person name="Zhao B."/>
            <person name="Shu C."/>
            <person name="Gao X."/>
            <person name="Sankaran B."/>
            <person name="Du F."/>
            <person name="Shelton C.L."/>
            <person name="Herr A.B."/>
            <person name="Ji J.Y."/>
            <person name="Li P."/>
        </authorList>
    </citation>
    <scope>X-RAY CRYSTALLOGRAPHY (2.50 ANGSTROMS) OF 2065-2111 IN COMPLEX WITH IRF3</scope>
</reference>
<reference key="71">
    <citation type="journal article" date="2001" name="Hum. Mol. Genet.">
        <title>Defect of histone acetyltransferase activity of the nuclear transcriptional coactivator CBP in Rubinstein-Taybi syndrome.</title>
        <authorList>
            <person name="Murata T."/>
            <person name="Kurokawa R."/>
            <person name="Krones A."/>
            <person name="Tatsumi K."/>
            <person name="Ishii M."/>
            <person name="Taki T."/>
            <person name="Masuno M."/>
            <person name="Ohashi H."/>
            <person name="Yanagisawa M."/>
            <person name="Rosenfeld M.G."/>
            <person name="Glass C.K."/>
            <person name="Hayashi Y."/>
        </authorList>
    </citation>
    <scope>VARIANT RSTS1 PRO-1378</scope>
</reference>
<reference key="72">
    <citation type="journal article" date="2002" name="J. Med. Genet.">
        <title>Molecular studies in 10 cases of Rubinstein-Taybi syndrome, including a mild variant showing a missense mutation in codon 1175 of CREBBP.</title>
        <authorList>
            <person name="Bartsch O."/>
            <person name="Locher K."/>
            <person name="Meinecke P."/>
            <person name="Kress W."/>
            <person name="Seemanova E."/>
            <person name="Wagner A."/>
            <person name="Ostermann K."/>
            <person name="Roedel G."/>
        </authorList>
    </citation>
    <scope>VARIANT RSTS1 CYS-1175</scope>
</reference>
<reference key="73">
    <citation type="journal article" date="2003" name="Hum. Mol. Genet.">
        <title>Loss of CBP acetyltransferase activity by PHD finger mutations in Rubinstein-Taybi syndrome.</title>
        <authorList>
            <person name="Kalkhoven E."/>
            <person name="Roelfsema J.H."/>
            <person name="Teunissen H."/>
            <person name="den Boer A."/>
            <person name="Ariyuerek Y."/>
            <person name="Zantema A."/>
            <person name="Breuning M.H."/>
            <person name="Hennekam R.C.M."/>
            <person name="Peters D.J.M."/>
        </authorList>
    </citation>
    <scope>VARIANTS RSTS1 LYS-1278 AND HIS-1664</scope>
    <scope>CHARACTERIZATION OF VARIANTS RSTS1 LYS-1278 AND HIS-1664</scope>
</reference>
<reference key="74">
    <citation type="journal article" date="2005" name="Am. J. Hum. Genet.">
        <title>Genetic heterogeneity in Rubinstein-Taybi syndrome: mutations in both the CBP and EP300 genes cause disease.</title>
        <authorList>
            <person name="Roelfsema J.H."/>
            <person name="White S.J."/>
            <person name="Ariyuerek Y."/>
            <person name="Bartholdi D."/>
            <person name="Niedrist D."/>
            <person name="Papadia F."/>
            <person name="Bacino C.A."/>
            <person name="den Dunnen J.T."/>
            <person name="van Ommen G.-J.B."/>
            <person name="Breuning M.H."/>
            <person name="Hennekam R.C."/>
            <person name="Peters D.J.M."/>
        </authorList>
    </citation>
    <scope>VARIANTS RSTS1 LYS-1278; ILE-1447; HIS-1450; ARG-1470 AND HIS-1664</scope>
</reference>
<reference key="75">
    <citation type="journal article" date="2010" name="Am. J. Med. Genet. A">
        <title>Inheritance and variable expression in Rubinstein-Taybi syndrome.</title>
        <authorList>
            <person name="Bartsch O."/>
            <person name="Kress W."/>
            <person name="Kempf O."/>
            <person name="Lechno S."/>
            <person name="Haaf T."/>
            <person name="Zechner U."/>
        </authorList>
    </citation>
    <scope>VARIANT RSTS1 ALA-910</scope>
</reference>
<reference key="76">
    <citation type="journal article" date="2015" name="Clin. Genet.">
        <title>Insights into genotype-phenotype correlations from CREBBP point mutation screening in a cohort of 46 Rubinstein-Taybi syndrome patients.</title>
        <authorList>
            <person name="Spena S."/>
            <person name="Milani D."/>
            <person name="Rusconi D."/>
            <person name="Negri G."/>
            <person name="Colapietro P."/>
            <person name="Elcioglu N."/>
            <person name="Bedeschi F."/>
            <person name="Pilotta A."/>
            <person name="Spaccini L."/>
            <person name="Ficcadenti A."/>
            <person name="Magnani C."/>
            <person name="Scarano G."/>
            <person name="Selicorni A."/>
            <person name="Larizza L."/>
            <person name="Gervasini C."/>
        </authorList>
    </citation>
    <scope>VARIANTS HIS-503; THR-532 AND ASN-546</scope>
    <scope>VARIANTS RSTS1 PHE-650; THR-789; CYS-1175; ALA-1278; PRO-1378; TYR-1406; PRO-1415; THR-1475; PHE-1503; PRO-1507 AND ASN-1543</scope>
</reference>
<reference key="77">
    <citation type="journal article" date="2016" name="Am. J. Med. Genet. A">
        <title>CREBBP mutations in individuals without Rubinstein-Taybi syndrome phenotype.</title>
        <authorList>
            <consortium name="DDD Study"/>
            <person name="Menke L.A."/>
            <person name="van Belzen M.J."/>
            <person name="Alders M."/>
            <person name="Cristofoli F."/>
            <person name="Ehmke N."/>
            <person name="Fergelot P."/>
            <person name="Foster A."/>
            <person name="Gerkes E.H."/>
            <person name="Hoffer M.J."/>
            <person name="Horn D."/>
            <person name="Kant S.G."/>
            <person name="Lacombe D."/>
            <person name="Leon E."/>
            <person name="Maas S.M."/>
            <person name="Melis D."/>
            <person name="Muto V."/>
            <person name="Park S.M."/>
            <person name="Peeters H."/>
            <person name="Peters D.J."/>
            <person name="Pfundt R."/>
            <person name="van Ravenswaaij-Arts C.M."/>
            <person name="Tartaglia M."/>
            <person name="Hennekam R.C."/>
        </authorList>
    </citation>
    <scope>VARIANTS MKHK1 ARG-1710; ARG-1747; PRO-1786; PHE-1819; TRP-1826; TYR-1838; GLN-1867; TRP-1867; TRP-1868 AND VAL-1872</scope>
    <scope>INVOLVEMENT IN MKHK1</scope>
</reference>
<reference key="78">
    <citation type="journal article" date="2018" name="Am. J. Med. Genet. A">
        <title>Further delineation of an entity caused by CREBBP and EP300 mutations but not resembling Rubinstein-Taybi syndrome.</title>
        <authorList>
            <consortium name="DDD study"/>
            <person name="Menke L.A."/>
            <person name="Gardeitchik T."/>
            <person name="Hammond P."/>
            <person name="Heimdal K.R."/>
            <person name="Houge G."/>
            <person name="Hufnagel S.B."/>
            <person name="Ji J."/>
            <person name="Johansson S."/>
            <person name="Kant S.G."/>
            <person name="Kinning E."/>
            <person name="Leon E.L."/>
            <person name="Newbury-Ecob R."/>
            <person name="Paolacci S."/>
            <person name="Pfundt R."/>
            <person name="Ragge N.K."/>
            <person name="Rinne T."/>
            <person name="Ruivenkamp C."/>
            <person name="Saitta S.C."/>
            <person name="Sun Y."/>
            <person name="Tartaglia M."/>
            <person name="Terhal P.A."/>
            <person name="van Essen A.J."/>
            <person name="Vigeland M.D."/>
            <person name="Xiao B."/>
            <person name="Hennekam R.C."/>
        </authorList>
    </citation>
    <scope>VARIANTS MKHK1 ASP-1719; VAL-1782; ASP-1829; 1865-MET-ARG-1866 DELINS ILE; GLN-1867; GLN-1868; TRP-1868; PRO-1870 AND VAL-1872</scope>
    <scope>INVOLVEMENT IN MKHK1</scope>
</reference>
<reference key="79">
    <citation type="journal article" date="2019" name="Am. J. Med. Genet. A">
        <title>Confirmation of a new phenotype in an individual with a variant in the last part of exon 30 of CREBBP.</title>
        <authorList>
            <person name="Angius A."/>
            <person name="Uva P."/>
            <person name="Oppo M."/>
            <person name="Persico I."/>
            <person name="Onano S."/>
            <person name="Olla S."/>
            <person name="Pes V."/>
            <person name="Perria C."/>
            <person name="Cuccuru G."/>
            <person name="Atzeni R."/>
            <person name="Serra G."/>
            <person name="Cucca F."/>
            <person name="Sotgiu S."/>
            <person name="Hennekam R.C."/>
            <person name="Crisponi L."/>
        </authorList>
    </citation>
    <scope>VARIANT MKHK1 LYS-1724</scope>
</reference>
<reference key="80">
    <citation type="journal article" date="2004" name="Mol. Cell">
        <title>Acetylation of the C terminus of Ku70 by CBP and PCAF controls Bax-mediated apoptosis.</title>
        <authorList>
            <person name="Cohen H.Y."/>
            <person name="Lavu S."/>
            <person name="Bitterman K.J."/>
            <person name="Hekking B."/>
            <person name="Imahiyerobo T.A."/>
            <person name="Miller C."/>
            <person name="Frye R."/>
            <person name="Ploegh H."/>
            <person name="Kessler B.M."/>
            <person name="Sinclair D.A."/>
        </authorList>
    </citation>
    <scope>SUBCELLULAR LOCATION</scope>
</reference>
<proteinExistence type="evidence at protein level"/>